<accession>P43246</accession>
<accession>B4E2Z2</accession>
<accession>O75488</accession>
<comment type="function">
    <text evidence="4 11 41 55 64 69 89 94 95">Component of the post-replicative DNA mismatch repair system (MMR). Forms two different heterodimers: MutS alpha (MSH2-MSH6 heterodimer) and MutS beta (MSH2-MSH3 heterodimer) which binds to DNA mismatches thereby initiating DNA repair. When bound, heterodimers bend the DNA helix and shields approximately 20 base pairs. MutS alpha recognizes single base mismatches and dinucleotide insertion-deletion loops (IDL) in the DNA. MutS beta recognizes larger insertion-deletion loops up to 13 nucleotides long. After mismatch binding, MutS alpha or beta forms a ternary complex with the MutL alpha heterodimer, which is thought to be responsible for directing the downstream MMR events, including strand discrimination, excision, and resynthesis. Recruits DNA helicase MCM9 to chromatin which unwinds the mismatch containing DNA strand (PubMed:26300262). ATP binding and hydrolysis play a pivotal role in mismatch repair functions. The ATPase activity associated with MutS alpha regulates binding similar to a molecular switch: mismatched DNA provokes ADP--&gt;ATP exchange, resulting in a discernible conformational transition that converts MutS alpha into a sliding clamp capable of hydrolysis-independent diffusion along the DNA backbone. This transition is crucial for mismatch repair. MutS alpha may also play a role in DNA homologous recombination repair. In melanocytes may modulate both UV-B-induced cell cycle regulation and apoptosis.</text>
</comment>
<comment type="subunit">
    <text evidence="14 16 17 18 30 38 39 59 63 69 80 93">Component of the DNA mismatch repair (MMR) complex composed at least of MSH2, MSH3, MSH6, PMS1 and MLH1 (PubMed:26300262). Heterodimer consisting of MSH2-MSH6 (MutS alpha) or MSH2-MSH3 (MutS beta) (PubMed:8942985). Both heterodimers form a ternary complex with MutL alpha (MLH1-PMS1) (PubMed:10856833, PubMed:11427529, PubMed:11429708, PubMed:12414623, PubMed:14676842, PubMed:9788596). Interacts with MCM9; the interaction recruits MCM9 to chromatin (PubMed:26300262). Interacts with MCM8 (PubMed:26300262). Interacts with EXO1 (PubMed:10856833, PubMed:11427529, PubMed:11429708, PubMed:12414623, PubMed:14676842, PubMed:9788596). Part of the BRCA1-associated genome surveillance complex (BASC), which contains BRCA1, MSH2, MSH6, MLH1, ATM, BLM, PMS2 and the RAD50-MRE11-NBS1 protein complex (PubMed:10783165). This association could be a dynamic process changing throughout the cell cycle and within subnuclear domains (PubMed:10783165). Interacts with ATR (PubMed:14657349). Interacts with SLX4/BTBD12; this interaction is direct and links MutS beta to SLX4, a subunit of different structure-specific endonucleases (PubMed:19596235). Interacts with SMARCAD1 (PubMed:18675275).</text>
</comment>
<comment type="interaction">
    <interactant intactId="EBI-355888">
        <id>P43246</id>
    </interactant>
    <interactant intactId="EBI-743771">
        <id>Q92624</id>
        <label>APPBP2</label>
    </interactant>
    <organismsDiffer>false</organismsDiffer>
    <experiments>3</experiments>
</comment>
<comment type="interaction">
    <interactant intactId="EBI-355888">
        <id>P43246</id>
    </interactant>
    <interactant intactId="EBI-944694">
        <id>Q9UQ84-1</id>
        <label>EXO1</label>
    </interactant>
    <organismsDiffer>false</organismsDiffer>
    <experiments>3</experiments>
</comment>
<comment type="interaction">
    <interactant intactId="EBI-355888">
        <id>P43246</id>
    </interactant>
    <interactant intactId="EBI-389432">
        <id>P09429</id>
        <label>HMGB1</label>
    </interactant>
    <organismsDiffer>false</organismsDiffer>
    <experiments>2</experiments>
</comment>
<comment type="interaction">
    <interactant intactId="EBI-355888">
        <id>P43246</id>
    </interactant>
    <interactant intactId="EBI-1164205">
        <id>P20585</id>
        <label>MSH3</label>
    </interactant>
    <organismsDiffer>false</organismsDiffer>
    <experiments>14</experiments>
</comment>
<comment type="interaction">
    <interactant intactId="EBI-355888">
        <id>P43246</id>
    </interactant>
    <interactant intactId="EBI-395529">
        <id>P52701</id>
        <label>MSH6</label>
    </interactant>
    <organismsDiffer>false</organismsDiffer>
    <experiments>11</experiments>
</comment>
<comment type="interaction">
    <interactant intactId="EBI-355888">
        <id>P43246</id>
    </interactant>
    <interactant intactId="EBI-2370740">
        <id>Q8IY92</id>
        <label>SLX4</label>
    </interactant>
    <organismsDiffer>false</organismsDiffer>
    <experiments>5</experiments>
</comment>
<comment type="interaction">
    <interactant intactId="EBI-355888">
        <id>P43246</id>
    </interactant>
    <interactant intactId="EBI-6738">
        <id>P39875</id>
        <label>EXO1</label>
    </interactant>
    <organismsDiffer>true</organismsDiffer>
    <experiments>2</experiments>
</comment>
<comment type="subcellular location">
    <subcellularLocation>
        <location evidence="68 69">Nucleus</location>
    </subcellularLocation>
    <subcellularLocation>
        <location evidence="69">Chromosome</location>
    </subcellularLocation>
</comment>
<comment type="alternative products">
    <event type="alternative splicing"/>
    <isoform>
        <id>P43246-1</id>
        <name>1</name>
        <sequence type="displayed"/>
    </isoform>
    <isoform>
        <id>P43246-2</id>
        <name>2</name>
        <sequence type="described" ref="VSP_045536"/>
    </isoform>
</comment>
<comment type="tissue specificity">
    <text evidence="16">Ubiquitously expressed.</text>
</comment>
<comment type="PTM">
    <text evidence="46">Phosphorylated by PRKCZ, which may prevent MutS alpha degradation by the ubiquitin-proteasome pathway.</text>
</comment>
<comment type="PTM">
    <text evidence="68">Sequentially deacetylated and polyubiquitinated by HDAC6, leading to MSH2 degradation.</text>
</comment>
<comment type="disease" evidence="5 6 8 9 10 13 15 20 22 23 24 25 26 27 28 29 32 33 34 37 40 42 43 44 45 47 48 49 50 52 53 54 57 58 60 61 62 64 65 66 73 74 77 78 79 82 84 85 86 87 88 90 91 96">
    <disease id="DI-00550">
        <name>Lynch syndrome 1</name>
        <acronym>LYNCH1</acronym>
        <description>A form of Lynch syndrome, an autosomal dominant disease associated with marked increase in cancer susceptibility. It is characterized by a familial predisposition to early-onset colorectal carcinoma (CRC) and extra-colonic tumors of the gastrointestinal, urological and female reproductive tracts. Lynch syndrome is reported to be the most common form of inherited colorectal cancer in the Western world. Clinically, it is often divided into two subgroups. Type I is characterized by hereditary predisposition to colorectal cancer, a young age of onset, and carcinoma observed in the proximal colon. Type II is characterized by increased risk for cancers in certain tissues such as the uterus, ovary, breast, stomach, small intestine, skin, and larynx in addition to the colon. Diagnosis of classical Lynch syndrome is based on the Amsterdam criteria: 3 or more relatives affected by colorectal cancer, one a first degree relative of the other two; 2 or more generation affected; 1 or more colorectal cancers presenting before 50 years of age; exclusion of hereditary polyposis syndromes. The term 'suspected Lynch syndrome' or 'incomplete Lynch syndrome' can be used to describe families who do not or only partially fulfill the Amsterdam criteria, but in whom a genetic basis for colon cancer is strongly suspected.</description>
        <dbReference type="MIM" id="120435"/>
    </disease>
    <text>The disease is caused by variants affecting the gene represented in this entry.</text>
</comment>
<comment type="disease" evidence="71">
    <disease id="DI-02000">
        <name>Muir-Torre syndrome</name>
        <acronym>MRTES</acronym>
        <description>Rare autosomal dominant disorder characterized by sebaceous neoplasms and visceral malignancy.</description>
        <dbReference type="MIM" id="158320"/>
    </disease>
    <text>The disease is caused by variants affecting the gene represented in this entry.</text>
</comment>
<comment type="disease" evidence="101 102">
    <disease id="DI-01526">
        <name>Endometrial cancer</name>
        <acronym>ENDMC</acronym>
        <description>A malignancy of endometrium, the mucous lining of the uterus. Most endometrial cancers are adenocarcinomas, cancers that begin in cells that make and release mucus and other fluids.</description>
        <dbReference type="MIM" id="608089"/>
    </disease>
    <text>Disease susceptibility is associated with variants affecting the gene represented in this entry.</text>
</comment>
<comment type="disease" evidence="31 51">
    <disease id="DI-05969">
        <name>Mismatch repair cancer syndrome 2</name>
        <acronym>MMRCS2</acronym>
        <description>An autosomal recessive form of mismatch repair cancer syndrome, a childhood cancer predisposition syndrome encompassing a broad tumor spectrum. This includes hematological malignancies, central nervous system tumors, Lynch syndrome-associated malignancies such as colorectal tumors as well as multiple intestinal polyps, embryonic tumors and rhabdomyosarcoma. Multiple cafe-au-lait macules, a feature reminiscent of neurofibromatosis type 1, are often found as first manifestation of the underlying cancer.</description>
        <dbReference type="MIM" id="619096"/>
    </disease>
    <text>The disease is caused by variants affecting the gene represented in this entry.</text>
</comment>
<comment type="disease" evidence="35 36 50 88">
    <disease id="DI-01359">
        <name>Colorectal cancer</name>
        <acronym>CRC</acronym>
        <description>A complex disease characterized by malignant lesions arising from the inner wall of the large intestine (the colon) and the rectum. Genetic alterations are often associated with progression from premalignant lesion (adenoma) to invasive adenocarcinoma. Risk factors for cancer of the colon and rectum include colon polyps, long-standing ulcerative colitis, and genetic family history.</description>
        <dbReference type="MIM" id="114500"/>
    </disease>
    <text>Disease susceptibility may be associated with variants affecting the gene represented in this entry.</text>
</comment>
<comment type="similarity">
    <text evidence="100">Belongs to the DNA mismatch repair MutS family.</text>
</comment>
<comment type="sequence caution" evidence="100">
    <conflict type="frameshift">
        <sequence resource="EMBL-CDS" id="AAC27930"/>
    </conflict>
    <text>The frameshift is caused by a single nucleotide deletion which is found in a HNPCC kindred.</text>
</comment>
<comment type="online information" name="Atlas of Genetics and Cytogenetics in Oncology and Haematology">
    <link uri="https://atlasgeneticsoncology.org/gene/340/MSH2"/>
</comment>
<reference key="1">
    <citation type="journal article" date="1993" name="Cell">
        <title>The human mutator gene homolog MSH2 and its association with hereditary nonpolyposis colon cancer.</title>
        <authorList>
            <person name="Fishel R."/>
            <person name="Lescoe M."/>
            <person name="Rao M."/>
            <person name="Copeland N.G."/>
            <person name="Jenkins N.A."/>
            <person name="Garber J."/>
            <person name="Kane M.F."/>
            <person name="Kolodner R.D."/>
        </authorList>
    </citation>
    <scope>NUCLEOTIDE SEQUENCE [MRNA] (ISOFORM 1)</scope>
</reference>
<reference key="2">
    <citation type="journal article" date="1994" name="Cell">
        <authorList>
            <person name="Fishel R."/>
            <person name="Lescoe M."/>
            <person name="Rao M."/>
            <person name="Copeland N.G."/>
            <person name="Jenkins N.A."/>
            <person name="Garber J."/>
            <person name="Kane M.F."/>
            <person name="Kolodner R.D."/>
        </authorList>
    </citation>
    <scope>ERRATUM OF PUBMED:8252616</scope>
</reference>
<reference key="3">
    <citation type="journal article" date="1993" name="Cell">
        <title>Mutations of a mutS homolog in hereditary nonpolyposis colorectal cancer.</title>
        <authorList>
            <person name="Leach F.S."/>
            <person name="Nicolaides N.C."/>
            <person name="Papadopoulos N."/>
            <person name="Liu B."/>
            <person name="Jen J."/>
            <person name="Parsons R."/>
            <person name="Peltomaeki P."/>
            <person name="Sistonen P."/>
            <person name="Aaltonen L.A."/>
            <person name="Nystroem-Lahti M."/>
            <person name="Guan X.-Y."/>
            <person name="Zhang J."/>
            <person name="Meltzer P.S."/>
            <person name="Yu J.-W."/>
            <person name="Kao F.-T."/>
            <person name="Chen D.J."/>
            <person name="Cerosaletti K.M."/>
            <person name="Fournier R.E.K."/>
            <person name="Todd S."/>
            <person name="Lewis T."/>
            <person name="Leach R.J."/>
            <person name="Naylor S.L."/>
            <person name="Weissenbach J."/>
            <person name="Mecklin J.-P."/>
            <person name="Jaervinen H."/>
            <person name="Petersen G.M."/>
            <person name="Hamilton S.R."/>
            <person name="Green J."/>
            <person name="Jass J."/>
            <person name="Watson P."/>
            <person name="Lynch H.T."/>
            <person name="Trent J.M."/>
            <person name="de la Chapelle A."/>
            <person name="Kinzler K.W."/>
            <person name="Vogelstein B."/>
        </authorList>
    </citation>
    <scope>NUCLEOTIDE SEQUENCE [MRNA] (ISOFORM 1)</scope>
    <scope>VARIANTS LYNCH1 LEU-622 AND TYR-639</scope>
</reference>
<reference key="4">
    <citation type="journal article" date="1994" name="Genomics">
        <title>Structure of the human MSH2 locus and analysis of two Muir-Torre kindreds for msh2 mutations.</title>
        <authorList>
            <person name="Kolodner R.D."/>
            <person name="Hall N.R."/>
            <person name="Lipford J."/>
            <person name="Kane M.F."/>
            <person name="Rao M.R.S."/>
            <person name="Morrison P."/>
            <person name="Wirth L."/>
            <person name="Finan P.J."/>
            <person name="Burn J."/>
            <person name="Chapman P."/>
            <person name="Earabino C."/>
            <person name="Merchant E."/>
            <person name="Bishop D.T."/>
        </authorList>
    </citation>
    <scope>NUCLEOTIDE SEQUENCE [GENOMIC DNA]</scope>
    <scope>INVOLVEMENT IN MRTES</scope>
</reference>
<reference key="5">
    <citation type="journal article" date="1995" name="Am. J. Hum. Genet.">
        <title>Seven new mutations in hMSH2, an HNPCC gene, identified by denaturing gradient-gel electrophoresis.</title>
        <authorList>
            <person name="Wijnen J."/>
            <person name="Vasen H."/>
            <person name="Khan P.M."/>
            <person name="Menko F.H."/>
            <person name="van der Klift H."/>
            <person name="van Leeuwen C."/>
            <person name="van den Broek M."/>
            <person name="van Leeuwen-Cornelisse I."/>
            <person name="Nagengast F."/>
            <person name="Meijers-Heijboer A."/>
            <person name="Lindhout D."/>
            <person name="Griffioen G."/>
            <person name="Cats A."/>
            <person name="Kleibeuker J."/>
            <person name="Varesco L."/>
            <person name="Bertario L."/>
            <person name="Bisgaard M.-L."/>
            <person name="Mohr J."/>
            <person name="Fodde R."/>
        </authorList>
    </citation>
    <scope>NUCLEOTIDE SEQUENCE [MRNA] (ISOFORM 1)</scope>
    <scope>VARIANT HIS-96</scope>
</reference>
<reference key="6">
    <citation type="journal article" date="2004" name="Nat. Genet.">
        <title>Complete sequencing and characterization of 21,243 full-length human cDNAs.</title>
        <authorList>
            <person name="Ota T."/>
            <person name="Suzuki Y."/>
            <person name="Nishikawa T."/>
            <person name="Otsuki T."/>
            <person name="Sugiyama T."/>
            <person name="Irie R."/>
            <person name="Wakamatsu A."/>
            <person name="Hayashi K."/>
            <person name="Sato H."/>
            <person name="Nagai K."/>
            <person name="Kimura K."/>
            <person name="Makita H."/>
            <person name="Sekine M."/>
            <person name="Obayashi M."/>
            <person name="Nishi T."/>
            <person name="Shibahara T."/>
            <person name="Tanaka T."/>
            <person name="Ishii S."/>
            <person name="Yamamoto J."/>
            <person name="Saito K."/>
            <person name="Kawai Y."/>
            <person name="Isono Y."/>
            <person name="Nakamura Y."/>
            <person name="Nagahari K."/>
            <person name="Murakami K."/>
            <person name="Yasuda T."/>
            <person name="Iwayanagi T."/>
            <person name="Wagatsuma M."/>
            <person name="Shiratori A."/>
            <person name="Sudo H."/>
            <person name="Hosoiri T."/>
            <person name="Kaku Y."/>
            <person name="Kodaira H."/>
            <person name="Kondo H."/>
            <person name="Sugawara M."/>
            <person name="Takahashi M."/>
            <person name="Kanda K."/>
            <person name="Yokoi T."/>
            <person name="Furuya T."/>
            <person name="Kikkawa E."/>
            <person name="Omura Y."/>
            <person name="Abe K."/>
            <person name="Kamihara K."/>
            <person name="Katsuta N."/>
            <person name="Sato K."/>
            <person name="Tanikawa M."/>
            <person name="Yamazaki M."/>
            <person name="Ninomiya K."/>
            <person name="Ishibashi T."/>
            <person name="Yamashita H."/>
            <person name="Murakawa K."/>
            <person name="Fujimori K."/>
            <person name="Tanai H."/>
            <person name="Kimata M."/>
            <person name="Watanabe M."/>
            <person name="Hiraoka S."/>
            <person name="Chiba Y."/>
            <person name="Ishida S."/>
            <person name="Ono Y."/>
            <person name="Takiguchi S."/>
            <person name="Watanabe S."/>
            <person name="Yosida M."/>
            <person name="Hotuta T."/>
            <person name="Kusano J."/>
            <person name="Kanehori K."/>
            <person name="Takahashi-Fujii A."/>
            <person name="Hara H."/>
            <person name="Tanase T.-O."/>
            <person name="Nomura Y."/>
            <person name="Togiya S."/>
            <person name="Komai F."/>
            <person name="Hara R."/>
            <person name="Takeuchi K."/>
            <person name="Arita M."/>
            <person name="Imose N."/>
            <person name="Musashino K."/>
            <person name="Yuuki H."/>
            <person name="Oshima A."/>
            <person name="Sasaki N."/>
            <person name="Aotsuka S."/>
            <person name="Yoshikawa Y."/>
            <person name="Matsunawa H."/>
            <person name="Ichihara T."/>
            <person name="Shiohata N."/>
            <person name="Sano S."/>
            <person name="Moriya S."/>
            <person name="Momiyama H."/>
            <person name="Satoh N."/>
            <person name="Takami S."/>
            <person name="Terashima Y."/>
            <person name="Suzuki O."/>
            <person name="Nakagawa S."/>
            <person name="Senoh A."/>
            <person name="Mizoguchi H."/>
            <person name="Goto Y."/>
            <person name="Shimizu F."/>
            <person name="Wakebe H."/>
            <person name="Hishigaki H."/>
            <person name="Watanabe T."/>
            <person name="Sugiyama A."/>
            <person name="Takemoto M."/>
            <person name="Kawakami B."/>
            <person name="Yamazaki M."/>
            <person name="Watanabe K."/>
            <person name="Kumagai A."/>
            <person name="Itakura S."/>
            <person name="Fukuzumi Y."/>
            <person name="Fujimori Y."/>
            <person name="Komiyama M."/>
            <person name="Tashiro H."/>
            <person name="Tanigami A."/>
            <person name="Fujiwara T."/>
            <person name="Ono T."/>
            <person name="Yamada K."/>
            <person name="Fujii Y."/>
            <person name="Ozaki K."/>
            <person name="Hirao M."/>
            <person name="Ohmori Y."/>
            <person name="Kawabata A."/>
            <person name="Hikiji T."/>
            <person name="Kobatake N."/>
            <person name="Inagaki H."/>
            <person name="Ikema Y."/>
            <person name="Okamoto S."/>
            <person name="Okitani R."/>
            <person name="Kawakami T."/>
            <person name="Noguchi S."/>
            <person name="Itoh T."/>
            <person name="Shigeta K."/>
            <person name="Senba T."/>
            <person name="Matsumura K."/>
            <person name="Nakajima Y."/>
            <person name="Mizuno T."/>
            <person name="Morinaga M."/>
            <person name="Sasaki M."/>
            <person name="Togashi T."/>
            <person name="Oyama M."/>
            <person name="Hata H."/>
            <person name="Watanabe M."/>
            <person name="Komatsu T."/>
            <person name="Mizushima-Sugano J."/>
            <person name="Satoh T."/>
            <person name="Shirai Y."/>
            <person name="Takahashi Y."/>
            <person name="Nakagawa K."/>
            <person name="Okumura K."/>
            <person name="Nagase T."/>
            <person name="Nomura N."/>
            <person name="Kikuchi H."/>
            <person name="Masuho Y."/>
            <person name="Yamashita R."/>
            <person name="Nakai K."/>
            <person name="Yada T."/>
            <person name="Nakamura Y."/>
            <person name="Ohara O."/>
            <person name="Isogai T."/>
            <person name="Sugano S."/>
        </authorList>
    </citation>
    <scope>NUCLEOTIDE SEQUENCE [LARGE SCALE MRNA] (ISOFORM 2)</scope>
    <source>
        <tissue>Uterus</tissue>
    </source>
</reference>
<reference key="7">
    <citation type="journal article" date="2007" name="BMC Genomics">
        <title>The full-ORF clone resource of the German cDNA consortium.</title>
        <authorList>
            <person name="Bechtel S."/>
            <person name="Rosenfelder H."/>
            <person name="Duda A."/>
            <person name="Schmidt C.P."/>
            <person name="Ernst U."/>
            <person name="Wellenreuther R."/>
            <person name="Mehrle A."/>
            <person name="Schuster C."/>
            <person name="Bahr A."/>
            <person name="Bloecker H."/>
            <person name="Heubner D."/>
            <person name="Hoerlein A."/>
            <person name="Michel G."/>
            <person name="Wedler H."/>
            <person name="Koehrer K."/>
            <person name="Ottenwaelder B."/>
            <person name="Poustka A."/>
            <person name="Wiemann S."/>
            <person name="Schupp I."/>
        </authorList>
    </citation>
    <scope>NUCLEOTIDE SEQUENCE [LARGE SCALE MRNA] (ISOFORM 2)</scope>
    <source>
        <tissue>Testis</tissue>
    </source>
</reference>
<reference key="8">
    <citation type="journal article" date="2005" name="Nature">
        <title>Generation and annotation of the DNA sequences of human chromosomes 2 and 4.</title>
        <authorList>
            <person name="Hillier L.W."/>
            <person name="Graves T.A."/>
            <person name="Fulton R.S."/>
            <person name="Fulton L.A."/>
            <person name="Pepin K.H."/>
            <person name="Minx P."/>
            <person name="Wagner-McPherson C."/>
            <person name="Layman D."/>
            <person name="Wylie K."/>
            <person name="Sekhon M."/>
            <person name="Becker M.C."/>
            <person name="Fewell G.A."/>
            <person name="Delehaunty K.D."/>
            <person name="Miner T.L."/>
            <person name="Nash W.E."/>
            <person name="Kremitzki C."/>
            <person name="Oddy L."/>
            <person name="Du H."/>
            <person name="Sun H."/>
            <person name="Bradshaw-Cordum H."/>
            <person name="Ali J."/>
            <person name="Carter J."/>
            <person name="Cordes M."/>
            <person name="Harris A."/>
            <person name="Isak A."/>
            <person name="van Brunt A."/>
            <person name="Nguyen C."/>
            <person name="Du F."/>
            <person name="Courtney L."/>
            <person name="Kalicki J."/>
            <person name="Ozersky P."/>
            <person name="Abbott S."/>
            <person name="Armstrong J."/>
            <person name="Belter E.A."/>
            <person name="Caruso L."/>
            <person name="Cedroni M."/>
            <person name="Cotton M."/>
            <person name="Davidson T."/>
            <person name="Desai A."/>
            <person name="Elliott G."/>
            <person name="Erb T."/>
            <person name="Fronick C."/>
            <person name="Gaige T."/>
            <person name="Haakenson W."/>
            <person name="Haglund K."/>
            <person name="Holmes A."/>
            <person name="Harkins R."/>
            <person name="Kim K."/>
            <person name="Kruchowski S.S."/>
            <person name="Strong C.M."/>
            <person name="Grewal N."/>
            <person name="Goyea E."/>
            <person name="Hou S."/>
            <person name="Levy A."/>
            <person name="Martinka S."/>
            <person name="Mead K."/>
            <person name="McLellan M.D."/>
            <person name="Meyer R."/>
            <person name="Randall-Maher J."/>
            <person name="Tomlinson C."/>
            <person name="Dauphin-Kohlberg S."/>
            <person name="Kozlowicz-Reilly A."/>
            <person name="Shah N."/>
            <person name="Swearengen-Shahid S."/>
            <person name="Snider J."/>
            <person name="Strong J.T."/>
            <person name="Thompson J."/>
            <person name="Yoakum M."/>
            <person name="Leonard S."/>
            <person name="Pearman C."/>
            <person name="Trani L."/>
            <person name="Radionenko M."/>
            <person name="Waligorski J.E."/>
            <person name="Wang C."/>
            <person name="Rock S.M."/>
            <person name="Tin-Wollam A.-M."/>
            <person name="Maupin R."/>
            <person name="Latreille P."/>
            <person name="Wendl M.C."/>
            <person name="Yang S.-P."/>
            <person name="Pohl C."/>
            <person name="Wallis J.W."/>
            <person name="Spieth J."/>
            <person name="Bieri T.A."/>
            <person name="Berkowicz N."/>
            <person name="Nelson J.O."/>
            <person name="Osborne J."/>
            <person name="Ding L."/>
            <person name="Meyer R."/>
            <person name="Sabo A."/>
            <person name="Shotland Y."/>
            <person name="Sinha P."/>
            <person name="Wohldmann P.E."/>
            <person name="Cook L.L."/>
            <person name="Hickenbotham M.T."/>
            <person name="Eldred J."/>
            <person name="Williams D."/>
            <person name="Jones T.A."/>
            <person name="She X."/>
            <person name="Ciccarelli F.D."/>
            <person name="Izaurralde E."/>
            <person name="Taylor J."/>
            <person name="Schmutz J."/>
            <person name="Myers R.M."/>
            <person name="Cox D.R."/>
            <person name="Huang X."/>
            <person name="McPherson J.D."/>
            <person name="Mardis E.R."/>
            <person name="Clifton S.W."/>
            <person name="Warren W.C."/>
            <person name="Chinwalla A.T."/>
            <person name="Eddy S.R."/>
            <person name="Marra M.A."/>
            <person name="Ovcharenko I."/>
            <person name="Furey T.S."/>
            <person name="Miller W."/>
            <person name="Eichler E.E."/>
            <person name="Bork P."/>
            <person name="Suyama M."/>
            <person name="Torrents D."/>
            <person name="Waterston R.H."/>
            <person name="Wilson R.K."/>
        </authorList>
    </citation>
    <scope>NUCLEOTIDE SEQUENCE [LARGE SCALE GENOMIC DNA]</scope>
</reference>
<reference key="9">
    <citation type="submission" date="2004-04" db="EMBL/GenBank/DDBJ databases">
        <authorList>
            <consortium name="NIEHS SNPs program"/>
        </authorList>
    </citation>
    <scope>NUCLEOTIDE SEQUENCE [GENOMIC DNA]</scope>
    <scope>VARIANTS MET-8; CYS-43; SER-127; ASP-322 AND PHE-390</scope>
</reference>
<reference key="10">
    <citation type="journal article" date="2004" name="Genome Res.">
        <title>The status, quality, and expansion of the NIH full-length cDNA project: the Mammalian Gene Collection (MGC).</title>
        <authorList>
            <consortium name="The MGC Project Team"/>
        </authorList>
    </citation>
    <scope>NUCLEOTIDE SEQUENCE [LARGE SCALE MRNA] (ISOFORM 1)</scope>
    <source>
        <tissue>Muscle</tissue>
    </source>
</reference>
<reference key="11">
    <citation type="submission" date="1998-05" db="EMBL/GenBank/DDBJ databases">
        <title>A novel germline mutation at exon 7 of the hMSH2 gene (417 del G) in a large HNPCC Brazilian kindred.</title>
        <authorList>
            <person name="Corvello C.M."/>
            <person name="Bevilacqua R.A.U."/>
            <person name="Rossi B.M."/>
            <person name="Simpson A.J.G."/>
        </authorList>
    </citation>
    <scope>NUCLEOTIDE SEQUENCE [GENOMIC DNA] OF 375-425</scope>
    <source>
        <tissue>Blood</tissue>
    </source>
</reference>
<reference key="12">
    <citation type="journal article" date="1994" name="Cancer Res.">
        <title>Purified human MSH2 protein binds to DNA containing mismatched nucleotides.</title>
        <authorList>
            <person name="Fishel R."/>
            <person name="Ewel A."/>
            <person name="Lescoe M.K."/>
        </authorList>
    </citation>
    <scope>DNA-BINDING</scope>
</reference>
<reference key="13">
    <citation type="journal article" date="1996" name="Biochem. Biophys. Res. Commun.">
        <title>A carboxy terminal domain of the hMSH-2 gene product is sufficient for binding specific mismatched oligonucleotides.</title>
        <authorList>
            <person name="Whitehouse A."/>
            <person name="Taylor G.R."/>
            <person name="Deeble J."/>
            <person name="Phillips S.E."/>
            <person name="Meredith D.M."/>
            <person name="Markham A.F."/>
        </authorList>
    </citation>
    <scope>DNA-BINDING</scope>
</reference>
<reference key="14">
    <citation type="journal article" date="1996" name="Proc. Natl. Acad. Sci. U.S.A.">
        <title>hMSH2 forms specific mispair-binding complexes with hMSH3 and hMSH6.</title>
        <authorList>
            <person name="Acharya S."/>
            <person name="Wilson T."/>
            <person name="Gradia S."/>
            <person name="Kane M.F."/>
            <person name="Guerrette S."/>
            <person name="Marsischky G.T."/>
            <person name="Kolodner R.D."/>
            <person name="Fishel R."/>
        </authorList>
    </citation>
    <scope>INTERACTION WITH MSH3 AND MSH6</scope>
</reference>
<reference key="15">
    <citation type="journal article" date="1998" name="Cancer Res.">
        <title>Human exonuclease I interacts with the mismatch repair protein hMSH2.</title>
        <authorList>
            <person name="Schmutte C."/>
            <person name="Marinescu R.C."/>
            <person name="Sadoff M.M."/>
            <person name="Guerrette S."/>
            <person name="Overhauser J."/>
            <person name="Fishel R."/>
        </authorList>
    </citation>
    <scope>INTERACTION WITH EXO1</scope>
</reference>
<reference key="16">
    <citation type="journal article" date="1998" name="J. Biol. Chem.">
        <title>Nucleotide-promoted release of hMutSalpha from heteroduplex DNA is consistent with an ATP-dependent translocation mechanism.</title>
        <authorList>
            <person name="Blackwell L.J."/>
            <person name="Martik D."/>
            <person name="Bjornson K.P."/>
            <person name="Bjornson E.S."/>
            <person name="Modrich P."/>
        </authorList>
    </citation>
    <scope>FUNCTION</scope>
</reference>
<reference key="17">
    <citation type="journal article" date="1998" name="J. Biol. Chem.">
        <title>DNA-dependent activation of the hMutSalpha ATPase.</title>
        <authorList>
            <person name="Blackwell L.J."/>
            <person name="Bjornson K.P."/>
            <person name="Modrich P."/>
        </authorList>
    </citation>
    <scope>FUNCTION</scope>
</reference>
<reference key="18">
    <citation type="journal article" date="1998" name="EMBO J.">
        <title>hMSH2 and hMSH6 play distinct roles in mismatch binding and contribute differently to the ATPase activity of hMutSalpha.</title>
        <authorList>
            <person name="Iaccarino I."/>
            <person name="Marra G."/>
            <person name="Palombo F."/>
            <person name="Jiricny J."/>
        </authorList>
    </citation>
    <scope>FUNCTION</scope>
    <scope>MUTAGENESIS OF LYS-675</scope>
</reference>
<reference key="19">
    <citation type="journal article" date="1999" name="Nucleic Acids Res.">
        <title>Functional analysis of human MutSalpha and MutSbeta complexes in yeast.</title>
        <authorList>
            <person name="Clark A.B."/>
            <person name="Cook M.E."/>
            <person name="Tran H.T."/>
            <person name="Gordenin D.A."/>
            <person name="Resnick M.A."/>
            <person name="Kunkel T.A."/>
        </authorList>
    </citation>
    <scope>MISMATCH-BINDING</scope>
    <scope>CHARACTERIZATION OF VARIANT LYNCH1 PRO-524</scope>
</reference>
<reference key="20">
    <citation type="journal article" date="1999" name="Mol. Cell">
        <title>hMSH2-hMSH6 forms a hydrolysis-independent sliding clamp on mismatched DNA.</title>
        <authorList>
            <person name="Gradia S."/>
            <person name="Subramanian D."/>
            <person name="Wilson T."/>
            <person name="Acharya S."/>
            <person name="Makhov A."/>
            <person name="Griffith J."/>
            <person name="Fishel R."/>
        </authorList>
    </citation>
    <scope>FUNCTION</scope>
</reference>
<reference key="21">
    <citation type="journal article" date="2000" name="Genes Dev.">
        <title>BASC, a super complex of BRCA1-associated proteins involved in the recognition and repair of aberrant DNA structures.</title>
        <authorList>
            <person name="Wang Y."/>
            <person name="Cortez D."/>
            <person name="Yazdi P."/>
            <person name="Neff N."/>
            <person name="Elledge S.J."/>
            <person name="Qin J."/>
        </authorList>
    </citation>
    <scope>IDENTIFICATION OF MSH2 AS MEMBER OF BASC</scope>
</reference>
<reference key="22">
    <citation type="journal article" date="2000" name="Mutat. Res.">
        <title>Identification of factors interacting with hMSH2 in the fetal liver utilizing the yeast two-hybrid system. In vivo interaction through the C-terminal domains of hEXO1 and hMSH2 and comparative expression analysis.</title>
        <authorList>
            <person name="Rasmussen L.J."/>
            <person name="Rasmussen M."/>
            <person name="Lee B.-I."/>
            <person name="Rasmussen A.K."/>
            <person name="Wilson D.M. III"/>
            <person name="Nielsen F.C."/>
            <person name="Bisgaard H.C."/>
        </authorList>
    </citation>
    <scope>INTERACTION WITH EXO1</scope>
    <scope>TISSUE SPECIFICITY</scope>
</reference>
<reference key="23">
    <citation type="journal article" date="2000" name="J. Biol. Chem.">
        <title>The role of mismatched nucleotides in activating the hMSH2-hMSH6 molecular switch.</title>
        <authorList>
            <person name="Gradia S."/>
            <person name="Acharya S."/>
            <person name="Fishel R."/>
        </authorList>
    </citation>
    <scope>FUNCTION</scope>
</reference>
<reference key="24">
    <citation type="journal article" date="2001" name="Cancer Res.">
        <title>Lack of MSH2 and MSH6 characterizes endometrial but not colon carcinomas in hereditary nonpolyposis colorectal cancer.</title>
        <authorList>
            <person name="Schweizer P."/>
            <person name="Moisio A.L."/>
            <person name="Kuismanen S.A."/>
            <person name="Truninger K."/>
            <person name="Vierumaeki R."/>
            <person name="Salovaara R."/>
            <person name="Arola J."/>
            <person name="Butzow R."/>
            <person name="Jiricny J."/>
            <person name="Peltomaeki P."/>
            <person name="Nystroem-Lahti M."/>
        </authorList>
    </citation>
    <scope>POSSIBLE INVOLVEMENT IN ENDMC</scope>
</reference>
<reference key="25">
    <citation type="journal article" date="2001" name="J. Biol. Chem.">
        <title>The interaction of DNA mismatch repair proteins with human exonuclease I.</title>
        <authorList>
            <person name="Schmutte C."/>
            <person name="Sadoff M.M."/>
            <person name="Shim K.-S."/>
            <person name="Acharya S."/>
            <person name="Fishel R."/>
        </authorList>
    </citation>
    <scope>INTERACTION WITH EXO1</scope>
</reference>
<reference key="26">
    <citation type="journal article" date="2001" name="Oncogene">
        <title>HNPCC mutations in the human DNA mismatch repair gene hMLH1 influence assembly of hMutLalpha and hMLH1-hEXO1 complexes.</title>
        <authorList>
            <person name="Jaeger A.C."/>
            <person name="Rasmussen M."/>
            <person name="Bisgaard H.C."/>
            <person name="Singh K.K."/>
            <person name="Nielsen F.C."/>
            <person name="Rasmussen L.J."/>
        </authorList>
    </citation>
    <scope>INTERACTION WITH EXO1</scope>
</reference>
<reference key="27">
    <citation type="journal article" date="2002" name="Cancer Res.">
        <title>Functional alterations of human exonuclease 1 mutants identified in atypical hereditary nonpolyposis colorectal cancer syndrome.</title>
        <authorList>
            <person name="Sun X."/>
            <person name="Zheng L."/>
            <person name="Shen B."/>
        </authorList>
    </citation>
    <scope>INTERACTION WITH EXO1</scope>
</reference>
<reference key="28">
    <citation type="journal article" date="2003" name="Am. J. Hum. Genet.">
        <title>Early onset brain tumor and lymphoma in MSH2-deficient children.</title>
        <authorList>
            <person name="Bougeard G."/>
            <person name="Charbonnier F."/>
            <person name="Moerman A."/>
            <person name="Martin C."/>
            <person name="Ruchoux M.M."/>
            <person name="Drouot N."/>
            <person name="Frebourg T."/>
        </authorList>
    </citation>
    <scope>INVOLVEMENT IN MMRCS2</scope>
</reference>
<reference key="29">
    <citation type="journal article" date="2003" name="Proc. Natl. Acad. Sci. U.S.A.">
        <title>MSH2 and ATR form a signaling module and regulate two branches of the damage response to DNA methylation.</title>
        <authorList>
            <person name="Wang Y."/>
            <person name="Qin J."/>
        </authorList>
    </citation>
    <scope>INTERACTION WITH ATR</scope>
    <scope>IDENTIFICATION BY MASS SPECTROMETRY</scope>
</reference>
<reference key="30">
    <citation type="journal article" date="2004" name="Oncogene">
        <title>Characterization of human exonuclease 1 in complex with mismatch repair proteins, subcellular localization and association with PCNA.</title>
        <authorList>
            <person name="Nielsen F.C."/>
            <person name="Jaeger A.C."/>
            <person name="Luetzen A."/>
            <person name="Bundgaard J.R."/>
            <person name="Rasmussen L.J."/>
        </authorList>
    </citation>
    <scope>INTERACTION WITH EXO1</scope>
</reference>
<reference key="31">
    <citation type="journal article" date="2004" name="Oncogene">
        <title>The mismatch DNA repair heterodimer, hMSH2/6, regulates BLM helicase.</title>
        <authorList>
            <person name="Yang Q."/>
            <person name="Zhang R."/>
            <person name="Wang X.W."/>
            <person name="Linke S.P."/>
            <person name="Sengupta S."/>
            <person name="Hickson I.D."/>
            <person name="Pedrazzi G."/>
            <person name="Perrera C."/>
            <person name="Stagljar I."/>
            <person name="Littman S.J."/>
            <person name="Modrich P."/>
            <person name="Harris C.C."/>
        </authorList>
    </citation>
    <scope>FUNCTION</scope>
</reference>
<reference key="32">
    <citation type="journal article" date="2005" name="J. Mol. Biol.">
        <title>hMutS alpha is protected from ubiquitin-proteasome-dependent degradation by atypical protein kinase C zeta phosphorylation.</title>
        <authorList>
            <person name="Hernandez-Pigeon H."/>
            <person name="Quillet-Mary A."/>
            <person name="Louat T."/>
            <person name="Schambourg A."/>
            <person name="Humbert O."/>
            <person name="Selves J."/>
            <person name="Salles B."/>
            <person name="Laurent G."/>
            <person name="Lautier D."/>
        </authorList>
    </citation>
    <scope>PHOSPHORYLATION BY PRKCZ</scope>
</reference>
<reference key="33">
    <citation type="journal article" date="2006" name="Am. J. Med. Genet. A">
        <title>A novel MSH2 germline mutation in homozygous state in two brothers with colorectal cancers diagnosed at the age of 11 and 12 years.</title>
        <authorList>
            <person name="Mueller A."/>
            <person name="Schackert H.K."/>
            <person name="Lange B."/>
            <person name="Rueschoff J."/>
            <person name="Fuezesi L."/>
            <person name="Willert J."/>
            <person name="Burfeind P."/>
            <person name="Shah P."/>
            <person name="Becker H."/>
            <person name="Epplen J.T."/>
            <person name="Stemmler S."/>
        </authorList>
    </citation>
    <scope>INVOLVEMENT IN MMRCS2</scope>
</reference>
<reference key="34">
    <citation type="journal article" date="2007" name="Science">
        <title>ATM and ATR substrate analysis reveals extensive protein networks responsive to DNA damage.</title>
        <authorList>
            <person name="Matsuoka S."/>
            <person name="Ballif B.A."/>
            <person name="Smogorzewska A."/>
            <person name="McDonald E.R. III"/>
            <person name="Hurov K.E."/>
            <person name="Luo J."/>
            <person name="Bakalarski C.E."/>
            <person name="Zhao Z."/>
            <person name="Solimini N."/>
            <person name="Lerenthal Y."/>
            <person name="Shiloh Y."/>
            <person name="Gygi S.P."/>
            <person name="Elledge S.J."/>
        </authorList>
    </citation>
    <scope>IDENTIFICATION BY MASS SPECTROMETRY [LARGE SCALE ANALYSIS]</scope>
    <source>
        <tissue>Embryonic kidney</tissue>
    </source>
</reference>
<reference key="35">
    <citation type="journal article" date="2008" name="J. Invest. Dermatol.">
        <title>The DNA-mismatch repair enzyme hMSH2 modulates UV-B-induced cell cycle arrest and apoptosis in melanoma cells.</title>
        <authorList>
            <person name="Seifert M."/>
            <person name="Scherer S.J."/>
            <person name="Edelmann W."/>
            <person name="Bohm M."/>
            <person name="Meineke V."/>
            <person name="Lobrich M."/>
            <person name="Tilgen W."/>
            <person name="Reichrath J."/>
        </authorList>
    </citation>
    <scope>FUNCTION</scope>
</reference>
<reference key="36">
    <citation type="journal article" date="2009" name="Science">
        <title>Lysine acetylation targets protein complexes and co-regulates major cellular functions.</title>
        <authorList>
            <person name="Choudhary C."/>
            <person name="Kumar C."/>
            <person name="Gnad F."/>
            <person name="Nielsen M.L."/>
            <person name="Rehman M."/>
            <person name="Walther T.C."/>
            <person name="Olsen J.V."/>
            <person name="Mann M."/>
        </authorList>
    </citation>
    <scope>ACETYLATION [LARGE SCALE ANALYSIS] AT LYS-555</scope>
    <scope>IDENTIFICATION BY MASS SPECTROMETRY [LARGE SCALE ANALYSIS]</scope>
</reference>
<reference key="37">
    <citation type="journal article" date="2011" name="BMC Syst. Biol.">
        <title>Initial characterization of the human central proteome.</title>
        <authorList>
            <person name="Burkard T.R."/>
            <person name="Planyavsky M."/>
            <person name="Kaupe I."/>
            <person name="Breitwieser F.P."/>
            <person name="Buerckstuemmer T."/>
            <person name="Bennett K.L."/>
            <person name="Superti-Furga G."/>
            <person name="Colinge J."/>
        </authorList>
    </citation>
    <scope>IDENTIFICATION BY MASS SPECTROMETRY [LARGE SCALE ANALYSIS]</scope>
</reference>
<reference key="38">
    <citation type="journal article" date="2012" name="Proc. Natl. Acad. Sci. U.S.A.">
        <title>N-terminal acetylome analyses and functional insights of the N-terminal acetyltransferase NatB.</title>
        <authorList>
            <person name="Van Damme P."/>
            <person name="Lasa M."/>
            <person name="Polevoda B."/>
            <person name="Gazquez C."/>
            <person name="Elosegui-Artola A."/>
            <person name="Kim D.S."/>
            <person name="De Juan-Pardo E."/>
            <person name="Demeyer K."/>
            <person name="Hole K."/>
            <person name="Larrea E."/>
            <person name="Timmerman E."/>
            <person name="Prieto J."/>
            <person name="Arnesen T."/>
            <person name="Sherman F."/>
            <person name="Gevaert K."/>
            <person name="Aldabe R."/>
        </authorList>
    </citation>
    <scope>ACETYLATION [LARGE SCALE ANALYSIS] AT ALA-2</scope>
    <scope>CLEAVAGE OF INITIATOR METHIONINE [LARGE SCALE ANALYSIS]</scope>
    <scope>IDENTIFICATION BY MASS SPECTROMETRY [LARGE SCALE ANALYSIS]</scope>
</reference>
<reference key="39">
    <citation type="journal article" date="2013" name="J. Proteome Res.">
        <title>Toward a comprehensive characterization of a human cancer cell phosphoproteome.</title>
        <authorList>
            <person name="Zhou H."/>
            <person name="Di Palma S."/>
            <person name="Preisinger C."/>
            <person name="Peng M."/>
            <person name="Polat A.N."/>
            <person name="Heck A.J."/>
            <person name="Mohammed S."/>
        </authorList>
    </citation>
    <scope>PHOSPHORYLATION [LARGE SCALE ANALYSIS] AT SER-921</scope>
    <scope>IDENTIFICATION BY MASS SPECTROMETRY [LARGE SCALE ANALYSIS]</scope>
    <source>
        <tissue>Erythroleukemia</tissue>
    </source>
</reference>
<reference key="40">
    <citation type="journal article" date="2014" name="Mol. Cell">
        <title>HDAC6 deacetylates and ubiquitinates MSH2 to maintain proper levels of MutSalpha.</title>
        <authorList>
            <person name="Zhang M."/>
            <person name="Xiang S."/>
            <person name="Joo H.Y."/>
            <person name="Wang L."/>
            <person name="Williams K.A."/>
            <person name="Liu W."/>
            <person name="Hu C."/>
            <person name="Tong D."/>
            <person name="Haakenson J."/>
            <person name="Wang C."/>
            <person name="Zhang S."/>
            <person name="Pavlovicz R.E."/>
            <person name="Jones A."/>
            <person name="Schmidt K.H."/>
            <person name="Tang J."/>
            <person name="Dong H."/>
            <person name="Shan B."/>
            <person name="Fang B."/>
            <person name="Radhakrishnan R."/>
            <person name="Glazer P.M."/>
            <person name="Matthias P."/>
            <person name="Koomen J."/>
            <person name="Seto E."/>
            <person name="Bepler G."/>
            <person name="Nicosia S.V."/>
            <person name="Chen J."/>
            <person name="Li C."/>
            <person name="Gu L."/>
            <person name="Li G.M."/>
            <person name="Bai W."/>
            <person name="Wang H."/>
            <person name="Zhang X."/>
        </authorList>
    </citation>
    <scope>SUBCELLULAR LOCATION</scope>
    <scope>ACETYLATION AT LYS-845; LYS-847; LYS-871 AND LYS-892</scope>
    <scope>DEACETYLATION BY HDAC6</scope>
    <scope>UBIQUITINATION AT LYS-845; LYS-847; LYS-871 AND LYS-892</scope>
    <scope>MUTAGENESIS OF LYS-845; LYS-847; LYS-871 AND LYS-892</scope>
</reference>
<reference key="41">
    <citation type="journal article" date="2015" name="Mol. Cell">
        <title>MCM9 Is Required for Mammalian DNA Mismatch Repair.</title>
        <authorList>
            <person name="Traver S."/>
            <person name="Coulombe P."/>
            <person name="Peiffer I."/>
            <person name="Hutchins J.R."/>
            <person name="Kitzmann M."/>
            <person name="Latreille D."/>
            <person name="Mechali M."/>
        </authorList>
    </citation>
    <scope>FUNCTION</scope>
    <scope>IDENTIFICATION IN THE MMR COMPLEX</scope>
    <scope>INTERACTION WITH MCM9 AND MCM8</scope>
    <scope>SUBCELLULAR LOCATION</scope>
</reference>
<reference key="42">
    <citation type="journal article" date="2017" name="Nat. Struct. Mol. Biol.">
        <title>Site-specific mapping of the human SUMO proteome reveals co-modification with phosphorylation.</title>
        <authorList>
            <person name="Hendriks I.A."/>
            <person name="Lyon D."/>
            <person name="Young C."/>
            <person name="Jensen L.J."/>
            <person name="Vertegaal A.C."/>
            <person name="Nielsen M.L."/>
        </authorList>
    </citation>
    <scope>SUMOYLATION [LARGE SCALE ANALYSIS] AT LYS-430</scope>
    <scope>IDENTIFICATION BY MASS SPECTROMETRY [LARGE SCALE ANALYSIS]</scope>
</reference>
<reference key="43">
    <citation type="journal article" date="2011" name="Hum. Mutat.">
        <title>Verification of the three-step model in assessing the pathogenicity of mismatch repair gene variants.</title>
        <authorList>
            <person name="Kansikas M."/>
            <person name="Kariola R."/>
            <person name="Nystroem M."/>
        </authorList>
    </citation>
    <scope>CHARACTERIZATION OF VARIANTS LYNCH1 PRO-33; MET-44; VAL-45; SER-127; MET-145; ASP-161; ARG-162; ARG-164; PRO-173; ARG-187; PRO-187; VAL-272; TYR-333; LEU-519; ASN-603; PRO-636; ALA-674; VAL-688; PHE-697; 745-ILE-ILE-746 DEL; LYS-749; THR-834; GLY-886 AND GLU-923</scope>
    <scope>CHARACTERIZATION OF VARIANTS ASP-322 AND ILE-722</scope>
    <scope>FUNCTION</scope>
</reference>
<reference key="44">
    <citation type="journal article" date="1994" name="Trends Genet.">
        <title>Colon cancer and DNA repair: have mismatches met their match?</title>
        <authorList>
            <person name="Jiricny J."/>
        </authorList>
    </citation>
    <scope>REVIEW</scope>
</reference>
<reference key="45">
    <citation type="journal article" date="1997" name="Hum. Mutat.">
        <title>Molecular basis of HNPCC: mutations of MMR genes.</title>
        <authorList>
            <person name="Papadopoulos N."/>
            <person name="Lindblom A."/>
        </authorList>
    </citation>
    <scope>REVIEW ON VARIANTS</scope>
</reference>
<reference key="46">
    <citation type="journal article" date="2006" name="J. Mol. Histol.">
        <title>The role of the human DNA mismatch repair gene hMSH2 in DNA repair, cell cycle control and apoptosis: implications for pathogenesis, progression and therapy of cancer.</title>
        <authorList>
            <person name="Seifert M."/>
            <person name="Reichrath J."/>
        </authorList>
    </citation>
    <scope>REVIEW</scope>
</reference>
<reference key="47">
    <citation type="journal article" date="2008" name="J. Mol. Biol.">
        <title>The novel protein complex with SMARCAD1/KIAA1122 binds to the vicinity of TSS.</title>
        <authorList>
            <person name="Okazaki N."/>
            <person name="Ikeda S."/>
            <person name="Ohara R."/>
            <person name="Shimada K."/>
            <person name="Yanagawa T."/>
            <person name="Nagase T."/>
            <person name="Ohara O."/>
            <person name="Koga H."/>
        </authorList>
    </citation>
    <scope>INTERACTION WITH SMARCAD1</scope>
</reference>
<reference key="48">
    <citation type="journal article" date="2009" name="Cell">
        <title>Mammalian BTBD12/SLX4 assembles a Holliday junction resolvase and is required for DNA repair.</title>
        <authorList>
            <person name="Svendsen J.M."/>
            <person name="Smogorzewska A."/>
            <person name="Sowa M.E."/>
            <person name="O'Connell B.C."/>
            <person name="Gygi S.P."/>
            <person name="Elledge S.J."/>
            <person name="Harper J.W."/>
        </authorList>
    </citation>
    <scope>INTERACTION WITH SLX4</scope>
</reference>
<reference key="49">
    <citation type="journal article" date="2011" name="JAMA">
        <title>Cancer risks associated with germline mutations in MLH1, MSH2, and MSH6 genes in Lynch syndrome.</title>
        <authorList>
            <consortium name="French Cancer Genetics Network"/>
            <person name="Bonadona V."/>
            <person name="Bonaiti B."/>
            <person name="Olschwang S."/>
            <person name="Grandjouan S."/>
            <person name="Huiart L."/>
            <person name="Longy M."/>
            <person name="Guimbaud R."/>
            <person name="Buecher B."/>
            <person name="Bignon Y.J."/>
            <person name="Caron O."/>
            <person name="Colas C."/>
            <person name="Nogues C."/>
            <person name="Lejeune-Dumoulin S."/>
            <person name="Olivier-Faivre L."/>
            <person name="Polycarpe-Osaer F."/>
            <person name="Nguyen T.D."/>
            <person name="Desseigne F."/>
            <person name="Saurin J.C."/>
            <person name="Berthet P."/>
            <person name="Leroux D."/>
            <person name="Duffour J."/>
            <person name="Manouvrier S."/>
            <person name="Frebourg T."/>
            <person name="Sobol H."/>
            <person name="Lasset C."/>
            <person name="Bonaiti-Pellie C."/>
        </authorList>
    </citation>
    <scope>POSSIBLE INVOLVEMENT IN ENDMC</scope>
</reference>
<reference key="50">
    <citation type="journal article" date="2007" name="Mol. Cell">
        <title>Structure of the human MutSalpha DNA lesion recognition complex.</title>
        <authorList>
            <person name="Warren J.J."/>
            <person name="Pohlhaus T.J."/>
            <person name="Changela A."/>
            <person name="Iyer R.R."/>
            <person name="Modrich P.L."/>
            <person name="Beese L.S."/>
        </authorList>
    </citation>
    <scope>X-RAY CRYSTALLOGRAPHY (2.75 ANGSTROMS)</scope>
</reference>
<reference key="51">
    <citation type="journal article" date="1994" name="Hum. Mol. Genet.">
        <title>Mutational analysis of the hMSH2 gene reveals a three base pair deletion in a family predisposed to colorectal cancer development.</title>
        <authorList>
            <person name="Mary J.-L."/>
            <person name="Bishop T."/>
            <person name="Kolodner R.D."/>
            <person name="Lipford J.R."/>
            <person name="Kane M.F."/>
            <person name="Weber W."/>
            <person name="Torhorst J."/>
            <person name="Mueller H."/>
            <person name="Spycher M."/>
            <person name="Scott R.J."/>
        </authorList>
    </citation>
    <scope>VARIANT LYNCH1 ASN-596 DEL</scope>
</reference>
<reference key="52">
    <citation type="journal article" date="1996" name="Gastroenterology">
        <title>Molecular nature of colon tumors in hereditary nonpolyposis colon cancer, familial polyposis, and sporadic colon cancer.</title>
        <authorList>
            <person name="Konishi M."/>
            <person name="Kikuchi-Yanoshita R."/>
            <person name="Tanaka K."/>
            <person name="Muraoka M."/>
            <person name="Onda A."/>
            <person name="Okumura Y."/>
            <person name="Kishi N."/>
            <person name="Iwama T."/>
            <person name="Mori T."/>
            <person name="Koike M."/>
            <person name="Ushio K."/>
            <person name="Chiba M."/>
            <person name="Nomizu S."/>
            <person name="Konishi F."/>
            <person name="Utsunomiya J."/>
            <person name="Miyaki M."/>
        </authorList>
    </citation>
    <scope>VARIANTS PHE-390 AND LYS-419</scope>
</reference>
<reference key="53">
    <citation type="journal article" date="1996" name="Hum. Genet.">
        <title>CpG dinucleotides in the hMSH2 and hMLH1 genes are hotspots for HNPCC mutations.</title>
        <authorList>
            <person name="Maliaka Y.K."/>
            <person name="Chudina A.P."/>
            <person name="Belev N.F."/>
            <person name="Alday P."/>
            <person name="Bochkov N.P."/>
            <person name="Buerstedde J.-M."/>
        </authorList>
    </citation>
    <scope>VARIANT ASP-322</scope>
</reference>
<reference key="54">
    <citation type="journal article" date="1996" name="Hum. Mol. Genet.">
        <title>Microsatellite instability and mutation analysis of hMSH2 and hMLH1 in patients with sporadic, familial and hereditary colorectal cancer.</title>
        <authorList>
            <person name="Moslein G."/>
            <person name="Tester D.J."/>
            <person name="Lindor N.M."/>
            <person name="Honchel R."/>
            <person name="Cunningham J.M."/>
            <person name="French A.J."/>
            <person name="Halling K.C."/>
            <person name="Schwab M."/>
            <person name="Goretzki P."/>
            <person name="Thibodeau S.N."/>
        </authorList>
    </citation>
    <scope>VARIANT LYNCH1 ASN-596 DEL</scope>
    <scope>VARIANT HIS-167</scope>
</reference>
<reference key="55">
    <citation type="journal article" date="1996" name="J. Natl. Cancer Inst.">
        <title>Germline mutations of hMLH1 and hMSH2 genes in Korean hereditary nonpolyposis colorectal cancer.</title>
        <authorList>
            <person name="Han H.-J."/>
            <person name="Yuan Y."/>
            <person name="Ku J.-L."/>
            <person name="Oh J.-H."/>
            <person name="Won Y.-J."/>
            <person name="Kang K.J."/>
            <person name="Kim K.Y."/>
            <person name="Kim S."/>
            <person name="Kim C.Y."/>
            <person name="Kim J.-P."/>
            <person name="Oh N.-G."/>
            <person name="Lee K.H."/>
            <person name="Choe K.J."/>
            <person name="Nakamura Y."/>
            <person name="Park J.-G."/>
        </authorList>
    </citation>
    <scope>VARIANT LYNCH1 TYR-506</scope>
</reference>
<reference key="56">
    <citation type="journal article" date="1996" name="Oncogene">
        <title>Microsatellite instability and the role of hMSH2 in sporadic colorectal cancer.</title>
        <authorList>
            <person name="Bubb V.J."/>
            <person name="Curtis L.J."/>
            <person name="Cunningham C."/>
            <person name="Dunlop M.G."/>
            <person name="Carothers A.D."/>
            <person name="Morris R.G."/>
            <person name="White S."/>
            <person name="Bird C.C."/>
            <person name="Wyllie A.H."/>
        </authorList>
    </citation>
    <scope>VARIANT LYNCH1 GLN-46</scope>
</reference>
<reference key="57">
    <citation type="journal article" date="1997" name="Am. J. Hum. Genet.">
        <title>Hereditary nonpolyposis colorectal cancer families not complying with the Amsterdam criteria show extremely low frequency of mismatch-repair-gene mutations.</title>
        <authorList>
            <person name="Wijnen J."/>
            <person name="Khan P.M."/>
            <person name="Vasen H."/>
            <person name="van der Klift H."/>
            <person name="Mulder A."/>
            <person name="van Leeuwen-Cornelisse I."/>
            <person name="Bakker B."/>
            <person name="Losekoot M."/>
            <person name="Moeller P."/>
            <person name="Fodde R."/>
        </authorList>
    </citation>
    <scope>VARIANTS LYNCH1 THR-305; ASN-596 DEL AND THR-834</scope>
</reference>
<reference key="58">
    <citation type="journal article" date="1997" name="Biochem. Biophys. Res. Commun.">
        <title>Frequent somatic mutations of hMSH3 with reference to microsatellite instability in hereditary nonpolyposis colorectal cancers.</title>
        <authorList>
            <person name="Akiyama Y."/>
            <person name="Tsubouchi N."/>
            <person name="Yuasa Y."/>
        </authorList>
    </citation>
    <scope>VARIANT LYNCH1 CYS-323</scope>
</reference>
<reference key="59">
    <citation type="journal article" date="1997" name="Cancer Epidemiol. Biomarkers Prev.">
        <title>Identification of concurrent germ-line mutations in hMSH2 and/or hMLH1 in Japanese hereditary nonpolyposis colorectal cancer kindreds.</title>
        <authorList>
            <person name="Nakahara M."/>
            <person name="Yokozaki H."/>
            <person name="Yasui W."/>
            <person name="Dohi K."/>
            <person name="Tahara E."/>
        </authorList>
    </citation>
    <scope>VARIANTS LYNCH1 THR-110; ARG-639; LYS-647; HIS-656; THR-679; VAL-729 AND ILE-732</scope>
</reference>
<reference key="60">
    <citation type="journal article" date="1997" name="Genes Chromosomes Cancer">
        <title>Characterization of MSH2 and MLH1 mutations in Italian families with hereditary nonpolyposis colorectal cancer.</title>
        <authorList>
            <person name="Viel A."/>
            <person name="Genuardi M."/>
            <person name="Capozzi E."/>
            <person name="Leonardi F."/>
            <person name="Bellacosa A."/>
            <person name="Paravatou-Petsotas M."/>
            <person name="Pomponi M.G."/>
            <person name="Fornasarig M."/>
            <person name="Percesepe A."/>
            <person name="Roncucci L."/>
            <person name="Tamassia M.G."/>
            <person name="Benatti P."/>
            <person name="Ponz de Leon M."/>
            <person name="Valenti A."/>
            <person name="Covino M."/>
            <person name="Anti M."/>
            <person name="Foletto M."/>
            <person name="Boiocchi M."/>
            <person name="Neri G."/>
        </authorList>
    </citation>
    <scope>VARIANT SER-596</scope>
</reference>
<reference key="61">
    <citation type="journal article" date="1997" name="Genes Chromosomes Cancer">
        <title>MSH2 and MLH1 mutations in sporadic replication error-positive colorectal carcinoma as assessed by two-dimensional DNA electrophoresis.</title>
        <authorList>
            <person name="Wu Y."/>
            <person name="Nystroem-Lahti M."/>
            <person name="Osinga J."/>
            <person name="Looman M.W.G."/>
            <person name="Peltomaeki P."/>
            <person name="Aaltonen L.A."/>
            <person name="de la Chapelle A."/>
            <person name="Hofstra R.M.W."/>
            <person name="Buys C.H.C.M."/>
        </authorList>
    </citation>
    <scope>VARIANT ASP-322</scope>
</reference>
<reference key="62">
    <citation type="journal article" date="1997" name="Hum. Genet.">
        <title>Use of SSCP analysis to identify germline mutations in HNPCC families fulfilling the Amsterdam criteria.</title>
        <authorList>
            <person name="Beck N.E."/>
            <person name="Tomlinson I.P.M."/>
            <person name="Homfray T."/>
            <person name="Frayling I."/>
            <person name="Hodgson S.V."/>
            <person name="Harocopos C.J."/>
            <person name="Bodmer W.F."/>
        </authorList>
    </citation>
    <scope>VARIANT LYNCH1 VAL-562</scope>
</reference>
<reference key="63">
    <citation type="journal article" date="1997" name="Hum. Mutat.">
        <title>Hereditary nonpolyposis colorectal cancer (HNPCC): eight novel germline mutations in hMSH2 or hMLH1 genes.</title>
        <authorList>
            <person name="Wehner M."/>
            <person name="Buschhausen L."/>
            <person name="Lamberti C."/>
            <person name="Kruse R."/>
            <person name="Caspari R."/>
            <person name="Propping P."/>
            <person name="Friedl W."/>
        </authorList>
    </citation>
    <scope>VARIANT LYNCH1 PHE-697</scope>
    <scope>VARIANT ASP-322</scope>
</reference>
<reference key="64">
    <citation type="journal article" date="1998" name="Am. J. Hum. Genet.">
        <title>Systematic analysis of hMSH2 and hMLH1 in young colon cancer patients and controls.</title>
        <authorList>
            <person name="Farrington S.M."/>
            <person name="Lin-Goerke J."/>
            <person name="Ling J."/>
            <person name="Wang Y."/>
            <person name="Burczak J.D."/>
            <person name="Robbins D.J."/>
            <person name="Dunlop M.G."/>
        </authorList>
    </citation>
    <scope>VARIANT LYNCH1 265-VAL--GLN-314 DEL</scope>
    <scope>VARIANTS GLY-641 AND VAL-770</scope>
</reference>
<reference key="65">
    <citation type="journal article" date="1998" name="Am. J. Pathol.">
        <title>Microsatellite instability and mutation of DNA mismatch repair genes in gliomas.</title>
        <authorList>
            <person name="Leung S.Y."/>
            <person name="Chan T.L."/>
            <person name="Chung L.P."/>
            <person name="Chan A.S.Y."/>
            <person name="Fan Y.W."/>
            <person name="Hung K.N."/>
            <person name="Kwong W.K."/>
            <person name="Ho J.W.C."/>
            <person name="Yuen S.T."/>
        </authorList>
    </citation>
    <scope>VARIANT ARG-199</scope>
</reference>
<reference key="66">
    <citation type="journal article" date="1998" name="Dis. Colon Rectum">
        <title>Germline mutations of hMLH1 and hMSH2 genes in patients with suspected hereditary nonpolyposis colorectal cancer and sporadic early-onset colorectal cancer.</title>
        <authorList>
            <person name="Yuan Y."/>
            <person name="Han H.-J."/>
            <person name="Zheng S."/>
            <person name="Park J.-G."/>
        </authorList>
    </citation>
    <scope>VARIANT CRC TYR-506</scope>
    <scope>VARIANT LYNCH1 ILE-688</scope>
</reference>
<reference key="67">
    <citation type="journal article" date="1998" name="Eur. J. Cancer">
        <title>MSH2 codon 322 Gly to Asp seems not to confer an increased risk for colorectal cancer susceptibility.</title>
        <authorList>
            <person name="Liu T."/>
            <person name="Stathopoulos P."/>
            <person name="Lindblom P."/>
            <person name="Rubio C."/>
            <person name="Wasteson Arver B."/>
            <person name="Iselius L."/>
            <person name="Holmberg E."/>
            <person name="Groenberg H."/>
            <person name="Lindblom A."/>
        </authorList>
    </citation>
    <scope>VARIANT ASP-322</scope>
</reference>
<reference key="68">
    <citation type="journal article" date="1998" name="J. Hum. Genet.">
        <title>Novel germline mutations of hMSH2 in a patient with hereditary nonpolyposis colorectal cancer 'HNPCC' and in a patient with six primary cancers.</title>
        <authorList>
            <person name="Okamura S."/>
            <person name="Koyama K."/>
            <person name="Miyoshi Y."/>
            <person name="Monden M."/>
            <person name="Takami M."/>
        </authorList>
    </citation>
    <scope>VARIANT LYNCH1 PHE-390</scope>
</reference>
<reference key="69">
    <citation type="journal article" date="1999" name="Cancer">
        <title>Influence of selection criteria on mutation detection in patients with hereditary nonpolyposis colorectal cancer.</title>
        <authorList>
            <person name="Heinimann K."/>
            <person name="Scott R.J."/>
            <person name="Buerstedde J.-M."/>
            <person name="Weber W."/>
            <person name="Siebold K."/>
            <person name="Attenhofer M."/>
            <person name="Mueller H."/>
            <person name="Dobbie Z."/>
        </authorList>
    </citation>
    <scope>VARIANTS LYNCH1 SER-336 AND ASN-596 DEL</scope>
</reference>
<reference key="70">
    <citation type="journal article" date="1999" name="Curr. Biol.">
        <title>Mutator phenotypes of common polymorphisms and missense mutations in MSH2.</title>
        <authorList>
            <person name="Drotschmann K."/>
            <person name="Clark A.B."/>
            <person name="Kunkel T.A."/>
        </authorList>
    </citation>
    <scope>CHARACTERIZATION OF VARIANTS ASP-322; PHE-390; LYS-419; TYR-506; PRO-524; LEU-622 AND PHE-697</scope>
</reference>
<reference key="71">
    <citation type="journal article" date="1999" name="Eur. J. Hum. Genet.">
        <title>Assessment of pathogenicity criteria for constitutional missense mutations of the hereditary nonpolyposis colorectal cancer genes MLH1 and MSH2.</title>
        <authorList>
            <person name="Genuardi M."/>
            <person name="Carrara S."/>
            <person name="Anti M."/>
            <person name="Ponz de Leon M."/>
            <person name="Viel A."/>
        </authorList>
    </citation>
    <scope>VARIANTS LYNCH1 GLN-246; SER-596 AND THR-834</scope>
    <scope>VARIANT ASP-322</scope>
</reference>
<reference key="72">
    <citation type="journal article" date="1999" name="JAMA">
        <title>Novel hMLH1 and hMSH2 germline mutations in African Americans with colorectal cancer.</title>
        <authorList>
            <person name="Weber T.K."/>
            <person name="Chin H.-M."/>
            <person name="Rodriguez-Bigas M."/>
            <person name="Keitz B."/>
            <person name="Gilligan R."/>
            <person name="O'Malley L."/>
            <person name="Urf E."/>
            <person name="Diba N."/>
            <person name="Pazik J."/>
            <person name="Petrelli N.J."/>
        </authorList>
    </citation>
    <scope>VARIANT LYNCH1 PHE-390</scope>
</reference>
<reference key="73">
    <citation type="journal article" date="1999" name="J. Med. Genet.">
        <title>A missense mutation in both hMSH2 and APC in an Ashkenazi Jewish HNPCC kindred: implications for clinical screening.</title>
        <authorList>
            <person name="Yuan Z.Q."/>
            <person name="Wong N."/>
            <person name="Foulkes W.D."/>
            <person name="Alpert L."/>
            <person name="Manganaro F."/>
            <person name="Andreutti-Zaugg C."/>
            <person name="Iggo R."/>
            <person name="Anthony K."/>
            <person name="Hsieh E."/>
            <person name="Redston M."/>
            <person name="Pinsky L."/>
            <person name="Trifiro M."/>
            <person name="Gordon P.H."/>
            <person name="Lasko D."/>
        </authorList>
    </citation>
    <scope>VARIANT LYNCH1 PRO-636</scope>
</reference>
<reference key="74">
    <citation type="journal article" date="2000" name="Biochem. Biophys. Res. Commun.">
        <title>Enhanced detection of deleterious and other germline mutations of hMSH2 and hMLH1 in Japanese hereditary nonpolyposis colorectal cancer kindreds.</title>
        <authorList>
            <person name="Nomura S."/>
            <person name="Sugano K."/>
            <person name="Kashiwabara H."/>
            <person name="Taniguchi T."/>
            <person name="Fukayama N."/>
            <person name="Fujita S."/>
            <person name="Akasu T."/>
            <person name="Moriya Y."/>
            <person name="Ohhigashi S."/>
            <person name="Kakizoe T."/>
            <person name="Sekiya T."/>
        </authorList>
    </citation>
    <scope>VARIANTS LYNCH1 ILE-688 AND GLU-845</scope>
    <scope>VARIANT MET-8</scope>
</reference>
<reference key="75">
    <citation type="journal article" date="2000" name="Eur. J. Hum. Genet.">
        <title>Detection of mutations in mismatch repair genes in Portuguese families with hereditary non-polyposis colorectal cancer (HNPCC) by a multi-method approach.</title>
        <authorList>
            <person name="Fidalgo P."/>
            <person name="Almeida M.R."/>
            <person name="West S."/>
            <person name="Gaspar C."/>
            <person name="Maia L."/>
            <person name="Wijnen J."/>
            <person name="Albuquerque C."/>
            <person name="Curtis A."/>
            <person name="Cravo M."/>
            <person name="Fodde R."/>
            <person name="Leitao C.N."/>
            <person name="Burn J."/>
        </authorList>
    </citation>
    <scope>VARIANT ASP-322</scope>
</reference>
<reference key="76">
    <citation type="journal article" date="2000" name="Hum. Mutat.">
        <title>Four novel MSH2 / MLH1 gene mutations in Portuguese HNPCC families.</title>
        <authorList>
            <person name="Isidro G."/>
            <person name="Veiga I."/>
            <person name="Matos P."/>
            <person name="Almeida S."/>
            <person name="Bizarro S."/>
            <person name="Marshall B."/>
            <person name="Baptista M."/>
            <person name="Leite J."/>
            <person name="Regateiro F."/>
            <person name="Soares J."/>
            <person name="Castedo S."/>
            <person name="Boavida M.G."/>
        </authorList>
    </citation>
    <scope>VARIANTS LYNCH1 ARG-692 AND ARG-697</scope>
</reference>
<reference key="77">
    <citation type="journal article" date="2000" name="J. Clin. Oncol.">
        <title>Population-based molecular detection of hereditary nonpolyposis colorectal cancer.</title>
        <authorList>
            <person name="Salovaara R."/>
            <person name="Loukola A."/>
            <person name="Kristo P."/>
            <person name="Kaeaeriaeinen H."/>
            <person name="Ahtola H."/>
            <person name="Eskelinen M."/>
            <person name="Haerkoenen N."/>
            <person name="Julkunen R."/>
            <person name="Kangas E."/>
            <person name="Ojala S."/>
            <person name="Tulikoura J."/>
            <person name="Valkamo E."/>
            <person name="Jaervinen H."/>
            <person name="Mecklin J.-P."/>
            <person name="Aaltonen L.A."/>
            <person name="de la Chapelle A."/>
        </authorList>
    </citation>
    <scope>VARIANT LYNCH1 ASN-603</scope>
    <scope>VARIANT ASP-322</scope>
</reference>
<reference key="78">
    <citation type="journal article" date="2000" name="J. Clin. Oncol.">
        <authorList>
            <person name="Salovaara R."/>
            <person name="Loukola A."/>
            <person name="Kristo P."/>
            <person name="Kaeaeriaeinen H."/>
            <person name="Ahtola H."/>
            <person name="Eskelinen M."/>
            <person name="Haerkoenen N."/>
            <person name="Julkunen R."/>
            <person name="Kangas E."/>
            <person name="Ojala S."/>
            <person name="Tulikoura J."/>
            <person name="Valkamo E."/>
            <person name="Jaervinen H."/>
            <person name="Mecklin J.-P."/>
            <person name="Aaltonen L.A."/>
            <person name="de la Chapelle A."/>
        </authorList>
    </citation>
    <scope>ERRATUM OF PUBMED:10829038</scope>
</reference>
<reference key="79">
    <citation type="journal article" date="2001" name="Cancer Detect. Prev.">
        <title>hMLH1 and hMSH2 mutations in families with familial clustering of gastric cancer and hereditary non-polyposis colorectal cancer.</title>
        <authorList>
            <person name="Kim J.C."/>
            <person name="Kim H.C."/>
            <person name="Roh S.A."/>
            <person name="Koo K.H."/>
            <person name="Lee D.H."/>
            <person name="Yu C.S."/>
            <person name="Lee J.H."/>
            <person name="Kim T.W."/>
            <person name="Lee H.I."/>
            <person name="Beck N.E."/>
            <person name="Bodmer W.F."/>
        </authorList>
    </citation>
    <scope>VARIANTS GASTRIC CANCER PHE-17; GLU-824; ALA-868; GLY-870 AND GLY-873</scope>
    <scope>VARIANTS LYNCH1 CYS-98; TYR-323; ILE-335; ARG-629 AND VAL-714</scope>
</reference>
<reference key="80">
    <citation type="journal article" date="2001" name="Eur. J. Med. Res.">
        <title>Sixteen rare sequence variants of the hMLH1 and hMSH2 genes found in a cohort of 254 suspected HNPCC (hereditary non-polyposis colorectal cancer) patients: mutations or polymorphisms?</title>
        <authorList>
            <person name="Mueller-Koch Y."/>
            <person name="Kopp R."/>
            <person name="Lohse P."/>
            <person name="Baretton G."/>
            <person name="Stoetzer A."/>
            <person name="Aust D."/>
            <person name="Daum J."/>
            <person name="Kerker B."/>
            <person name="Gross M."/>
            <person name="Dietmeier W."/>
            <person name="Holinski-Feder E."/>
        </authorList>
    </citation>
    <scope>VARIANTS LYNCH1 ASP-161; VAL-216 AND ARG-554</scope>
</reference>
<reference key="81">
    <citation type="journal article" date="2001" name="Hum. Mol. Genet.">
        <title>Functional analysis of human MLH1 and MSH2 missense variants and hybrid human-yeast MLH1 proteins in Saccharomyces cerevisiae.</title>
        <authorList>
            <person name="Ellison A.R."/>
            <person name="Lofing J."/>
            <person name="Bitter G.A."/>
        </authorList>
    </citation>
    <scope>CHARACTERIZATION OF VARIANTS ASP-322; LEU-622 AND TYR-639</scope>
</reference>
<reference key="82">
    <citation type="journal article" date="2002" name="Br. J. Cancer">
        <title>Genomic deletions of MSH2 and MLH1 in colorectal cancer families detected by a novel mutation detection approach.</title>
        <authorList>
            <person name="Gille J.J.P."/>
            <person name="Hogervorst F.B.L."/>
            <person name="Pals G."/>
            <person name="Wijnen J.T."/>
            <person name="van Schooten R.J."/>
            <person name="Dommering C.J."/>
            <person name="Meijer G.A."/>
            <person name="Craanen M.E."/>
            <person name="Nederlof P.M."/>
            <person name="de Jong D."/>
            <person name="McElgunn C.J."/>
            <person name="Schouten J.P."/>
            <person name="Menko F.H."/>
        </authorList>
    </citation>
    <scope>VARIANT LYNCH1 VAL-813</scope>
</reference>
<reference key="83">
    <citation type="journal article" date="2002" name="Cancer">
        <title>Evaluation of screening strategy for detecting hereditary nonpolyposis colorectal carcinoma.</title>
        <authorList>
            <person name="Furukawa T."/>
            <person name="Konishi F."/>
            <person name="Shitoh K."/>
            <person name="Kojima M."/>
            <person name="Nagai H."/>
            <person name="Tsukamoto T."/>
        </authorList>
    </citation>
    <scope>VARIANTS LYNCH1 VAL-600 AND PHE-723</scope>
</reference>
<reference key="84">
    <citation type="journal article" date="2002" name="Cancer Cell">
        <title>HNPCC mutations in hMSH2 result in reduced hMSH2-hMSH6 molecular switch functions.</title>
        <authorList>
            <person name="Heinen C.D."/>
            <person name="Wilson T."/>
            <person name="Mazurek A."/>
            <person name="Berardini M."/>
            <person name="Butz C."/>
            <person name="Fishel R."/>
        </authorList>
    </citation>
    <scope>VARIANTS LYNCH1 HIS-167; MET-393; PRO-524; ASN-596 DEL; LEU-622; SER-674 AND ARG-905</scope>
    <scope>CHARACTERIZATION OF VARIANTS LYNCH1 HIS-167; MET-393; PRO-524; ASN-596 DEL; LEU-622; SER-674 AND ARG-905</scope>
</reference>
<reference key="85">
    <citation type="journal article" date="2002" name="Cancer Res.">
        <title>A homozygous germ-line mutation in the human MSH2 gene predisposes to hematological malignancy and multiple cafe-au-lait spots.</title>
        <authorList>
            <person name="Whiteside D."/>
            <person name="McLeod R."/>
            <person name="Graham G."/>
            <person name="Steckley J.L."/>
            <person name="Booth K."/>
            <person name="Somerville M.J."/>
            <person name="Andrew S.E."/>
        </authorList>
    </citation>
    <scope>INVOLVEMENT IN MULTIPLE CAFE-AU-LAIT SPOTS WITH LEUKEMIA</scope>
</reference>
<reference key="86">
    <citation type="journal article" date="2002" name="Gut">
        <title>Pathogenicity of missense and splice site mutations in hMSH2 and hMLH1 mismatch repair genes: implications for genetic testing.</title>
        <authorList>
            <person name="Cravo M."/>
            <person name="Afonso A.J."/>
            <person name="Lage P."/>
            <person name="Albuquerque C."/>
            <person name="Maia L."/>
            <person name="Lacerda C."/>
            <person name="Fidalgo P."/>
            <person name="Chaves P."/>
            <person name="Cruz C."/>
            <person name="Nobre-Leitao C."/>
        </authorList>
    </citation>
    <scope>VARIANT ASP-322</scope>
</reference>
<reference key="87">
    <citation type="journal article" date="2002" name="Hum. Mutat.">
        <title>Hereditary non-polyposis colorectal cancer (HNPCC): phenotype-genotype correlation between patients with and without identified mutation.</title>
        <authorList>
            <person name="Bisgaard M.L."/>
            <person name="Jaeger A.C."/>
            <person name="Myrhoej T."/>
            <person name="Bernstein I."/>
            <person name="Nielsen F.C."/>
        </authorList>
    </citation>
    <scope>VARIANTS LYNCH1 MET-44; VAL-45; ASN-596 DEL; GLY-886 AND GLU-923</scope>
</reference>
<reference key="88">
    <citation type="journal article" date="2002" name="J. Cancer Res. Clin. Oncol.">
        <title>Impact of microsatellite testing and mismatch repair protein expression on the clinical interpretation of genetic testing in hereditary non-polyposis colorectal cancer.</title>
        <authorList>
            <person name="Ward R."/>
            <person name="Meldrum C."/>
            <person name="Williams R."/>
            <person name="Mokany E."/>
            <person name="Scott R."/>
            <person name="Turner J."/>
            <person name="Hawkins N."/>
            <person name="Burgess B."/>
            <person name="Groombridge C."/>
            <person name="Spigelman A."/>
        </authorList>
    </citation>
    <scope>VARIANTS LYNCH1 ILE-102; ASP-163 AND ALA-564</scope>
    <scope>VARIANT ASP-322</scope>
</reference>
<reference key="89">
    <citation type="journal article" date="2002" name="J. Clin. Oncol.">
        <title>Mutations of hMLH1 and hMSH2 in patients with suspected hereditary nonpolyposis colorectal cancer: correlation with microsatellite instability and abnormalities of mismatch repair protein expression.</title>
        <authorList>
            <person name="Scartozzi M."/>
            <person name="Bianchi F."/>
            <person name="Rosati S."/>
            <person name="Galizia E."/>
            <person name="Antolini A."/>
            <person name="Loretelli C."/>
            <person name="Piga A."/>
            <person name="Bearzi I."/>
            <person name="Cellerino R."/>
            <person name="Porfiri E."/>
        </authorList>
    </citation>
    <scope>VARIANTS LYNCH1 HIS-167 AND SER-359</scope>
</reference>
<reference key="90">
    <citation type="journal article" date="2002" name="J. Med. Genet.">
        <title>Germline MSH2 and MLH1 mutational spectrum in HNPCC families from Poland and the Baltic States.</title>
        <authorList>
            <person name="Kurzawski G."/>
            <person name="Suchy J."/>
            <person name="Kladny J."/>
            <person name="Safranow K."/>
            <person name="Jakubowska A."/>
            <person name="Elsakov P."/>
            <person name="Kucinskas V."/>
            <person name="Gardovski J."/>
            <person name="Irmejs A."/>
            <person name="Sibul H."/>
            <person name="Huzarski T."/>
            <person name="Byrski T."/>
            <person name="Debniak T."/>
            <person name="Cybulski C."/>
            <person name="Gronwald J."/>
            <person name="Oszurek O."/>
            <person name="Clark J."/>
            <person name="Gozdz S."/>
            <person name="Niepsuj S."/>
            <person name="Slomski R."/>
            <person name="Plawski A."/>
            <person name="Lacka-Wojciechowska A."/>
            <person name="Rozmiarek A."/>
            <person name="Fiszer-Maliszewska L."/>
            <person name="Bebenek M."/>
            <person name="Sorokin D."/>
            <person name="Stawicka M."/>
            <person name="Godlewski D."/>
            <person name="Richter P."/>
            <person name="Brozek I."/>
            <person name="Wysocka B."/>
            <person name="Jawien A."/>
            <person name="Banaszkiewicz Z."/>
            <person name="Kowalczyk J."/>
            <person name="Czudowska D."/>
            <person name="Goretzki P.E."/>
            <person name="Moeslein G."/>
            <person name="Lubinski J."/>
        </authorList>
    </citation>
    <scope>VARIANTS LYNCH1 LEU-92 DEL AND ALA-853</scope>
    <scope>VARIANT ASP-322</scope>
</reference>
<reference key="91">
    <citation type="journal article" date="2003" name="Am. J. Hum. Genet.">
        <title>Molecular analysis of hereditary nonpolyposis colorectal cancer in the United States: high mutation detection rate among clinically selected families and characterization of an American founder genomic deletion of the MSH2 gene.</title>
        <authorList>
            <person name="Wagner A."/>
            <person name="Barrows A."/>
            <person name="Wijnen J.T."/>
            <person name="van der Klift H."/>
            <person name="Franken P.F."/>
            <person name="Verkuijlen P."/>
            <person name="Nakagawa H."/>
            <person name="Geugien M."/>
            <person name="Jaghmohan-Changur S."/>
            <person name="Breukel C."/>
            <person name="Meijers-Heijboer H."/>
            <person name="Morreau H."/>
            <person name="van Puijenbroek M."/>
            <person name="Burn J."/>
            <person name="Coronel S."/>
            <person name="Kinarski Y."/>
            <person name="Okimoto R."/>
            <person name="Watson P."/>
            <person name="Lynch J.F."/>
            <person name="de la Chapelle A."/>
            <person name="Lynch H.T."/>
            <person name="Fodde R."/>
        </authorList>
    </citation>
    <scope>VARIANTS LYNCH1 PRO-552; SER-583 AND PRO-636</scope>
</reference>
<reference key="92">
    <citation type="journal article" date="2003" name="Ann. Oncol.">
        <title>Microsatellite instability and mutation analysis among southern Italian patients with colorectal carcinoma: detection of different alterations accounting for MLH1 and MSH2 inactivation in familial cases.</title>
        <authorList>
            <person name="Colombino M."/>
            <person name="Cossu A."/>
            <person name="Arba A."/>
            <person name="Manca A."/>
            <person name="Curci A."/>
            <person name="Avallone A."/>
            <person name="Comella G."/>
            <person name="Botti G."/>
            <person name="Scintu F."/>
            <person name="Amoruso M."/>
            <person name="D'Abbicco D."/>
            <person name="d'Agnessa M.R."/>
            <person name="Spanu A."/>
            <person name="Tanda F."/>
            <person name="Palmieri G."/>
        </authorList>
    </citation>
    <scope>VARIANTS CRC ILE-13 AND ILE-342</scope>
    <scope>VARIANT ASP-322</scope>
</reference>
<reference key="93">
    <citation type="journal article" date="2003" name="Hum. Mutat.">
        <title>Genetic analysis of familial colorectal cancer in Israeli Arabs.</title>
        <authorList>
            <person name="Chen-Shtoyerman R."/>
            <person name="Theodor L."/>
            <person name="Harmati E."/>
            <person name="Friedman E."/>
            <person name="Dacka S."/>
            <person name="Kopelman Y."/>
            <person name="Sternberg A."/>
            <person name="Zarivach R."/>
            <person name="Bar-Meir S."/>
            <person name="Fireman Z."/>
        </authorList>
    </citation>
    <scope>VARIANT LYNCH1 SER-127</scope>
</reference>
<reference key="94">
    <citation type="journal article" date="2003" name="Hum. Mutat.">
        <title>Novel MLH1 and MSH2 germline mutations in the first HNPCC families identified in Slovakia.</title>
        <authorList>
            <person name="Bartosova Z."/>
            <person name="Fridrichova I."/>
            <person name="Bujalkova M."/>
            <person name="Wolf B."/>
            <person name="Ilencikova D."/>
            <person name="Krizan P."/>
            <person name="Hlavcak P."/>
            <person name="Palaj J."/>
            <person name="Lukac L."/>
            <person name="Lukacova M."/>
            <person name="Boeoer A."/>
            <person name="Haider R."/>
            <person name="Jiricny J."/>
            <person name="Nystroem-Lahti M."/>
            <person name="Marra G."/>
        </authorList>
    </citation>
    <scope>VARIANT LYNCH1 PRO-175</scope>
</reference>
<reference key="95">
    <citation type="journal article" date="2003" name="Hum. Mutat.">
        <title>Genomic deletions in MSH2 or MLH1 are a frequent cause of hereditary non-polyposis colorectal cancer: identification of novel and recurrent deletions by MLPA.</title>
        <authorList>
            <person name="Taylor C.F."/>
            <person name="Charlton R.S."/>
            <person name="Burn J."/>
            <person name="Sheridan E."/>
            <person name="Taylor G.R."/>
        </authorList>
    </citation>
    <scope>VARIANTS LYNCH1 GLY-163 AND GLY-660</scope>
</reference>
<reference key="96">
    <citation type="journal article" date="2003" name="Oncol. Rep.">
        <title>Oncogenic pathway of sporadic colorectal cancer with novel germline missense mutations in the hMSH2 gene.</title>
        <authorList>
            <person name="Yamada K."/>
            <person name="Zhong X."/>
            <person name="Kanazawa S."/>
            <person name="Koike J."/>
            <person name="Tsujita K."/>
            <person name="Hemmi H."/>
        </authorList>
    </citation>
    <scope>VARIANTS CRC SER-40; VAL-169; ARG-203; PHE-390; LYS-419; CYS-619 AND ARG-629</scope>
    <scope>VARIANT MET-8</scope>
</reference>
<reference key="97">
    <citation type="journal article" date="2004" name="Hum. Genet.">
        <title>Gene symbol: hMSH2. Disease: hereditary nonpolyposis colorectal cancer.</title>
        <authorList>
            <person name="Sun M.H."/>
            <person name="Cai Q."/>
            <person name="Fu G."/>
            <person name="Ren S."/>
            <person name="Mo S."/>
            <person name="Xu Y."/>
            <person name="Ding C."/>
            <person name="Zhang T."/>
            <person name="Zhu X."/>
            <person name="Xu X."/>
            <person name="Min D."/>
            <person name="Cai S."/>
            <person name="Luo D."/>
            <person name="Shi Y."/>
            <person name="Shi D."/>
        </authorList>
    </citation>
    <scope>VARIANT LYNCH1 THR-931</scope>
</reference>
<reference key="98">
    <citation type="journal article" date="2004" name="Hum. Mutat.">
        <title>RNA analysis reveals splicing mutations and loss of expression defects in MLH1 and BRCA1.</title>
        <authorList>
            <person name="Sharp A."/>
            <person name="Pichert G."/>
            <person name="Lucassen A."/>
            <person name="Eccles D."/>
        </authorList>
    </citation>
    <scope>VARIANT LYNCH1 TYR-671</scope>
</reference>
<reference key="99">
    <citation type="journal article" date="2004" name="Hum. Mutat.">
        <title>Germline mutations in MLH1, MSH2 and MSH6 in Korean hereditary non-polyposis colorectal cancer families.</title>
        <authorList>
            <person name="Shin Y.-K."/>
            <person name="Heo S.-C."/>
            <person name="Shin J.-H."/>
            <person name="Hong S.-H."/>
            <person name="Ku J.-L."/>
            <person name="Yoo B.-C."/>
            <person name="Kim I.-J."/>
            <person name="Park J.-G."/>
        </authorList>
    </citation>
    <scope>VARIANTS LYNCH1 LEU-440 DEL; TYR-506; ARG-629 AND ILE-688</scope>
</reference>
<reference key="100">
    <citation type="journal article" date="2004" name="Jpn. J. Clin. Oncol.">
        <title>Genetic characterization of Chinese hereditary non-polyposis colorectal cancer by DHPLC and multiplex PCR.</title>
        <authorList>
            <person name="Yuan Y."/>
            <person name="Huang Y.-Q."/>
            <person name="Cai S.-R."/>
            <person name="Song Y.-M."/>
            <person name="Zheng S."/>
            <person name="Zhang S.-Z."/>
        </authorList>
    </citation>
    <scope>VARIANT LYNCH1 ARG-839</scope>
    <scope>VARIANT ARG-629</scope>
</reference>
<reference key="101">
    <citation type="journal article" date="2004" name="J. Med. Genet.">
        <title>BRAF screening as a low-cost effective strategy for simplifying HNPCC genetic testing.</title>
        <authorList>
            <person name="Domingo E."/>
            <person name="Laiho P."/>
            <person name="Ollikainen M."/>
            <person name="Pinto M."/>
            <person name="Wang L."/>
            <person name="French A.J."/>
            <person name="Westra J."/>
            <person name="Frebourg T."/>
            <person name="Espin E."/>
            <person name="Armengol M."/>
            <person name="Hamelin R."/>
            <person name="Yamamoto H."/>
            <person name="Hofstra R.M.W."/>
            <person name="Seruca R."/>
            <person name="Lindblom A."/>
            <person name="Peltomaeki P."/>
            <person name="Thibodeau S.N."/>
            <person name="Aaltonen L.A."/>
            <person name="Schwartz S. Jr."/>
        </authorList>
    </citation>
    <scope>VARIANTS LYNCH1 LEU-349 AND ASN-596 DEL</scope>
</reference>
<reference key="102">
    <citation type="journal article" date="2005" name="Cancer Lett.">
        <title>A novel missense germline mutation in exon 2 of the hMSH2 gene in a HNPCC family from Southern Italy.</title>
        <authorList>
            <person name="Baudi F."/>
            <person name="Fersini G."/>
            <person name="Lavecchia A."/>
            <person name="Terracciano R."/>
            <person name="Leone F."/>
            <person name="Quaresima B."/>
            <person name="Faniello M.C."/>
            <person name="De Paola L."/>
            <person name="Doldo P."/>
            <person name="Cuda G."/>
            <person name="Costanzo F."/>
            <person name="Venuta S."/>
        </authorList>
    </citation>
    <scope>VARIANT LYNCH1 PHE-93</scope>
</reference>
<reference key="103">
    <citation type="journal article" date="2005" name="Clin. Genet.">
        <title>Clinical and molecular characteristics of hereditary non-polyposis colorectal cancer families in Southeast Asia.</title>
        <authorList>
            <person name="Lee S.-C."/>
            <person name="Guo J.-Y."/>
            <person name="Lim R."/>
            <person name="Soo R."/>
            <person name="Koay E."/>
            <person name="Salto-Tellez M."/>
            <person name="Leong A."/>
            <person name="Goh B.-C."/>
        </authorList>
    </citation>
    <scope>VARIANTS LYNCH1 VAL-169; PHE-390; ALA-564 AND ARG-629</scope>
    <scope>VARIANT CRC LYS-419</scope>
</reference>
<reference key="104">
    <citation type="journal article" date="2005" name="Eur. J. Hum. Genet.">
        <title>Hereditary nonpolyposis colorectal cancer: pitfalls in deletion screening in MSH2 and MLH1 genes.</title>
        <authorList>
            <person name="Wehner M."/>
            <person name="Mangold E."/>
            <person name="Sengteller M."/>
            <person name="Friedrichs N."/>
            <person name="Aretz S."/>
            <person name="Friedl W."/>
            <person name="Propping P."/>
            <person name="Pagenstecher C."/>
        </authorList>
    </citation>
    <scope>VARIANT LYNCH1 TYR-283</scope>
</reference>
<reference key="105">
    <citation type="journal article" date="2005" name="Hum. Genet.">
        <title>Gene symbol: MSH2. Disease: hereditary nonpolyposis colorectal cancer.</title>
        <authorList>
            <person name="Kohonen-Corish M.R.J."/>
            <person name="Otway R."/>
            <person name="Tetlow N."/>
            <person name="Hornby J."/>
            <person name="Doe W.F."/>
        </authorList>
    </citation>
    <scope>VARIANT LYNCH1 ARG-162</scope>
</reference>
<reference key="106">
    <citation type="journal article" date="2006" name="Clin. Genet.">
        <title>Germline MSH2 and MLH1 mutational spectrum including large rearrangements in HNPCC families from Poland (update study).</title>
        <authorList>
            <person name="Kurzawski G."/>
            <person name="Suchy J."/>
            <person name="Lener M."/>
            <person name="Klujszo-Grabowska E."/>
            <person name="Kladny J."/>
            <person name="Safranow K."/>
            <person name="Jakubowska K."/>
            <person name="Jakubowska A."/>
            <person name="Huzarski T."/>
            <person name="Byrski T."/>
            <person name="Debniak T."/>
            <person name="Cybulski C."/>
            <person name="Gronwald J."/>
            <person name="Oszurek O."/>
            <person name="Oszutowska D."/>
            <person name="Kowalska E."/>
            <person name="Gozdz S."/>
            <person name="Niepsuj S."/>
            <person name="Slomski R."/>
            <person name="Plawski A."/>
            <person name="Lacka-Wojciechowska A."/>
            <person name="Rozmiarek A."/>
            <person name="Fiszer-Maliszewska L."/>
            <person name="Bebenek M."/>
            <person name="Sorokin D."/>
            <person name="Sasiadek M.M."/>
            <person name="Stembalska A."/>
            <person name="Grzebieniak Z."/>
            <person name="Kilar E."/>
            <person name="Stawicka M."/>
            <person name="Godlewski D."/>
            <person name="Richter P."/>
            <person name="Brozek I."/>
            <person name="Wysocka B."/>
            <person name="Limon J."/>
            <person name="Jawien A."/>
            <person name="Banaszkiewicz Z."/>
            <person name="Janiszewska H."/>
            <person name="Kowalczyk J."/>
            <person name="Czudowska D."/>
            <person name="Scott R.J."/>
            <person name="Lubinski J."/>
        </authorList>
    </citation>
    <scope>VARIANTS LYNCH1 THR-2; LEU-92 DEL; MET-145; PHE-390 AND ALA-853</scope>
    <scope>VARIANT ASP-322</scope>
</reference>
<reference key="107">
    <citation type="journal article" date="2006" name="Gastroenterology">
        <title>Pathogenicity of MSH2 missense mutations is typically associated with impaired repair capability of the mutated protein.</title>
        <authorList>
            <person name="Ollila S."/>
            <person name="Sarantaus L."/>
            <person name="Kariola R."/>
            <person name="Chan P."/>
            <person name="Hampel H."/>
            <person name="Holinski-Feder E."/>
            <person name="Macrae F."/>
            <person name="Kohonen-Corish M."/>
            <person name="Gerdes A.-M."/>
            <person name="Peltomaeki P."/>
            <person name="Mangold E."/>
            <person name="de la Chapelle A."/>
            <person name="Greenblatt M."/>
            <person name="Nystroem M."/>
        </authorList>
    </citation>
    <scope>VARIANTS LYNCH1 PRO-33; ASP-161; ARG-162; ARG-164; PRO-173; PRO-187; TYR-333; ASN-603; PRO-636; PHE-697; 745-ILE-ILE-746 DEL AND LYS-749</scope>
    <scope>VARIANTS VAL-272; THR-834 AND GLU-923</scope>
    <scope>CHARACTERIZATION OF VARIANTS LYNCH1 PRO-33; ASP-161; ARG-162; ARG-164; PRO-173; PRO-187; TYR-333; ASN-603; PRO-636; PHE-697; 745-ILE-ILE-746 DEL AND LYS-749</scope>
    <scope>CHARACTERIZATION OF VARIANTS VAL-272; THR-834 AND GLU-923</scope>
</reference>
<reference key="108">
    <citation type="journal article" date="2006" name="Hum. Genet.">
        <title>Gene symbol: msh2. Disease: hereditary nonpolyposis colorectal cancer.</title>
        <authorList>
            <person name="Leonardis D."/>
        </authorList>
    </citation>
    <scope>VARIANT LYNCH1 ALA-162</scope>
</reference>
<reference key="109">
    <citation type="journal article" date="2008" name="Gut">
        <title>A high incidence of MSH6 mutations in Amsterdam criteria II-negative families tested in a diagnostic setting.</title>
        <authorList>
            <person name="Ramsoekh D."/>
            <person name="Wagner A."/>
            <person name="van Leerdam M.E."/>
            <person name="Dinjens W.N."/>
            <person name="Steyerberg E.W."/>
            <person name="Halley D.J."/>
            <person name="Kuipers E.J."/>
            <person name="Dooijes D."/>
        </authorList>
    </citation>
    <scope>VARIANT LYNCH1 ARG-674</scope>
</reference>
<reference key="110">
    <citation type="journal article" date="2008" name="Hum. Mutat.">
        <title>Classification of ambiguous mutations in DNA mismatch repair genes identified in a population-based study of colorectal cancer.</title>
        <authorList>
            <person name="Barnetson R.A."/>
            <person name="Cartwright N."/>
            <person name="van Vliet A."/>
            <person name="Haq N."/>
            <person name="Drew K."/>
            <person name="Farrington S."/>
            <person name="Williams N."/>
            <person name="Warner J."/>
            <person name="Campbell H."/>
            <person name="Porteous M.E."/>
            <person name="Dunlop M.G."/>
        </authorList>
    </citation>
    <scope>VARIANTS GLN-46; LYS-106; ASP-322; SER-596; LEU-670; ILE-779; SER-807; HIS-835 AND ARG-911</scope>
</reference>
<reference key="111">
    <citation type="journal article" date="2008" name="Hum. Mutat.">
        <title>Mechanisms of pathogenicity in human MSH2 missense mutants.</title>
        <authorList>
            <person name="Ollila S."/>
            <person name="Dermadi Bebek D."/>
            <person name="Jiricny J."/>
            <person name="Nystroem M."/>
        </authorList>
    </citation>
    <scope>CHARACTERIZATION OF VARIANTS LYNCH1 PRO-33; SER-127; ASP-161; ARG-162; ARG-164; PRO-173; PRO-187; VAL-272; TYR-333; ASN-603; PRO-636; ALA-674; PHE-697; 745-ILE-ILE-746 DEL; LYS-749; THR-834 AND GLU-923</scope>
    <scope>CHARACTERIZATION OF VARIANT ASP-322</scope>
</reference>
<reference key="112">
    <citation type="journal article" date="2008" name="Hum. Mutat.">
        <title>A large fraction of unclassified variants of the mismatch repair genes MLH1 and MSH2 is associated with splicing defects.</title>
        <authorList>
            <person name="Tournier I."/>
            <person name="Vezain M."/>
            <person name="Martins A."/>
            <person name="Charbonnier F."/>
            <person name="Baert-Desurmont S."/>
            <person name="Olschwang S."/>
            <person name="Wang Q."/>
            <person name="Buisine M.P."/>
            <person name="Soret J."/>
            <person name="Tazi J."/>
            <person name="Frebourg T."/>
            <person name="Tosi M."/>
        </authorList>
    </citation>
    <scope>VARIANTS LYNCH1 LEU-92 DEL; ARG-199; ASP-331; GLU-470; ASN-610; GLY-638; GLU-645; LEU-696; TYR-748 AND GLN-839</scope>
    <scope>VARIANTS VAL-272; ASN-596 DEL; TYR-671; ARG-697 AND PHE-723</scope>
    <scope>CHARACTERIZATION OF VARIANTS LYNCH1 LEU-92 DEL; ARG-199; ASP-331; GLU-470; ASN-610; GLY-638; GLU-645; LEU-696; TYR-748 AND GLN-839</scope>
    <scope>CHARACTERIZATION OF VARIANTS VAL-272; ASN-596 DEL; TYR-671; ARG-697 AND PHE-723</scope>
</reference>
<reference key="113">
    <citation type="journal article" date="2008" name="Hum. Mutat.">
        <title>MSH2 missense mutations and HNPCC syndrome: pathogenicity assessment in a human expression system.</title>
        <authorList>
            <person name="Belvederesi L."/>
            <person name="Bianchi F."/>
            <person name="Galizia E."/>
            <person name="Loretelli C."/>
            <person name="Bracci R."/>
            <person name="Catalani R."/>
            <person name="Amati M."/>
            <person name="Cellerino R."/>
        </authorList>
    </citation>
    <scope>CHARACTERIZATION OF VARIANTS LYNCH1 ARG-162; HIS-167 AND SER-359</scope>
</reference>
<reference key="114">
    <citation type="journal article" date="2008" name="Mutat. Res.">
        <title>Functional analysis of HNPCC-related missense mutations in MSH2.</title>
        <authorList>
            <person name="Lutzen A."/>
            <person name="de Wind N."/>
            <person name="Georgijevic D."/>
            <person name="Nielsen F.C."/>
            <person name="Rasmussen L.J."/>
        </authorList>
    </citation>
    <scope>CHARACTERIZATION OF VARIANTS LYNCH1 HIS-167; THR-305: LEU-622; ARG-639; ARG-674; PHE-697 AND THR-834</scope>
</reference>
<reference key="115">
    <citation type="journal article" date="2012" name="Hum. Mutat.">
        <title>A rapid and cell-free assay to test the activity of lynch syndrome-associated MSH2 and MSH6 missense variants.</title>
        <authorList>
            <person name="Drost M."/>
            <person name="Zonneveld J.B."/>
            <person name="van Hees S."/>
            <person name="Rasmussen L.J."/>
            <person name="Hofstra R.M."/>
            <person name="de Wind N."/>
        </authorList>
    </citation>
    <scope>CHARACTERIZATION OF VARIANTS LYNCH1 MET-44; VAL-45; HIS-167; THR-305; PHE-390; ASN-596 DEL; ARG-639; ARG-674; PHE-697; PHE-723 AND GLY-886</scope>
    <scope>CHARACTERIZATION OF VARIANTS ASP-165; HIS-177; VAL-272; LEU-385; LEU-519; ALA-675; GLU-759; VAL-805; GLY-843 AND LEU-860</scope>
</reference>
<reference key="116">
    <citation type="journal article" date="2012" name="Hum. Mutat.">
        <title>Mismatch repair analysis of inherited MSH2 and/or MSH6 variation pairs found in cancer patients.</title>
        <authorList>
            <person name="Kantelinen J."/>
            <person name="Kansikas M."/>
            <person name="Candelin S."/>
            <person name="Hampel H."/>
            <person name="Smith B."/>
            <person name="Holm L."/>
            <person name="Kariola R."/>
            <person name="Nystrom M."/>
        </authorList>
    </citation>
    <scope>CHARACTERIZATION OF VARIANTS SER-127; MET-145; GLN-205; ASP-322; PRO-328; ILE-367; GLU-487 AND ILE-909</scope>
</reference>
<reference key="117">
    <citation type="journal article" date="2012" name="World J. Gastroenterol.">
        <title>Germline mutation analysis of MLH1 and MSH2 in Malaysian Lynch syndrome patients.</title>
        <authorList>
            <person name="Zahary M.N."/>
            <person name="Kaur G."/>
            <person name="Abu Hassan M.R."/>
            <person name="Singh H."/>
            <person name="Naik V.R."/>
            <person name="Ankathil R."/>
        </authorList>
    </citation>
    <scope>VARIANT LYNCH1 ARG-669</scope>
</reference>
<reference key="118">
    <citation type="journal article" date="2017" name="Cancer Biol. Ther.">
        <title>Functional analysis of rare variants in mismatch repair proteins augments results from computation-based predictive methods.</title>
        <authorList>
            <person name="Arora S."/>
            <person name="Huwe P.J."/>
            <person name="Sikder R."/>
            <person name="Shah M."/>
            <person name="Browne A.J."/>
            <person name="Lesh R."/>
            <person name="Nicolas E."/>
            <person name="Deshpande S."/>
            <person name="Hall M.J."/>
            <person name="Dunbrack R.L. Jr."/>
            <person name="Golemis E.A."/>
        </authorList>
    </citation>
    <scope>VARIANTS GLN-5; GLY-55; PRO-534; ILE-813 AND ARG-839</scope>
    <scope>CHARACTERIZATION OF VARIANTS GLN-5; GLY-55; PRO-534; ILE-813 AND ARG-839</scope>
</reference>
<gene>
    <name type="primary">MSH2</name>
</gene>
<keyword id="KW-0002">3D-structure</keyword>
<keyword id="KW-0007">Acetylation</keyword>
<keyword id="KW-0025">Alternative splicing</keyword>
<keyword id="KW-0067">ATP-binding</keyword>
<keyword id="KW-0158">Chromosome</keyword>
<keyword id="KW-0225">Disease variant</keyword>
<keyword id="KW-0227">DNA damage</keyword>
<keyword id="KW-0234">DNA repair</keyword>
<keyword id="KW-0238">DNA-binding</keyword>
<keyword id="KW-0362">Hereditary nonpolyposis colorectal cancer</keyword>
<keyword id="KW-1017">Isopeptide bond</keyword>
<keyword id="KW-0547">Nucleotide-binding</keyword>
<keyword id="KW-0539">Nucleus</keyword>
<keyword id="KW-0597">Phosphoprotein</keyword>
<keyword id="KW-1267">Proteomics identification</keyword>
<keyword id="KW-1185">Reference proteome</keyword>
<keyword id="KW-0043">Tumor suppressor</keyword>
<keyword id="KW-0832">Ubl conjugation</keyword>
<organism>
    <name type="scientific">Homo sapiens</name>
    <name type="common">Human</name>
    <dbReference type="NCBI Taxonomy" id="9606"/>
    <lineage>
        <taxon>Eukaryota</taxon>
        <taxon>Metazoa</taxon>
        <taxon>Chordata</taxon>
        <taxon>Craniata</taxon>
        <taxon>Vertebrata</taxon>
        <taxon>Euteleostomi</taxon>
        <taxon>Mammalia</taxon>
        <taxon>Eutheria</taxon>
        <taxon>Euarchontoglires</taxon>
        <taxon>Primates</taxon>
        <taxon>Haplorrhini</taxon>
        <taxon>Catarrhini</taxon>
        <taxon>Hominidae</taxon>
        <taxon>Homo</taxon>
    </lineage>
</organism>
<dbReference type="EMBL" id="U03911">
    <property type="protein sequence ID" value="AAA18643.1"/>
    <property type="molecule type" value="mRNA"/>
</dbReference>
<dbReference type="EMBL" id="U04045">
    <property type="protein sequence ID" value="AAA61870.1"/>
    <property type="molecule type" value="mRNA"/>
</dbReference>
<dbReference type="EMBL" id="U41221">
    <property type="protein sequence ID" value="AAA82080.1"/>
    <property type="status" value="ALT_SEQ"/>
    <property type="molecule type" value="Genomic_DNA"/>
</dbReference>
<dbReference type="EMBL" id="U41206">
    <property type="protein sequence ID" value="AAA82080.1"/>
    <property type="status" value="JOINED"/>
    <property type="molecule type" value="Genomic_DNA"/>
</dbReference>
<dbReference type="EMBL" id="U41207">
    <property type="protein sequence ID" value="AAA82080.1"/>
    <property type="status" value="JOINED"/>
    <property type="molecule type" value="Genomic_DNA"/>
</dbReference>
<dbReference type="EMBL" id="U41208">
    <property type="protein sequence ID" value="AAA82080.1"/>
    <property type="status" value="JOINED"/>
    <property type="molecule type" value="Genomic_DNA"/>
</dbReference>
<dbReference type="EMBL" id="U41210">
    <property type="protein sequence ID" value="AAA82080.1"/>
    <property type="status" value="JOINED"/>
    <property type="molecule type" value="Genomic_DNA"/>
</dbReference>
<dbReference type="EMBL" id="U41211">
    <property type="protein sequence ID" value="AAA82080.1"/>
    <property type="status" value="JOINED"/>
    <property type="molecule type" value="Genomic_DNA"/>
</dbReference>
<dbReference type="EMBL" id="U41212">
    <property type="protein sequence ID" value="AAA82080.1"/>
    <property type="status" value="JOINED"/>
    <property type="molecule type" value="Genomic_DNA"/>
</dbReference>
<dbReference type="EMBL" id="U41213">
    <property type="protein sequence ID" value="AAA82080.1"/>
    <property type="status" value="JOINED"/>
    <property type="molecule type" value="Genomic_DNA"/>
</dbReference>
<dbReference type="EMBL" id="U41214">
    <property type="protein sequence ID" value="AAA82080.1"/>
    <property type="status" value="JOINED"/>
    <property type="molecule type" value="Genomic_DNA"/>
</dbReference>
<dbReference type="EMBL" id="U41215">
    <property type="protein sequence ID" value="AAA82080.1"/>
    <property type="status" value="JOINED"/>
    <property type="molecule type" value="Genomic_DNA"/>
</dbReference>
<dbReference type="EMBL" id="U41216">
    <property type="protein sequence ID" value="AAA82080.1"/>
    <property type="status" value="JOINED"/>
    <property type="molecule type" value="Genomic_DNA"/>
</dbReference>
<dbReference type="EMBL" id="U41217">
    <property type="protein sequence ID" value="AAA82080.1"/>
    <property type="status" value="JOINED"/>
    <property type="molecule type" value="Genomic_DNA"/>
</dbReference>
<dbReference type="EMBL" id="U41218">
    <property type="protein sequence ID" value="AAA82080.1"/>
    <property type="status" value="JOINED"/>
    <property type="molecule type" value="Genomic_DNA"/>
</dbReference>
<dbReference type="EMBL" id="U41219">
    <property type="protein sequence ID" value="AAA82080.1"/>
    <property type="status" value="JOINED"/>
    <property type="molecule type" value="Genomic_DNA"/>
</dbReference>
<dbReference type="EMBL" id="U41220">
    <property type="protein sequence ID" value="AAA82080.1"/>
    <property type="status" value="JOINED"/>
    <property type="molecule type" value="Genomic_DNA"/>
</dbReference>
<dbReference type="EMBL" id="L47583">
    <property type="protein sequence ID" value="AAB59564.1"/>
    <property type="molecule type" value="mRNA"/>
</dbReference>
<dbReference type="EMBL" id="L47582">
    <property type="protein sequence ID" value="AAB59565.1"/>
    <property type="molecule type" value="mRNA"/>
</dbReference>
<dbReference type="EMBL" id="L47581">
    <property type="protein sequence ID" value="AAA76858.1"/>
    <property type="molecule type" value="mRNA"/>
</dbReference>
<dbReference type="EMBL" id="AY601851">
    <property type="protein sequence ID" value="AAS99351.1"/>
    <property type="molecule type" value="Genomic_DNA"/>
</dbReference>
<dbReference type="EMBL" id="AK304496">
    <property type="protein sequence ID" value="BAG65304.1"/>
    <property type="molecule type" value="mRNA"/>
</dbReference>
<dbReference type="EMBL" id="BX649122">
    <property type="status" value="NOT_ANNOTATED_CDS"/>
    <property type="molecule type" value="mRNA"/>
</dbReference>
<dbReference type="EMBL" id="AC079775">
    <property type="status" value="NOT_ANNOTATED_CDS"/>
    <property type="molecule type" value="Genomic_DNA"/>
</dbReference>
<dbReference type="EMBL" id="AC138655">
    <property type="status" value="NOT_ANNOTATED_CDS"/>
    <property type="molecule type" value="Genomic_DNA"/>
</dbReference>
<dbReference type="EMBL" id="BC021566">
    <property type="protein sequence ID" value="AAH21566.1"/>
    <property type="molecule type" value="mRNA"/>
</dbReference>
<dbReference type="EMBL" id="AF066081">
    <property type="protein sequence ID" value="AAC27930.1"/>
    <property type="status" value="ALT_FRAME"/>
    <property type="molecule type" value="Genomic_DNA"/>
</dbReference>
<dbReference type="CCDS" id="CCDS1834.1">
    <molecule id="P43246-1"/>
</dbReference>
<dbReference type="CCDS" id="CCDS58709.1">
    <molecule id="P43246-2"/>
</dbReference>
<dbReference type="PIR" id="I64819">
    <property type="entry name" value="I64819"/>
</dbReference>
<dbReference type="RefSeq" id="NP_000242.1">
    <molecule id="P43246-1"/>
    <property type="nucleotide sequence ID" value="NM_000251.3"/>
</dbReference>
<dbReference type="RefSeq" id="NP_001245210.1">
    <molecule id="P43246-2"/>
    <property type="nucleotide sequence ID" value="NM_001258281.1"/>
</dbReference>
<dbReference type="RefSeq" id="NP_001393570.1">
    <molecule id="P43246-1"/>
    <property type="nucleotide sequence ID" value="NM_001406641.1"/>
</dbReference>
<dbReference type="PDB" id="2O8B">
    <property type="method" value="X-ray"/>
    <property type="resolution" value="2.75 A"/>
    <property type="chains" value="A=1-934"/>
</dbReference>
<dbReference type="PDB" id="2O8C">
    <property type="method" value="X-ray"/>
    <property type="resolution" value="3.37 A"/>
    <property type="chains" value="A=1-934"/>
</dbReference>
<dbReference type="PDB" id="2O8D">
    <property type="method" value="X-ray"/>
    <property type="resolution" value="3.00 A"/>
    <property type="chains" value="A=1-934"/>
</dbReference>
<dbReference type="PDB" id="2O8E">
    <property type="method" value="X-ray"/>
    <property type="resolution" value="3.30 A"/>
    <property type="chains" value="A=1-934"/>
</dbReference>
<dbReference type="PDB" id="2O8F">
    <property type="method" value="X-ray"/>
    <property type="resolution" value="3.25 A"/>
    <property type="chains" value="A=1-934"/>
</dbReference>
<dbReference type="PDB" id="3THW">
    <property type="method" value="X-ray"/>
    <property type="resolution" value="3.09 A"/>
    <property type="chains" value="A=1-934"/>
</dbReference>
<dbReference type="PDB" id="3THX">
    <property type="method" value="X-ray"/>
    <property type="resolution" value="2.70 A"/>
    <property type="chains" value="A=1-934"/>
</dbReference>
<dbReference type="PDB" id="3THY">
    <property type="method" value="X-ray"/>
    <property type="resolution" value="2.89 A"/>
    <property type="chains" value="A=1-934"/>
</dbReference>
<dbReference type="PDB" id="3THZ">
    <property type="method" value="X-ray"/>
    <property type="resolution" value="4.30 A"/>
    <property type="chains" value="A=1-934"/>
</dbReference>
<dbReference type="PDB" id="8AG6">
    <property type="method" value="EM"/>
    <property type="resolution" value="2.80 A"/>
    <property type="chains" value="A=1-934"/>
</dbReference>
<dbReference type="PDB" id="8OLX">
    <property type="method" value="EM"/>
    <property type="resolution" value="3.10 A"/>
    <property type="chains" value="A=1-934"/>
</dbReference>
<dbReference type="PDB" id="8OM5">
    <property type="method" value="EM"/>
    <property type="resolution" value="3.52 A"/>
    <property type="chains" value="A=1-934"/>
</dbReference>
<dbReference type="PDB" id="8OM9">
    <property type="method" value="EM"/>
    <property type="resolution" value="3.32 A"/>
    <property type="chains" value="A=1-934"/>
</dbReference>
<dbReference type="PDB" id="8OMA">
    <property type="method" value="EM"/>
    <property type="resolution" value="3.29 A"/>
    <property type="chains" value="A=1-934"/>
</dbReference>
<dbReference type="PDB" id="8OMO">
    <property type="method" value="EM"/>
    <property type="resolution" value="3.43 A"/>
    <property type="chains" value="A=1-934"/>
</dbReference>
<dbReference type="PDB" id="8OMQ">
    <property type="method" value="EM"/>
    <property type="resolution" value="3.11 A"/>
    <property type="chains" value="A=1-934"/>
</dbReference>
<dbReference type="PDB" id="8R7C">
    <property type="method" value="X-ray"/>
    <property type="resolution" value="2.82 A"/>
    <property type="chains" value="A/E=1-930"/>
</dbReference>
<dbReference type="PDB" id="8R7E">
    <property type="method" value="X-ray"/>
    <property type="resolution" value="2.78 A"/>
    <property type="chains" value="A/E=1-930"/>
</dbReference>
<dbReference type="PDB" id="8R7V">
    <property type="method" value="EM"/>
    <property type="resolution" value="3.12 A"/>
    <property type="chains" value="A=1-934"/>
</dbReference>
<dbReference type="PDB" id="8RZ7">
    <property type="method" value="EM"/>
    <property type="resolution" value="3.37 A"/>
    <property type="chains" value="A=1-934"/>
</dbReference>
<dbReference type="PDB" id="8RZ8">
    <property type="method" value="EM"/>
    <property type="resolution" value="3.06 A"/>
    <property type="chains" value="A=1-934"/>
</dbReference>
<dbReference type="PDB" id="8RZ9">
    <property type="method" value="EM"/>
    <property type="resolution" value="3.02 A"/>
    <property type="chains" value="A=1-934"/>
</dbReference>
<dbReference type="PDBsum" id="2O8B"/>
<dbReference type="PDBsum" id="2O8C"/>
<dbReference type="PDBsum" id="2O8D"/>
<dbReference type="PDBsum" id="2O8E"/>
<dbReference type="PDBsum" id="2O8F"/>
<dbReference type="PDBsum" id="3THW"/>
<dbReference type="PDBsum" id="3THX"/>
<dbReference type="PDBsum" id="3THY"/>
<dbReference type="PDBsum" id="3THZ"/>
<dbReference type="PDBsum" id="8AG6"/>
<dbReference type="PDBsum" id="8OLX"/>
<dbReference type="PDBsum" id="8OM5"/>
<dbReference type="PDBsum" id="8OM9"/>
<dbReference type="PDBsum" id="8OMA"/>
<dbReference type="PDBsum" id="8OMO"/>
<dbReference type="PDBsum" id="8OMQ"/>
<dbReference type="PDBsum" id="8R7C"/>
<dbReference type="PDBsum" id="8R7E"/>
<dbReference type="PDBsum" id="8R7V"/>
<dbReference type="PDBsum" id="8RZ7"/>
<dbReference type="PDBsum" id="8RZ8"/>
<dbReference type="PDBsum" id="8RZ9"/>
<dbReference type="EMDB" id="EMD-15417"/>
<dbReference type="EMDB" id="EMD-15518"/>
<dbReference type="EMDB" id="EMD-15519"/>
<dbReference type="EMDB" id="EMD-16964"/>
<dbReference type="EMDB" id="EMD-16969"/>
<dbReference type="EMDB" id="EMD-16971"/>
<dbReference type="EMDB" id="EMD-16972"/>
<dbReference type="EMDB" id="EMD-16973"/>
<dbReference type="EMDB" id="EMD-16974"/>
<dbReference type="EMDB" id="EMD-18992"/>
<dbReference type="EMDB" id="EMD-19605"/>
<dbReference type="EMDB" id="EMD-19606"/>
<dbReference type="EMDB" id="EMD-19607"/>
<dbReference type="SMR" id="P43246"/>
<dbReference type="BioGRID" id="110573">
    <property type="interactions" value="327"/>
</dbReference>
<dbReference type="ComplexPortal" id="CPX-77">
    <property type="entry name" value="DNA mismatch repair MutSbeta complex"/>
</dbReference>
<dbReference type="ComplexPortal" id="CPX-80">
    <property type="entry name" value="DNA mismatch repair MutSalpha complex"/>
</dbReference>
<dbReference type="CORUM" id="P43246"/>
<dbReference type="DIP" id="DIP-35054N"/>
<dbReference type="FunCoup" id="P43246">
    <property type="interactions" value="3266"/>
</dbReference>
<dbReference type="IntAct" id="P43246">
    <property type="interactions" value="100"/>
</dbReference>
<dbReference type="MINT" id="P43246"/>
<dbReference type="STRING" id="9606.ENSP00000233146"/>
<dbReference type="ChEMBL" id="CHEMBL4296019"/>
<dbReference type="GlyGen" id="P43246">
    <property type="glycosylation" value="3 sites, 2 N-linked glycans (2 sites), 1 O-linked glycan (1 site)"/>
</dbReference>
<dbReference type="iPTMnet" id="P43246"/>
<dbReference type="PhosphoSitePlus" id="P43246"/>
<dbReference type="SwissPalm" id="P43246"/>
<dbReference type="BioMuta" id="MSH2"/>
<dbReference type="DMDM" id="1171032"/>
<dbReference type="jPOST" id="P43246"/>
<dbReference type="MassIVE" id="P43246"/>
<dbReference type="PaxDb" id="9606-ENSP00000233146"/>
<dbReference type="PeptideAtlas" id="P43246"/>
<dbReference type="ProteomicsDB" id="55601">
    <molecule id="P43246-1"/>
</dbReference>
<dbReference type="ProteomicsDB" id="5866"/>
<dbReference type="Pumba" id="P43246"/>
<dbReference type="Antibodypedia" id="4037">
    <property type="antibodies" value="799 antibodies from 49 providers"/>
</dbReference>
<dbReference type="CPTC" id="P43246">
    <property type="antibodies" value="1 antibody"/>
</dbReference>
<dbReference type="DNASU" id="4436"/>
<dbReference type="Ensembl" id="ENST00000233146.7">
    <molecule id="P43246-1"/>
    <property type="protein sequence ID" value="ENSP00000233146.2"/>
    <property type="gene ID" value="ENSG00000095002.16"/>
</dbReference>
<dbReference type="Ensembl" id="ENST00000543555.6">
    <molecule id="P43246-2"/>
    <property type="protein sequence ID" value="ENSP00000442697.1"/>
    <property type="gene ID" value="ENSG00000095002.16"/>
</dbReference>
<dbReference type="GeneID" id="4436"/>
<dbReference type="KEGG" id="hsa:4436"/>
<dbReference type="MANE-Select" id="ENST00000233146.7">
    <property type="protein sequence ID" value="ENSP00000233146.2"/>
    <property type="RefSeq nucleotide sequence ID" value="NM_000251.3"/>
    <property type="RefSeq protein sequence ID" value="NP_000242.1"/>
</dbReference>
<dbReference type="UCSC" id="uc002rvy.3">
    <molecule id="P43246-1"/>
    <property type="organism name" value="human"/>
</dbReference>
<dbReference type="AGR" id="HGNC:7325"/>
<dbReference type="CTD" id="4436"/>
<dbReference type="DisGeNET" id="4436"/>
<dbReference type="GeneCards" id="MSH2"/>
<dbReference type="GeneReviews" id="MSH2"/>
<dbReference type="HGNC" id="HGNC:7325">
    <property type="gene designation" value="MSH2"/>
</dbReference>
<dbReference type="HPA" id="ENSG00000095002">
    <property type="expression patterns" value="Low tissue specificity"/>
</dbReference>
<dbReference type="MalaCards" id="MSH2"/>
<dbReference type="MIM" id="114500">
    <property type="type" value="phenotype"/>
</dbReference>
<dbReference type="MIM" id="120435">
    <property type="type" value="phenotype"/>
</dbReference>
<dbReference type="MIM" id="158320">
    <property type="type" value="phenotype"/>
</dbReference>
<dbReference type="MIM" id="608089">
    <property type="type" value="phenotype"/>
</dbReference>
<dbReference type="MIM" id="609309">
    <property type="type" value="gene"/>
</dbReference>
<dbReference type="MIM" id="619096">
    <property type="type" value="phenotype"/>
</dbReference>
<dbReference type="neXtProt" id="NX_P43246"/>
<dbReference type="OpenTargets" id="ENSG00000095002"/>
<dbReference type="Orphanet" id="252202">
    <property type="disease" value="Constitutional mismatch repair deficiency syndrome"/>
</dbReference>
<dbReference type="Orphanet" id="144">
    <property type="disease" value="Lynch syndrome"/>
</dbReference>
<dbReference type="PharmGKB" id="PA31133"/>
<dbReference type="VEuPathDB" id="HostDB:ENSG00000095002"/>
<dbReference type="eggNOG" id="KOG0219">
    <property type="taxonomic scope" value="Eukaryota"/>
</dbReference>
<dbReference type="GeneTree" id="ENSGT00550000074867"/>
<dbReference type="HOGENOM" id="CLU_002472_10_0_1"/>
<dbReference type="InParanoid" id="P43246"/>
<dbReference type="OMA" id="LVRFPQK"/>
<dbReference type="OrthoDB" id="295033at2759"/>
<dbReference type="PAN-GO" id="P43246">
    <property type="GO annotations" value="5 GO annotations based on evolutionary models"/>
</dbReference>
<dbReference type="PhylomeDB" id="P43246"/>
<dbReference type="TreeFam" id="TF351780"/>
<dbReference type="PathwayCommons" id="P43246"/>
<dbReference type="Reactome" id="R-HSA-5358565">
    <property type="pathway name" value="Mismatch repair (MMR) directed by MSH2:MSH6 (MutSalpha)"/>
</dbReference>
<dbReference type="Reactome" id="R-HSA-5358606">
    <property type="pathway name" value="Mismatch repair (MMR) directed by MSH2:MSH3 (MutSbeta)"/>
</dbReference>
<dbReference type="Reactome" id="R-HSA-5632927">
    <property type="pathway name" value="Defective Mismatch Repair Associated With MSH3"/>
</dbReference>
<dbReference type="Reactome" id="R-HSA-5632928">
    <property type="pathway name" value="Defective Mismatch Repair Associated With MSH2"/>
</dbReference>
<dbReference type="Reactome" id="R-HSA-5632968">
    <property type="pathway name" value="Defective Mismatch Repair Associated With MSH6"/>
</dbReference>
<dbReference type="Reactome" id="R-HSA-6796648">
    <property type="pathway name" value="TP53 Regulates Transcription of DNA Repair Genes"/>
</dbReference>
<dbReference type="SignaLink" id="P43246"/>
<dbReference type="SIGNOR" id="P43246"/>
<dbReference type="BioGRID-ORCS" id="4436">
    <property type="hits" value="27 hits in 1168 CRISPR screens"/>
</dbReference>
<dbReference type="ChiTaRS" id="MSH2">
    <property type="organism name" value="human"/>
</dbReference>
<dbReference type="EvolutionaryTrace" id="P43246"/>
<dbReference type="GeneWiki" id="MSH2"/>
<dbReference type="GenomeRNAi" id="4436"/>
<dbReference type="Pharos" id="P43246">
    <property type="development level" value="Tbio"/>
</dbReference>
<dbReference type="PRO" id="PR:P43246"/>
<dbReference type="Proteomes" id="UP000005640">
    <property type="component" value="Chromosome 2"/>
</dbReference>
<dbReference type="RNAct" id="P43246">
    <property type="molecule type" value="protein"/>
</dbReference>
<dbReference type="Bgee" id="ENSG00000095002">
    <property type="expression patterns" value="Expressed in secondary oocyte and 194 other cell types or tissues"/>
</dbReference>
<dbReference type="ExpressionAtlas" id="P43246">
    <property type="expression patterns" value="baseline and differential"/>
</dbReference>
<dbReference type="GO" id="GO:0000781">
    <property type="term" value="C:chromosome, telomeric region"/>
    <property type="evidence" value="ECO:0007005"/>
    <property type="project" value="BHF-UCL"/>
</dbReference>
<dbReference type="GO" id="GO:0016020">
    <property type="term" value="C:membrane"/>
    <property type="evidence" value="ECO:0007005"/>
    <property type="project" value="UniProtKB"/>
</dbReference>
<dbReference type="GO" id="GO:0032301">
    <property type="term" value="C:MutSalpha complex"/>
    <property type="evidence" value="ECO:0000314"/>
    <property type="project" value="UniProtKB"/>
</dbReference>
<dbReference type="GO" id="GO:0032302">
    <property type="term" value="C:MutSbeta complex"/>
    <property type="evidence" value="ECO:0000314"/>
    <property type="project" value="HGNC-UCL"/>
</dbReference>
<dbReference type="GO" id="GO:0005654">
    <property type="term" value="C:nucleoplasm"/>
    <property type="evidence" value="ECO:0000314"/>
    <property type="project" value="HPA"/>
</dbReference>
<dbReference type="GO" id="GO:0005634">
    <property type="term" value="C:nucleus"/>
    <property type="evidence" value="ECO:0000314"/>
    <property type="project" value="UniProtKB"/>
</dbReference>
<dbReference type="GO" id="GO:0005524">
    <property type="term" value="F:ATP binding"/>
    <property type="evidence" value="ECO:0007669"/>
    <property type="project" value="UniProtKB-KW"/>
</dbReference>
<dbReference type="GO" id="GO:0016887">
    <property type="term" value="F:ATP hydrolysis activity"/>
    <property type="evidence" value="ECO:0007669"/>
    <property type="project" value="Ensembl"/>
</dbReference>
<dbReference type="GO" id="GO:0008094">
    <property type="term" value="F:ATP-dependent activity, acting on DNA"/>
    <property type="evidence" value="ECO:0000314"/>
    <property type="project" value="HGNC-UCL"/>
</dbReference>
<dbReference type="GO" id="GO:0140664">
    <property type="term" value="F:ATP-dependent DNA damage sensor activity"/>
    <property type="evidence" value="ECO:0007669"/>
    <property type="project" value="InterPro"/>
</dbReference>
<dbReference type="GO" id="GO:0019237">
    <property type="term" value="F:centromeric DNA binding"/>
    <property type="evidence" value="ECO:0007669"/>
    <property type="project" value="Ensembl"/>
</dbReference>
<dbReference type="GO" id="GO:0003682">
    <property type="term" value="F:chromatin binding"/>
    <property type="evidence" value="ECO:0000314"/>
    <property type="project" value="UniProtKB"/>
</dbReference>
<dbReference type="GO" id="GO:0003684">
    <property type="term" value="F:damaged DNA binding"/>
    <property type="evidence" value="ECO:0007669"/>
    <property type="project" value="Ensembl"/>
</dbReference>
<dbReference type="GO" id="GO:0003677">
    <property type="term" value="F:DNA binding"/>
    <property type="evidence" value="ECO:0000314"/>
    <property type="project" value="UniProtKB"/>
</dbReference>
<dbReference type="GO" id="GO:0008047">
    <property type="term" value="F:enzyme activator activity"/>
    <property type="evidence" value="ECO:0000314"/>
    <property type="project" value="BHF-UCL"/>
</dbReference>
<dbReference type="GO" id="GO:0032137">
    <property type="term" value="F:guanine/thymine mispair binding"/>
    <property type="evidence" value="ECO:0000315"/>
    <property type="project" value="MGI"/>
</dbReference>
<dbReference type="GO" id="GO:0042803">
    <property type="term" value="F:protein homodimerization activity"/>
    <property type="evidence" value="ECO:0000314"/>
    <property type="project" value="HGNC-UCL"/>
</dbReference>
<dbReference type="GO" id="GO:0030183">
    <property type="term" value="P:B cell differentiation"/>
    <property type="evidence" value="ECO:0000250"/>
    <property type="project" value="BHF-UCL"/>
</dbReference>
<dbReference type="GO" id="GO:0019724">
    <property type="term" value="P:B cell mediated immunity"/>
    <property type="evidence" value="ECO:0000250"/>
    <property type="project" value="BHF-UCL"/>
</dbReference>
<dbReference type="GO" id="GO:0008340">
    <property type="term" value="P:determination of adult lifespan"/>
    <property type="evidence" value="ECO:0007669"/>
    <property type="project" value="Ensembl"/>
</dbReference>
<dbReference type="GO" id="GO:0006281">
    <property type="term" value="P:DNA repair"/>
    <property type="evidence" value="ECO:0000314"/>
    <property type="project" value="BHF-UCL"/>
</dbReference>
<dbReference type="GO" id="GO:0006302">
    <property type="term" value="P:double-strand break repair"/>
    <property type="evidence" value="ECO:0007669"/>
    <property type="project" value="Ensembl"/>
</dbReference>
<dbReference type="GO" id="GO:0007281">
    <property type="term" value="P:germ cell development"/>
    <property type="evidence" value="ECO:0007669"/>
    <property type="project" value="Ensembl"/>
</dbReference>
<dbReference type="GO" id="GO:0001701">
    <property type="term" value="P:in utero embryonic development"/>
    <property type="evidence" value="ECO:0007669"/>
    <property type="project" value="Ensembl"/>
</dbReference>
<dbReference type="GO" id="GO:0042771">
    <property type="term" value="P:intrinsic apoptotic signaling pathway in response to DNA damage by p53 class mediator"/>
    <property type="evidence" value="ECO:0007669"/>
    <property type="project" value="Ensembl"/>
</dbReference>
<dbReference type="GO" id="GO:0045190">
    <property type="term" value="P:isotype switching"/>
    <property type="evidence" value="ECO:0000250"/>
    <property type="project" value="BHF-UCL"/>
</dbReference>
<dbReference type="GO" id="GO:0043570">
    <property type="term" value="P:maintenance of DNA repeat elements"/>
    <property type="evidence" value="ECO:0000315"/>
    <property type="project" value="HGNC-UCL"/>
</dbReference>
<dbReference type="GO" id="GO:0008584">
    <property type="term" value="P:male gonad development"/>
    <property type="evidence" value="ECO:0000250"/>
    <property type="project" value="BHF-UCL"/>
</dbReference>
<dbReference type="GO" id="GO:0006298">
    <property type="term" value="P:mismatch repair"/>
    <property type="evidence" value="ECO:0000314"/>
    <property type="project" value="UniProtKB"/>
</dbReference>
<dbReference type="GO" id="GO:0031573">
    <property type="term" value="P:mitotic intra-S DNA damage checkpoint signaling"/>
    <property type="evidence" value="ECO:0007669"/>
    <property type="project" value="Ensembl"/>
</dbReference>
<dbReference type="GO" id="GO:0006312">
    <property type="term" value="P:mitotic recombination"/>
    <property type="evidence" value="ECO:0000318"/>
    <property type="project" value="GO_Central"/>
</dbReference>
<dbReference type="GO" id="GO:0045910">
    <property type="term" value="P:negative regulation of DNA recombination"/>
    <property type="evidence" value="ECO:0000314"/>
    <property type="project" value="BHF-UCL"/>
</dbReference>
<dbReference type="GO" id="GO:0043524">
    <property type="term" value="P:negative regulation of neuron apoptotic process"/>
    <property type="evidence" value="ECO:0000250"/>
    <property type="project" value="BHF-UCL"/>
</dbReference>
<dbReference type="GO" id="GO:0006119">
    <property type="term" value="P:oxidative phosphorylation"/>
    <property type="evidence" value="ECO:0007669"/>
    <property type="project" value="Ensembl"/>
</dbReference>
<dbReference type="GO" id="GO:0048298">
    <property type="term" value="P:positive regulation of isotype switching to IgA isotypes"/>
    <property type="evidence" value="ECO:0007669"/>
    <property type="project" value="Ensembl"/>
</dbReference>
<dbReference type="GO" id="GO:0048304">
    <property type="term" value="P:positive regulation of isotype switching to IgG isotypes"/>
    <property type="evidence" value="ECO:0007669"/>
    <property type="project" value="Ensembl"/>
</dbReference>
<dbReference type="GO" id="GO:0006301">
    <property type="term" value="P:postreplication repair"/>
    <property type="evidence" value="ECO:0000314"/>
    <property type="project" value="UniProtKB"/>
</dbReference>
<dbReference type="GO" id="GO:0010224">
    <property type="term" value="P:response to UV-B"/>
    <property type="evidence" value="ECO:0000250"/>
    <property type="project" value="BHF-UCL"/>
</dbReference>
<dbReference type="GO" id="GO:0010165">
    <property type="term" value="P:response to X-ray"/>
    <property type="evidence" value="ECO:0000250"/>
    <property type="project" value="BHF-UCL"/>
</dbReference>
<dbReference type="GO" id="GO:0016446">
    <property type="term" value="P:somatic hypermutation of immunoglobulin genes"/>
    <property type="evidence" value="ECO:0007669"/>
    <property type="project" value="Ensembl"/>
</dbReference>
<dbReference type="GO" id="GO:0016447">
    <property type="term" value="P:somatic recombination of immunoglobulin gene segments"/>
    <property type="evidence" value="ECO:0000250"/>
    <property type="project" value="BHF-UCL"/>
</dbReference>
<dbReference type="GO" id="GO:0002204">
    <property type="term" value="P:somatic recombination of immunoglobulin genes involved in immune response"/>
    <property type="evidence" value="ECO:0000318"/>
    <property type="project" value="GO_Central"/>
</dbReference>
<dbReference type="CDD" id="cd03285">
    <property type="entry name" value="ABC_MSH2_euk"/>
    <property type="match status" value="1"/>
</dbReference>
<dbReference type="FunFam" id="1.10.1420.10:FF:000003">
    <property type="entry name" value="DNA mismatch repair protein"/>
    <property type="match status" value="1"/>
</dbReference>
<dbReference type="FunFam" id="1.10.1420.10:FF:000009">
    <property type="entry name" value="DNA mismatch repair protein"/>
    <property type="match status" value="1"/>
</dbReference>
<dbReference type="FunFam" id="3.30.420.110:FF:000002">
    <property type="entry name" value="DNA mismatch repair protein"/>
    <property type="match status" value="1"/>
</dbReference>
<dbReference type="FunFam" id="3.40.1170.10:FF:000003">
    <property type="entry name" value="DNA mismatch repair protein"/>
    <property type="match status" value="1"/>
</dbReference>
<dbReference type="FunFam" id="3.40.50.300:FF:000523">
    <property type="entry name" value="DNA mismatch repair protein"/>
    <property type="match status" value="1"/>
</dbReference>
<dbReference type="Gene3D" id="1.10.1420.10">
    <property type="match status" value="2"/>
</dbReference>
<dbReference type="Gene3D" id="3.40.1170.10">
    <property type="entry name" value="DNA repair protein MutS, domain I"/>
    <property type="match status" value="1"/>
</dbReference>
<dbReference type="Gene3D" id="3.30.420.110">
    <property type="entry name" value="MutS, connector domain"/>
    <property type="match status" value="1"/>
</dbReference>
<dbReference type="Gene3D" id="3.40.50.300">
    <property type="entry name" value="P-loop containing nucleotide triphosphate hydrolases"/>
    <property type="match status" value="1"/>
</dbReference>
<dbReference type="IDEAL" id="IID00048"/>
<dbReference type="InterPro" id="IPR011184">
    <property type="entry name" value="DNA_mismatch_repair_Msh2"/>
</dbReference>
<dbReference type="InterPro" id="IPR007695">
    <property type="entry name" value="DNA_mismatch_repair_MutS-lik_N"/>
</dbReference>
<dbReference type="InterPro" id="IPR000432">
    <property type="entry name" value="DNA_mismatch_repair_MutS_C"/>
</dbReference>
<dbReference type="InterPro" id="IPR007861">
    <property type="entry name" value="DNA_mismatch_repair_MutS_clamp"/>
</dbReference>
<dbReference type="InterPro" id="IPR007696">
    <property type="entry name" value="DNA_mismatch_repair_MutS_core"/>
</dbReference>
<dbReference type="InterPro" id="IPR016151">
    <property type="entry name" value="DNA_mismatch_repair_MutS_N"/>
</dbReference>
<dbReference type="InterPro" id="IPR036187">
    <property type="entry name" value="DNA_mismatch_repair_MutS_sf"/>
</dbReference>
<dbReference type="InterPro" id="IPR007860">
    <property type="entry name" value="DNA_mmatch_repair_MutS_con_dom"/>
</dbReference>
<dbReference type="InterPro" id="IPR032642">
    <property type="entry name" value="Msh2_ATP-bd"/>
</dbReference>
<dbReference type="InterPro" id="IPR045076">
    <property type="entry name" value="MutS"/>
</dbReference>
<dbReference type="InterPro" id="IPR036678">
    <property type="entry name" value="MutS_con_dom_sf"/>
</dbReference>
<dbReference type="InterPro" id="IPR027417">
    <property type="entry name" value="P-loop_NTPase"/>
</dbReference>
<dbReference type="NCBIfam" id="NF003810">
    <property type="entry name" value="PRK05399.1"/>
    <property type="match status" value="1"/>
</dbReference>
<dbReference type="PANTHER" id="PTHR11361:SF35">
    <property type="entry name" value="DNA MISMATCH REPAIR PROTEIN MSH2"/>
    <property type="match status" value="1"/>
</dbReference>
<dbReference type="PANTHER" id="PTHR11361">
    <property type="entry name" value="DNA MISMATCH REPAIR PROTEIN MUTS FAMILY MEMBER"/>
    <property type="match status" value="1"/>
</dbReference>
<dbReference type="Pfam" id="PF01624">
    <property type="entry name" value="MutS_I"/>
    <property type="match status" value="1"/>
</dbReference>
<dbReference type="Pfam" id="PF05188">
    <property type="entry name" value="MutS_II"/>
    <property type="match status" value="1"/>
</dbReference>
<dbReference type="Pfam" id="PF05192">
    <property type="entry name" value="MutS_III"/>
    <property type="match status" value="1"/>
</dbReference>
<dbReference type="Pfam" id="PF05190">
    <property type="entry name" value="MutS_IV"/>
    <property type="match status" value="1"/>
</dbReference>
<dbReference type="Pfam" id="PF00488">
    <property type="entry name" value="MutS_V"/>
    <property type="match status" value="1"/>
</dbReference>
<dbReference type="PIRSF" id="PIRSF005813">
    <property type="entry name" value="MSH2"/>
    <property type="match status" value="1"/>
</dbReference>
<dbReference type="SMART" id="SM00534">
    <property type="entry name" value="MUTSac"/>
    <property type="match status" value="1"/>
</dbReference>
<dbReference type="SMART" id="SM00533">
    <property type="entry name" value="MUTSd"/>
    <property type="match status" value="1"/>
</dbReference>
<dbReference type="SUPFAM" id="SSF48334">
    <property type="entry name" value="DNA repair protein MutS, domain III"/>
    <property type="match status" value="1"/>
</dbReference>
<dbReference type="SUPFAM" id="SSF52540">
    <property type="entry name" value="P-loop containing nucleoside triphosphate hydrolases"/>
    <property type="match status" value="1"/>
</dbReference>
<dbReference type="PROSITE" id="PS00486">
    <property type="entry name" value="DNA_MISMATCH_REPAIR_2"/>
    <property type="match status" value="1"/>
</dbReference>
<feature type="initiator methionine" description="Removed" evidence="104">
    <location>
        <position position="1"/>
    </location>
</feature>
<feature type="chain" id="PRO_0000115183" description="DNA mismatch repair protein Msh2">
    <location>
        <begin position="2"/>
        <end position="934"/>
    </location>
</feature>
<feature type="region of interest" description="Interaction with EXO1">
    <location>
        <begin position="601"/>
        <end position="671"/>
    </location>
</feature>
<feature type="binding site" evidence="2">
    <location>
        <begin position="669"/>
        <end position="676"/>
    </location>
    <ligand>
        <name>ATP</name>
        <dbReference type="ChEBI" id="CHEBI:30616"/>
    </ligand>
</feature>
<feature type="modified residue" description="N-acetylalanine" evidence="104">
    <location>
        <position position="2"/>
    </location>
</feature>
<feature type="modified residue" description="N6-acetyllysine" evidence="103">
    <location>
        <position position="555"/>
    </location>
</feature>
<feature type="modified residue" description="N6-acetyllysine" evidence="1">
    <location>
        <position position="567"/>
    </location>
</feature>
<feature type="modified residue" description="N6-acetyllysine" evidence="68">
    <location>
        <position position="845"/>
    </location>
</feature>
<feature type="modified residue" description="N6-acetyllysine" evidence="68">
    <location>
        <position position="847"/>
    </location>
</feature>
<feature type="modified residue" description="N6-acetyllysine" evidence="68">
    <location>
        <position position="871"/>
    </location>
</feature>
<feature type="modified residue" description="N6-acetyllysine" evidence="68">
    <location>
        <position position="892"/>
    </location>
</feature>
<feature type="modified residue" description="Phosphoserine" evidence="105">
    <location>
        <position position="921"/>
    </location>
</feature>
<feature type="cross-link" description="Glycyl lysine isopeptide (Lys-Gly) (interchain with G-Cter in SUMO2)" evidence="106">
    <location>
        <position position="430"/>
    </location>
</feature>
<feature type="cross-link" description="Glycyl lysine isopeptide (Lys-Gly) (interchain with G-Cter in ubiquitin)" evidence="68">
    <location>
        <position position="845"/>
    </location>
</feature>
<feature type="cross-link" description="Glycyl lysine isopeptide (Lys-Gly) (interchain with G-Cter in ubiquitin)" evidence="68">
    <location>
        <position position="847"/>
    </location>
</feature>
<feature type="cross-link" description="Glycyl lysine isopeptide (Lys-Gly) (interchain with G-Cter in ubiquitin)" evidence="68">
    <location>
        <position position="871"/>
    </location>
</feature>
<feature type="cross-link" description="Glycyl lysine isopeptide (Lys-Gly) (interchain with G-Cter in ubiquitin)" evidence="68">
    <location>
        <position position="892"/>
    </location>
</feature>
<feature type="splice variant" id="VSP_045536" description="In isoform 2." evidence="98 99">
    <location>
        <begin position="1"/>
        <end position="66"/>
    </location>
</feature>
<feature type="sequence variant" id="VAR_054511" description="In LYNCH1; likely benign; dbSNP:rs63750466." evidence="52">
    <original>A</original>
    <variation>T</variation>
    <location>
        <position position="2"/>
    </location>
</feature>
<feature type="sequence variant" id="VAR_079822" description="Decreases protein levels; dbSNP:rs56170584." evidence="70">
    <original>P</original>
    <variation>Q</variation>
    <location>
        <position position="5"/>
    </location>
</feature>
<feature type="sequence variant" id="VAR_013171" description="In dbSNP:rs17217716." evidence="13 35 97">
    <original>T</original>
    <variation>M</variation>
    <location>
        <position position="8"/>
    </location>
</feature>
<feature type="sequence variant" id="VAR_043736" description="In CRC; uncertain significance; dbSNP:rs63749907." evidence="36">
    <original>S</original>
    <variation>I</variation>
    <location>
        <position position="13"/>
    </location>
</feature>
<feature type="sequence variant" id="VAR_043737" description="In gastric cancer; uncertain significance; cryptic acceptor splice site suppressed on ex vivo splicing assay; dbSNP:rs63750966." evidence="26">
    <original>V</original>
    <variation>F</variation>
    <location>
        <position position="17"/>
    </location>
</feature>
<feature type="sequence variant" id="VAR_043738" description="In LYNCH1; decreased mismatch repair activity; dbSNP:rs63751107." evidence="53 62 64">
    <original>T</original>
    <variation>P</variation>
    <location>
        <position position="33"/>
    </location>
</feature>
<feature type="sequence variant" id="VAR_043739" description="In CRC; uncertain significance; dbSNP:rs63751260." evidence="35">
    <original>G</original>
    <variation>S</variation>
    <location>
        <position position="40"/>
    </location>
</feature>
<feature type="sequence variant" id="VAR_019233" description="In dbSNP:rs17217723." evidence="97">
    <original>Y</original>
    <variation>C</variation>
    <location>
        <position position="43"/>
    </location>
</feature>
<feature type="sequence variant" id="VAR_043740" description="In LYNCH1; uncertain significance; no decrease in mismatch repair activity; dbSNP:rs587779085." evidence="24 64 65">
    <original>T</original>
    <variation>M</variation>
    <location>
        <position position="44"/>
    </location>
</feature>
<feature type="sequence variant" id="VAR_043741" description="In LYNCH1; uncertain significance; no decrease in mismatch repair activity; dbSNP:rs63750285." evidence="24 64 65">
    <original>A</original>
    <variation>V</variation>
    <location>
        <position position="45"/>
    </location>
</feature>
<feature type="sequence variant" id="VAR_004470" description="In LYNCH1; likely benign; dbSNP:rs33946261." evidence="56 77">
    <original>H</original>
    <variation>Q</variation>
    <location>
        <position position="46"/>
    </location>
</feature>
<feature type="sequence variant" id="VAR_079823" description="Decreases protein levels; dbSNP:rs587782354." evidence="70">
    <original>R</original>
    <variation>G</variation>
    <location>
        <position position="55"/>
    </location>
</feature>
<feature type="sequence variant" id="VAR_043742" description="In LYNCH1; uncertain significance." evidence="28 52 57">
    <location>
        <position position="92"/>
    </location>
</feature>
<feature type="sequence variant" id="VAR_043743" description="In LYNCH1; dbSNP:rs63751429." evidence="48">
    <original>L</original>
    <variation>F</variation>
    <location>
        <position position="93"/>
    </location>
</feature>
<feature type="sequence variant" id="VAR_004471" description="In dbSNP:rs63750002." evidence="72">
    <original>R</original>
    <variation>H</variation>
    <location>
        <position position="96"/>
    </location>
</feature>
<feature type="sequence variant" id="VAR_043744" description="In LYNCH1; uncertain significance; dbSNP:rs63750887." evidence="26">
    <original>Y</original>
    <variation>C</variation>
    <location>
        <position position="98"/>
    </location>
</feature>
<feature type="sequence variant" id="VAR_043745" description="In LYNCH1; likely benign; dbSNP:rs193922373." evidence="27">
    <original>V</original>
    <variation>I</variation>
    <location>
        <position position="102"/>
    </location>
</feature>
<feature type="sequence variant" id="VAR_038026" description="In dbSNP:rs41295286." evidence="56">
    <original>R</original>
    <variation>K</variation>
    <location>
        <position position="106"/>
    </location>
</feature>
<feature type="sequence variant" id="VAR_043746" description="In LYNCH1; somatic mutation." evidence="87">
    <original>K</original>
    <variation>T</variation>
    <location>
        <position position="110"/>
    </location>
</feature>
<feature type="sequence variant" id="VAR_019234" description="In LYNCH1; benign; presumed to enhance cancer risk considerably when associated with P-328; shows significantly decreased repair efficiency when associated with variant P-328; dbSNP:rs17217772." evidence="32 62 64 67 97">
    <original>N</original>
    <variation>S</variation>
    <location>
        <position position="127"/>
    </location>
</feature>
<feature type="sequence variant" id="VAR_004472" description="In LYNCH1; dbSNP:rs1553350676.">
    <original>N</original>
    <variation>S</variation>
    <location>
        <position position="139"/>
    </location>
</feature>
<feature type="sequence variant" id="VAR_004473" description="In LYNCH1; uncertain significance; normal mismatch repair activity; dbSNP:rs63750124." evidence="52 64 67">
    <original>I</original>
    <variation>M</variation>
    <location>
        <position position="145"/>
    </location>
</feature>
<feature type="sequence variant" id="VAR_012936" description="In LYNCH1; decreased mismatch repair activity; affects protein stability; loss of protein expression; dbSNP:rs63750126." evidence="20 53 62 64">
    <original>V</original>
    <variation>D</variation>
    <location>
        <position position="161"/>
    </location>
</feature>
<feature type="sequence variant" id="VAR_054512" description="In LYNCH1; dbSNP:rs63750773." evidence="54">
    <original>G</original>
    <variation>A</variation>
    <location>
        <position position="162"/>
    </location>
</feature>
<feature type="sequence variant" id="VAR_043747" description="In LYNCH1; decreased mismatch repair activity; associated with an abnormal subcellular localization pattern; affects protein stability; loss of protein expression; dbSNP:rs63750624." evidence="49 53 60 62 64">
    <original>G</original>
    <variation>R</variation>
    <location>
        <position position="162"/>
    </location>
</feature>
<feature type="sequence variant" id="VAR_043748" description="In LYNCH1; dbSNP:rs63750214." evidence="27">
    <original>V</original>
    <variation>D</variation>
    <location>
        <position position="163"/>
    </location>
</feature>
<feature type="sequence variant" id="VAR_022670" description="In LYNCH1; dbSNP:rs63750214." evidence="37">
    <original>V</original>
    <variation>G</variation>
    <location>
        <position position="163"/>
    </location>
</feature>
<feature type="sequence variant" id="VAR_043749" description="In LYNCH1; decreased mismatch repair activity; affects protein stability; loss of protein expression; dbSNP:rs63750582." evidence="53 62 64">
    <original>G</original>
    <variation>R</variation>
    <location>
        <position position="164"/>
    </location>
</feature>
<feature type="sequence variant" id="VAR_067284" description="In LYNCH1; decreased mismatch repair activity; dbSNP:rs587779163." evidence="65">
    <original>Y</original>
    <variation>D</variation>
    <location>
        <position position="165"/>
    </location>
</feature>
<feature type="sequence variant" id="VAR_004474" description="In LYNCH1; benign; shows reduced mismatch binding; does not show a decreased expression level of the MutS alpha complex; not associated with an abnormal subcellular localization pattern; normal mismatch repair activity; dbSNP:rs63750255." evidence="22 25 60 61 65 79">
    <original>D</original>
    <variation>H</variation>
    <location>
        <position position="167"/>
    </location>
</feature>
<feature type="sequence variant" id="VAR_043750" description="In LYNCH1 and CRC; likely benign; dbSNP:rs63750716." evidence="35 50">
    <original>I</original>
    <variation>V</variation>
    <location>
        <position position="169"/>
    </location>
</feature>
<feature type="sequence variant" id="VAR_043751" description="In LYNCH1; decreased mismatch repair activity; affects protein stability; loss of protein expression; dbSNP:rs63750070." evidence="53 62 64">
    <original>L</original>
    <variation>P</variation>
    <location>
        <position position="173"/>
    </location>
</feature>
<feature type="sequence variant" id="VAR_043752" description="In LYNCH1; dbSNP:rs63751291." evidence="33">
    <original>L</original>
    <variation>P</variation>
    <location>
        <position position="175"/>
    </location>
</feature>
<feature type="sequence variant" id="VAR_067285" description="In LYNCH1; uncertain significance; normal mismatch repair activity; requires 2 nucleotide substitutions." evidence="65">
    <original>E</original>
    <variation>H</variation>
    <location>
        <position position="177"/>
    </location>
</feature>
<feature type="sequence variant" id="VAR_043753" description="In LYNCH1; decreased mismatch repair activity; affects protein stability; loss of protein expression; dbSNP:rs63751444." evidence="53 62 64">
    <original>L</original>
    <variation>P</variation>
    <location>
        <position position="187"/>
    </location>
</feature>
<feature type="sequence variant" id="VAR_076352" description="In LYNCH1; decreased mismatch repair activity; loss of protein expression; dbSNP:rs63751444." evidence="64">
    <original>L</original>
    <variation>R</variation>
    <location>
        <position position="187"/>
    </location>
</feature>
<feature type="sequence variant" id="VAR_054513" description="In dbSNP:rs63750327.">
    <original>E</original>
    <variation>G</variation>
    <location>
        <position position="198"/>
    </location>
</feature>
<feature type="sequence variant" id="VAR_012937" description="In LYNCH1; also found in a patient with glioma; no effect on MSH2 splicing; dbSNP:rs63751110." evidence="57 92">
    <original>C</original>
    <variation>R</variation>
    <location>
        <position position="199"/>
    </location>
</feature>
<feature type="sequence variant" id="VAR_043754" description="In CRC; uncertain significance; somatic mutation; dbSNP:rs587779973." evidence="35">
    <original>G</original>
    <variation>R</variation>
    <location>
        <position position="203"/>
    </location>
</feature>
<feature type="sequence variant" id="VAR_068705" description="Shows no defects; normal mismatch repair activity; dbSNP:rs63749984." evidence="67">
    <original>E</original>
    <variation>Q</variation>
    <location>
        <position position="205"/>
    </location>
</feature>
<feature type="sequence variant" id="VAR_012938" description="In LYNCH1; uncertain significance; shows slightly reduced mismatch binding or release efficiency; dbSNP:rs63749936." evidence="20">
    <original>I</original>
    <variation>V</variation>
    <location>
        <position position="216"/>
    </location>
</feature>
<feature type="sequence variant" id="VAR_043755" description="In LYNCH1; uncertain significance; dbSNP:rs63750881." evidence="9">
    <original>K</original>
    <variation>Q</variation>
    <location>
        <position position="246"/>
    </location>
</feature>
<feature type="sequence variant" id="VAR_004475" description="In LYNCH1." evidence="91">
    <location>
        <begin position="265"/>
        <end position="314"/>
    </location>
</feature>
<feature type="sequence variant" id="VAR_043756" description="In LYNCH1; benign; shows slightly reduced mismatch binding or release efficiency; results in partial MSH2 exon 5 skipping; normal mismatch repair activity; dbSNP:rs34136999." evidence="53 57 62 64 65">
    <original>A</original>
    <variation>V</variation>
    <location>
        <position position="272"/>
    </location>
</feature>
<feature type="sequence variant" id="VAR_043757" description="In LYNCH1; dbSNP:rs63750381." evidence="47">
    <original>D</original>
    <variation>Y</variation>
    <location>
        <position position="283"/>
    </location>
</feature>
<feature type="sequence variant" id="VAR_004476" description="In LYNCH1; normal mismatch repair activity; dbSNP:rs63751454." evidence="65 86">
    <original>A</original>
    <variation>T</variation>
    <location>
        <position position="305"/>
    </location>
</feature>
<feature type="sequence variant" id="VAR_004477" description="In dbSNP:rs4987188." evidence="3 7 9 12 15 19 21 27 28 36 52 56 62 64 67 75 83 85 97">
    <original>G</original>
    <variation>D</variation>
    <location>
        <position position="322"/>
    </location>
</feature>
<feature type="sequence variant" id="VAR_012939" description="In LYNCH1; uncertain significance; dbSNP:rs63750732." evidence="84">
    <original>S</original>
    <variation>C</variation>
    <location>
        <position position="323"/>
    </location>
</feature>
<feature type="sequence variant" id="VAR_043758" description="In LYNCH1; uncertain significance; dbSNP:rs63750732." evidence="26">
    <original>S</original>
    <variation>Y</variation>
    <location>
        <position position="323"/>
    </location>
</feature>
<feature type="sequence variant" id="VAR_068706" description="Shows significantly decreased repair efficiency when associated with variant S-127; presumed to enhance cancer risk considerably when associated with variant S-127; dbSNP:rs753237286." evidence="67">
    <original>A</original>
    <variation>P</variation>
    <location>
        <position position="328"/>
    </location>
</feature>
<feature type="sequence variant" id="VAR_054514" description="In LYNCH1; uncertain significance; no effect on MSH2 splicing; dbSNP:rs267607938." evidence="57">
    <original>N</original>
    <variation>D</variation>
    <location>
        <position position="331"/>
    </location>
</feature>
<feature type="sequence variant" id="VAR_043759" description="In LYNCH1; decreased mismatch repair activity; affects protein stability; loss of protein expression; dbSNP:rs63750828." evidence="53 62 64">
    <original>C</original>
    <variation>Y</variation>
    <location>
        <position position="333"/>
    </location>
</feature>
<feature type="sequence variant" id="VAR_043760" description="In LYNCH1; uncertain significance; dbSNP:rs63750602." evidence="26">
    <original>T</original>
    <variation>I</variation>
    <location>
        <position position="335"/>
    </location>
</feature>
<feature type="sequence variant" id="VAR_043761" description="In LYNCH1; dbSNP:rs63751062." evidence="5">
    <original>P</original>
    <variation>S</variation>
    <location>
        <position position="336"/>
    </location>
</feature>
<feature type="sequence variant" id="VAR_043762" description="In CRC; uncertain significance; dbSNP:rs63749879." evidence="36">
    <original>V</original>
    <variation>I</variation>
    <location>
        <position position="342"/>
    </location>
</feature>
<feature type="sequence variant" id="VAR_043763" description="In LYNCH1; dbSNP:rs587779067." evidence="43">
    <original>P</original>
    <variation>L</variation>
    <location>
        <position position="349"/>
    </location>
</feature>
<feature type="sequence variant" id="VAR_043764" description="In LYNCH1; shows a decreased expression level of the MutS alpha complex; associated with an abnormal subcellular localization pattern; dbSNP:rs63751617." evidence="22 60">
    <original>R</original>
    <variation>S</variation>
    <location>
        <position position="359"/>
    </location>
</feature>
<feature type="sequence variant" id="VAR_068707" description="Shows no defects; normal mismatch repair activity; dbSNP:rs80285180." evidence="67">
    <original>V</original>
    <variation>I</variation>
    <location>
        <position position="367"/>
    </location>
</feature>
<feature type="sequence variant" id="VAR_067286" description="In LYNCH1; uncertain significance; normal mismatch repair activity; dbSNP:rs564736113." evidence="65">
    <original>P</original>
    <variation>L</variation>
    <location>
        <position position="385"/>
    </location>
</feature>
<feature type="sequence variant" id="VAR_004478" description="In LYNCH1 and CRC; benign; may decrease mismatch repair activity; dbSNP:rs17224367." evidence="6 7 35 50 52 65 76 90 97">
    <original>L</original>
    <variation>F</variation>
    <location>
        <position position="390"/>
    </location>
</feature>
<feature type="sequence variant" id="VAR_043765" description="In LYNCH1; dbSNP:rs1558478490." evidence="25">
    <original>K</original>
    <variation>M</variation>
    <location>
        <position position="393"/>
    </location>
</feature>
<feature type="sequence variant" id="VAR_012940" description="In CRC; likely benign; decreased mismatch repair activity; dbSNP:rs63750006." evidence="7 35 50 76">
    <original>Q</original>
    <variation>K</variation>
    <location>
        <position position="419"/>
    </location>
</feature>
<feature type="sequence variant" id="VAR_043766" description="In LYNCH1." evidence="44">
    <location>
        <position position="440"/>
    </location>
</feature>
<feature type="sequence variant" id="VAR_054515" description="In LYNCH1; has no effect on ex vivo splicing assay; dbSNP:rs267607959." evidence="57">
    <original>V</original>
    <variation>E</variation>
    <location>
        <position position="470"/>
    </location>
</feature>
<feature type="sequence variant" id="VAR_068708" description="Decreased mismatch repair activity; dbSNP:rs35107951." evidence="67">
    <original>D</original>
    <variation>E</variation>
    <location>
        <position position="487"/>
    </location>
</feature>
<feature type="sequence variant" id="VAR_043767" description="In LYNCH1.">
    <original>M</original>
    <variation>V</variation>
    <location>
        <position position="492"/>
    </location>
</feature>
<feature type="sequence variant" id="VAR_012941" description="In LYNCH1 and CRC; sporadic early-onset CRC; decreased mismatch repair activity; dbSNP:rs63750492." evidence="7 44 78 88">
    <original>D</original>
    <variation>Y</variation>
    <location>
        <position position="506"/>
    </location>
</feature>
<feature type="sequence variant" id="VAR_067287" description="In LYNCH1; uncertain significance; normal mismatch repair activity; dbSNP:rs1371291280." evidence="64 65">
    <original>F</original>
    <variation>L</variation>
    <location>
        <position position="519"/>
    </location>
</feature>
<feature type="sequence variant" id="VAR_004479" description="In LYNCH1; decreased mismatch repair activity; dbSNP:rs63751207." evidence="7 25 96">
    <original>R</original>
    <variation>P</variation>
    <location>
        <position position="524"/>
    </location>
</feature>
<feature type="sequence variant" id="VAR_079824" description="No effect on protein levels; dbSNP:rs587778523." evidence="70">
    <original>R</original>
    <variation>P</variation>
    <location>
        <position position="534"/>
    </location>
</feature>
<feature type="sequence variant" id="VAR_043768" description="In LYNCH1; dbSNP:rs63750838." evidence="34">
    <original>T</original>
    <variation>P</variation>
    <location>
        <position position="552"/>
    </location>
</feature>
<feature type="sequence variant" id="VAR_012942" description="In LYNCH1; uncertain significance; dbSNP:rs63751656." evidence="20">
    <original>S</original>
    <variation>R</variation>
    <location>
        <position position="554"/>
    </location>
</feature>
<feature type="sequence variant" id="VAR_004480" description="In LYNCH1; dbSNP:rs63750997." evidence="82">
    <original>E</original>
    <variation>V</variation>
    <location>
        <position position="562"/>
    </location>
</feature>
<feature type="sequence variant" id="VAR_043769" description="In LYNCH1; benign; dbSNP:rs55778204." evidence="27 50">
    <original>T</original>
    <variation>A</variation>
    <location>
        <position position="564"/>
    </location>
</feature>
<feature type="sequence variant" id="VAR_043770" description="In LYNCH1; dbSNP:rs201118107." evidence="34">
    <original>N</original>
    <variation>S</variation>
    <location>
        <position position="583"/>
    </location>
</feature>
<feature type="sequence variant" id="VAR_012943" description="In LYNCH1; uncertain significance; dbSNP:rs41295288." evidence="9 56 81">
    <original>N</original>
    <variation>S</variation>
    <location>
        <position position="596"/>
    </location>
</feature>
<feature type="sequence variant" id="VAR_004481" description="In LYNCH1; decreased mismatch repair activity; has no effect on MSH2 splicing; dbSNP:rs63749831." evidence="5 24 25 43 57 65 73 79 86">
    <location>
        <position position="596"/>
    </location>
</feature>
<feature type="sequence variant" id="VAR_043771" description="In LYNCH1; dbSNP:rs63751236." evidence="23">
    <original>A</original>
    <variation>V</variation>
    <location>
        <position position="600"/>
    </location>
</feature>
<feature type="sequence variant" id="VAR_043772" description="In LYNCH1; uncertain significance; decreased mismatch repair activity; affects protein stability; loss of protein expression; dbSNP:rs63750657." evidence="15 53 62 64">
    <original>D</original>
    <variation>N</variation>
    <location>
        <position position="603"/>
    </location>
</feature>
<feature type="sequence variant" id="VAR_054516" description="In LYNCH1; has no effect on MSH2 splicing; dbSNP:rs267607980." evidence="57">
    <original>H</original>
    <variation>N</variation>
    <location>
        <position position="610"/>
    </location>
</feature>
<feature type="sequence variant" id="VAR_043773" description="In CRC; uncertain significance; dbSNP:rs63749982." evidence="35">
    <original>Y</original>
    <variation>C</variation>
    <location>
        <position position="619"/>
    </location>
</feature>
<feature type="sequence variant" id="VAR_004482" description="In LYNCH1; decreased mismatch repair activity; confers multiple biochemical defects; dbSNP:rs28929483." evidence="7 19 25 61 74">
    <original>P</original>
    <variation>L</variation>
    <location>
        <position position="622"/>
    </location>
</feature>
<feature type="sequence variant" id="VAR_043774" description="In LYNCH1; benign; dbSNP:rs61756468." evidence="26 35 44 45 50">
    <original>Q</original>
    <variation>R</variation>
    <location>
        <position position="629"/>
    </location>
</feature>
<feature type="sequence variant" id="VAR_012944" description="In LYNCH1; decreased mismatch binding activity; dbSNP:rs63750875." evidence="8 34 53 62 64">
    <original>A</original>
    <variation>P</variation>
    <location>
        <position position="636"/>
    </location>
</feature>
<feature type="sequence variant" id="VAR_054517" description="In LYNCH1; has no effect on MSH2 splicing; dbSNP:rs267607981." evidence="57">
    <original>R</original>
    <variation>G</variation>
    <location>
        <position position="638"/>
    </location>
</feature>
<feature type="sequence variant" id="VAR_043775" description="In LYNCH1; decreased mismatch repair activity; dbSNP:rs587779116." evidence="61 65 87">
    <original>H</original>
    <variation>R</variation>
    <location>
        <position position="639"/>
    </location>
</feature>
<feature type="sequence variant" id="VAR_004483" description="In LYNCH1; the equivalent substitution in yeast does not affect mismatch repair efficiency in vitro; dbSNP:rs28929484." evidence="19 74">
    <original>H</original>
    <variation>Y</variation>
    <location>
        <position position="639"/>
    </location>
</feature>
<feature type="sequence variant" id="VAR_004484" description="In dbSNP:rs63749946." evidence="91">
    <original>C</original>
    <variation>G</variation>
    <location>
        <position position="641"/>
    </location>
</feature>
<feature type="sequence variant" id="VAR_054518" description="In LYNCH1; has no effect on MSH2 splicing; dbSNP:rs267607982." evidence="57">
    <original>Q</original>
    <variation>E</variation>
    <location>
        <position position="645"/>
    </location>
</feature>
<feature type="sequence variant" id="VAR_043776" description="In LYNCH1." evidence="87">
    <original>E</original>
    <variation>K</variation>
    <location>
        <position position="647"/>
    </location>
</feature>
<feature type="sequence variant" id="VAR_043777" description="In LYNCH1; somatic mutation; dbSNP:rs1573567393." evidence="87">
    <original>Y</original>
    <variation>H</variation>
    <location>
        <position position="656"/>
    </location>
</feature>
<feature type="sequence variant" id="VAR_022671" description="In LYNCH1; dbSNP:rs1085308057." evidence="37">
    <original>D</original>
    <variation>G</variation>
    <location>
        <position position="660"/>
    </location>
</feature>
<feature type="sequence variant" id="VAR_067761" description="In LYNCH1; uncertain significance; dbSNP:rs63751668." evidence="66">
    <original>G</original>
    <variation>R</variation>
    <location>
        <position position="669"/>
    </location>
</feature>
<feature type="sequence variant" id="VAR_038027" description="In dbSNP:rs41294982." evidence="56">
    <original>P</original>
    <variation>L</variation>
    <location>
        <position position="670"/>
    </location>
</feature>
<feature type="sequence variant" id="VAR_043778" description="In LYNCH1; uncertain significance; dbSNP:rs63751232." evidence="42 57">
    <original>N</original>
    <variation>Y</variation>
    <location>
        <position position="671"/>
    </location>
</feature>
<feature type="sequence variant" id="VAR_076353" description="In LYNCH1; decreased mismatch repair activity; dbSNP:rs267607996." evidence="62 64">
    <original>G</original>
    <variation>A</variation>
    <location>
        <position position="674"/>
    </location>
</feature>
<feature type="sequence variant" id="VAR_067288" description="In LYNCH1; decreased mismatch repair activity; dbSNP:rs63750234." evidence="58 61 65">
    <original>G</original>
    <variation>R</variation>
    <location>
        <position position="674"/>
    </location>
</feature>
<feature type="sequence variant" id="VAR_004485" description="In LYNCH1; somatic mutation; dbSNP:rs63750234." evidence="25">
    <original>G</original>
    <variation>S</variation>
    <location>
        <position position="674"/>
    </location>
</feature>
<feature type="sequence variant" id="VAR_067289" description="In LYNCH1; uncertain significance; decreased mismatch repair activity; requires 2 nucleotide substitutions; dbSNP:rs587779128." evidence="65">
    <original>K</original>
    <variation>A</variation>
    <location>
        <position position="675"/>
    </location>
</feature>
<feature type="sequence variant" id="VAR_043779" description="In LYNCH1; somatic mutation." evidence="87">
    <original>I</original>
    <variation>T</variation>
    <location>
        <position position="679"/>
    </location>
</feature>
<feature type="sequence variant" id="VAR_012945" description="In LYNCH1; dbSNP:rs63750790." evidence="13 44 88">
    <original>M</original>
    <variation>I</variation>
    <location>
        <position position="688"/>
    </location>
</feature>
<feature type="sequence variant" id="VAR_076354" description="In LYNCH1; loss of protein expression; dbSNP:rs1573569964." evidence="64">
    <original>M</original>
    <variation>V</variation>
    <location>
        <position position="688"/>
    </location>
</feature>
<feature type="sequence variant" id="VAR_009250" description="In LYNCH1; dbSNP:rs63750232." evidence="10">
    <original>G</original>
    <variation>R</variation>
    <location>
        <position position="692"/>
    </location>
</feature>
<feature type="sequence variant" id="VAR_054519" description="In LYNCH1; has no effect on ex vivo splicing assay; dbSNP:rs267607994." evidence="57">
    <original>P</original>
    <variation>L</variation>
    <location>
        <position position="696"/>
    </location>
</feature>
<feature type="sequence variant" id="VAR_004486" description="In LYNCH1; decreased mismatch repair activity; loss of protein expression; confers multiple biochemical defects; dbSNP:rs63750398." evidence="7 53 61 62 64 65 85">
    <original>C</original>
    <variation>F</variation>
    <location>
        <position position="697"/>
    </location>
</feature>
<feature type="sequence variant" id="VAR_009251" description="In LYNCH1; has no effect on MSH2 splicing; dbSNP:rs63750961." evidence="10 57">
    <original>C</original>
    <variation>R</variation>
    <location>
        <position position="697"/>
    </location>
</feature>
<feature type="sequence variant" id="VAR_043780" description="In LYNCH1; uncertain significance; dbSNP:rs63751224." evidence="26">
    <original>A</original>
    <variation>V</variation>
    <location>
        <position position="714"/>
    </location>
</feature>
<feature type="sequence variant" id="VAR_076355" description="In LYNCH1; dbSNP:rs587781996." evidence="64">
    <original>V</original>
    <variation>I</variation>
    <location>
        <position position="722"/>
    </location>
</feature>
<feature type="sequence variant" id="VAR_043781" description="In LYNCH1; decreased mismatch repair activity; has no effect on MSH2 splicing; dbSNP:rs63750794." evidence="23 57 65">
    <original>S</original>
    <variation>F</variation>
    <location>
        <position position="723"/>
    </location>
</feature>
<feature type="sequence variant" id="VAR_043782" description="In LYNCH1; somatic mutation; dbSNP:rs1558520059." evidence="87">
    <original>M</original>
    <variation>V</variation>
    <location>
        <position position="729"/>
    </location>
</feature>
<feature type="sequence variant" id="VAR_043783" description="In LYNCH1; somatic mutation; dbSNP:rs730881765." evidence="87">
    <original>T</original>
    <variation>I</variation>
    <location>
        <position position="732"/>
    </location>
</feature>
<feature type="sequence variant" id="VAR_043784" description="In LYNCH1; decreased mismatch repair activity." evidence="53 62 64">
    <location>
        <begin position="745"/>
        <end position="746"/>
    </location>
</feature>
<feature type="sequence variant" id="VAR_054520" description="In LYNCH1; has no effect on MSH2 splicing; dbSNP:rs267608007." evidence="57">
    <original>D</original>
    <variation>Y</variation>
    <location>
        <position position="748"/>
    </location>
</feature>
<feature type="sequence variant" id="VAR_043785" description="In LYNCH1; decreased mismatch repair activity; no loss of protein expression; dbSNP:rs63751477." evidence="53 62 64">
    <original>E</original>
    <variation>K</variation>
    <location>
        <position position="749"/>
    </location>
</feature>
<feature type="sequence variant" id="VAR_067290" description="In LYNCH1; uncertain significance; decreased mismatch repair activity; dbSNP:rs386833406." evidence="65">
    <original>G</original>
    <variation>E</variation>
    <location>
        <position position="759"/>
    </location>
</feature>
<feature type="sequence variant" id="VAR_004487" description="In dbSNP:rs63750684." evidence="91">
    <original>I</original>
    <variation>V</variation>
    <location>
        <position position="770"/>
    </location>
</feature>
<feature type="sequence variant" id="VAR_038028" description="In dbSNP:rs41295292." evidence="56">
    <original>M</original>
    <variation>I</variation>
    <location>
        <position position="779"/>
    </location>
</feature>
<feature type="sequence variant" id="VAR_067291" description="In LYNCH1; uncertain significance; normal mismatch repair activity; dbSNP:rs779182536." evidence="65">
    <original>L</original>
    <variation>V</variation>
    <location>
        <position position="805"/>
    </location>
</feature>
<feature type="sequence variant" id="VAR_038029" description="In dbSNP:rs41295294." evidence="56">
    <original>T</original>
    <variation>S</variation>
    <location>
        <position position="807"/>
    </location>
</feature>
<feature type="sequence variant" id="VAR_079825" description="No effect on protein levels; dbSNP:rs587781678." evidence="70">
    <original>M</original>
    <variation>I</variation>
    <location>
        <position position="813"/>
    </location>
</feature>
<feature type="sequence variant" id="VAR_043786" description="In LYNCH1; uncertain significance; dbSNP:rs63749841." evidence="29">
    <original>M</original>
    <variation>V</variation>
    <location>
        <position position="813"/>
    </location>
</feature>
<feature type="sequence variant" id="VAR_043787" description="In gastric cancer; uncertain significance; dbSNP:rs63750623." evidence="26">
    <original>Q</original>
    <variation>E</variation>
    <location>
        <position position="824"/>
    </location>
</feature>
<feature type="sequence variant" id="VAR_004488" description="In LYNCH1; likely benign; decreased mismatch repair activity; shows no functional defects in gel shift assay; dbSNP:rs63750757." evidence="9 53 61 62 64 86">
    <original>A</original>
    <variation>T</variation>
    <location>
        <position position="834"/>
    </location>
</feature>
<feature type="sequence variant" id="VAR_038030" description="In dbSNP:rs41295296." evidence="56">
    <original>N</original>
    <variation>H</variation>
    <location>
        <position position="835"/>
    </location>
</feature>
<feature type="sequence variant" id="VAR_054521" description="In LYNCH1; has no effect on MSH2 splicing; dbSNP:rs267608016." evidence="57">
    <original>H</original>
    <variation>Q</variation>
    <location>
        <position position="839"/>
    </location>
</feature>
<feature type="sequence variant" id="VAR_043788" description="In LYNCH1; decreases protein levels; dbSNP:rs63750027." evidence="45 70">
    <original>H</original>
    <variation>R</variation>
    <location>
        <position position="839"/>
    </location>
</feature>
<feature type="sequence variant" id="VAR_067292" description="In LYNCH1; uncertain significance; normal mismatch repair activity; dbSNP:rs1667495338." evidence="65">
    <original>C</original>
    <variation>G</variation>
    <location>
        <position position="843"/>
    </location>
</feature>
<feature type="sequence variant" id="VAR_013172" description="In LYNCH1; dbSNP:rs63750571." evidence="13">
    <original>K</original>
    <variation>E</variation>
    <location>
        <position position="845"/>
    </location>
</feature>
<feature type="sequence variant" id="VAR_043789" description="In LYNCH1; uncertain significance; dbSNP:rs63750797." evidence="28 52">
    <original>E</original>
    <variation>A</variation>
    <location>
        <position position="853"/>
    </location>
</feature>
<feature type="sequence variant" id="VAR_067293" description="In LYNCH1; likely benign; normal mismatch repair activity; dbSNP:rs63750849." evidence="65">
    <original>S</original>
    <variation>L</variation>
    <location>
        <position position="860"/>
    </location>
</feature>
<feature type="sequence variant" id="VAR_043790" description="In gastric cancer; uncertain significance; dbSNP:rs63751400." evidence="26">
    <original>P</original>
    <variation>A</variation>
    <location>
        <position position="868"/>
    </location>
</feature>
<feature type="sequence variant" id="VAR_043791" description="In gastric cancer; uncertain significance; dbSNP:rs63750709." evidence="26">
    <original>A</original>
    <variation>G</variation>
    <location>
        <position position="870"/>
    </location>
</feature>
<feature type="sequence variant" id="VAR_043792" description="In gastric cancer; uncertain significance; dbSNP:rs63750795." evidence="26">
    <original>C</original>
    <variation>G</variation>
    <location>
        <position position="873"/>
    </location>
</feature>
<feature type="sequence variant" id="VAR_043793" description="In LYNCH1; uncertain significance; normal mismatch repair activity; dbSNP:rs63750350." evidence="24 64 65">
    <original>E</original>
    <variation>G</variation>
    <location>
        <position position="886"/>
    </location>
</feature>
<feature type="sequence variant" id="VAR_004489" description="In LYNCH1; likely benign; dbSNP:rs267608022." evidence="25">
    <original>T</original>
    <variation>R</variation>
    <location>
        <position position="905"/>
    </location>
</feature>
<feature type="sequence variant" id="VAR_068709" description="Found in a colorectal cancer sample; normal mismatch repair activity; dbSNP:rs34319539." evidence="67">
    <original>K</original>
    <variation>I</variation>
    <location>
        <position position="909"/>
    </location>
</feature>
<feature type="sequence variant" id="VAR_038031" description="In dbSNP:rs41295182." evidence="56">
    <original>L</original>
    <variation>R</variation>
    <location>
        <position position="911"/>
    </location>
</feature>
<feature type="sequence variant" id="VAR_043794" description="In LYNCH1; uncertain significance; dbSNP:rs146421227." evidence="24 53 62 64">
    <original>V</original>
    <variation>E</variation>
    <location>
        <position position="923"/>
    </location>
</feature>
<feature type="sequence variant" id="VAR_043795" description="In LYNCH1; dbSNP:rs267608023." evidence="40">
    <original>K</original>
    <variation>T</variation>
    <location>
        <position position="931"/>
    </location>
</feature>
<feature type="mutagenesis site" description="No effect on mismatch binding, complete loss of DNA repair function when associated with MSH6 mutant R-1140." evidence="89">
    <original>K</original>
    <variation>R</variation>
    <location>
        <position position="675"/>
    </location>
</feature>
<feature type="mutagenesis site" description="Reduces interaction with MSH6. Reduces acetylation; when associated with R-847, R-871 and R-892." evidence="68">
    <original>K</original>
    <variation>R</variation>
    <location>
        <position position="845"/>
    </location>
</feature>
<feature type="mutagenesis site" description="Reduces interaction with MSH6. Reduces acetylation; when associated with R-845, R-871 and R-892." evidence="68">
    <original>K</original>
    <variation>R</variation>
    <location>
        <position position="847"/>
    </location>
</feature>
<feature type="mutagenesis site" description="Does not affect interaction with MSH6. Reduces acetylation; when associated with R-845, R-847 and R-892." evidence="68">
    <original>K</original>
    <variation>R</variation>
    <location>
        <position position="871"/>
    </location>
</feature>
<feature type="mutagenesis site" description="Does not affect interaction with MSH6. Reduces acetylation; when associated with R-845, R-847 and R-871." evidence="68">
    <original>K</original>
    <variation>R</variation>
    <location>
        <position position="892"/>
    </location>
</feature>
<feature type="sequence conflict" description="In Ref. 7; BX649122." evidence="100" ref="7">
    <original>F</original>
    <variation>I</variation>
    <location>
        <position position="784"/>
    </location>
</feature>
<feature type="sequence conflict" description="In Ref. 7; BX649122." evidence="100" ref="7">
    <original>F</original>
    <variation>S</variation>
    <location>
        <position position="836"/>
    </location>
</feature>
<feature type="helix" evidence="110">
    <location>
        <begin position="14"/>
        <end position="24"/>
    </location>
</feature>
<feature type="strand" evidence="110">
    <location>
        <begin position="33"/>
        <end position="38"/>
    </location>
</feature>
<feature type="strand" evidence="110">
    <location>
        <begin position="40"/>
        <end position="46"/>
    </location>
</feature>
<feature type="helix" evidence="110">
    <location>
        <begin position="48"/>
        <end position="56"/>
    </location>
</feature>
<feature type="strand" evidence="110">
    <location>
        <begin position="59"/>
        <end position="61"/>
    </location>
</feature>
<feature type="strand" evidence="110">
    <location>
        <begin position="65"/>
        <end position="71"/>
    </location>
</feature>
<feature type="strand" evidence="110">
    <location>
        <begin position="75"/>
        <end position="81"/>
    </location>
</feature>
<feature type="helix" evidence="110">
    <location>
        <begin position="82"/>
        <end position="94"/>
    </location>
</feature>
<feature type="strand" evidence="110">
    <location>
        <begin position="99"/>
        <end position="105"/>
    </location>
</feature>
<feature type="strand" evidence="110">
    <location>
        <begin position="117"/>
        <end position="124"/>
    </location>
</feature>
<feature type="helix" evidence="107">
    <location>
        <begin position="129"/>
        <end position="131"/>
    </location>
</feature>
<feature type="helix" evidence="110">
    <location>
        <begin position="132"/>
        <end position="135"/>
    </location>
</feature>
<feature type="strand" evidence="111">
    <location>
        <begin position="137"/>
        <end position="139"/>
    </location>
</feature>
<feature type="strand" evidence="110">
    <location>
        <begin position="147"/>
        <end position="152"/>
    </location>
</feature>
<feature type="strand" evidence="110">
    <location>
        <begin position="155"/>
        <end position="158"/>
    </location>
</feature>
<feature type="strand" evidence="110">
    <location>
        <begin position="160"/>
        <end position="167"/>
    </location>
</feature>
<feature type="turn" evidence="110">
    <location>
        <begin position="168"/>
        <end position="171"/>
    </location>
</feature>
<feature type="strand" evidence="110">
    <location>
        <begin position="172"/>
        <end position="179"/>
    </location>
</feature>
<feature type="helix" evidence="110">
    <location>
        <begin position="185"/>
        <end position="194"/>
    </location>
</feature>
<feature type="strand" evidence="110">
    <location>
        <begin position="197"/>
        <end position="204"/>
    </location>
</feature>
<feature type="helix" evidence="110">
    <location>
        <begin position="208"/>
        <end position="220"/>
    </location>
</feature>
<feature type="strand" evidence="110">
    <location>
        <begin position="223"/>
        <end position="227"/>
    </location>
</feature>
<feature type="helix" evidence="110">
    <location>
        <begin position="229"/>
        <end position="232"/>
    </location>
</feature>
<feature type="strand" evidence="112">
    <location>
        <begin position="234"/>
        <end position="236"/>
    </location>
</feature>
<feature type="helix" evidence="110">
    <location>
        <begin position="237"/>
        <end position="244"/>
    </location>
</feature>
<feature type="strand" evidence="112">
    <location>
        <begin position="249"/>
        <end position="251"/>
    </location>
</feature>
<feature type="turn" evidence="108">
    <location>
        <begin position="252"/>
        <end position="254"/>
    </location>
</feature>
<feature type="helix" evidence="110">
    <location>
        <begin position="255"/>
        <end position="257"/>
    </location>
</feature>
<feature type="helix" evidence="110">
    <location>
        <begin position="259"/>
        <end position="262"/>
    </location>
</feature>
<feature type="helix" evidence="110">
    <location>
        <begin position="264"/>
        <end position="277"/>
    </location>
</feature>
<feature type="helix" evidence="110">
    <location>
        <begin position="279"/>
        <end position="281"/>
    </location>
</feature>
<feature type="helix" evidence="110">
    <location>
        <begin position="283"/>
        <end position="285"/>
    </location>
</feature>
<feature type="turn" evidence="117">
    <location>
        <begin position="286"/>
        <end position="288"/>
    </location>
</feature>
<feature type="strand" evidence="110">
    <location>
        <begin position="289"/>
        <end position="293"/>
    </location>
</feature>
<feature type="helix" evidence="110">
    <location>
        <begin position="296"/>
        <end position="298"/>
    </location>
</feature>
<feature type="helix" evidence="110">
    <location>
        <begin position="304"/>
        <end position="309"/>
    </location>
</feature>
<feature type="strand" evidence="113">
    <location>
        <begin position="321"/>
        <end position="323"/>
    </location>
</feature>
<feature type="helix" evidence="110">
    <location>
        <begin position="326"/>
        <end position="330"/>
    </location>
</feature>
<feature type="helix" evidence="110">
    <location>
        <begin position="336"/>
        <end position="347"/>
    </location>
</feature>
<feature type="helix" evidence="110">
    <location>
        <begin position="353"/>
        <end position="367"/>
    </location>
</feature>
<feature type="helix" evidence="110">
    <location>
        <begin position="370"/>
        <end position="377"/>
    </location>
</feature>
<feature type="turn" evidence="110">
    <location>
        <begin position="378"/>
        <end position="380"/>
    </location>
</feature>
<feature type="helix" evidence="110">
    <location>
        <begin position="381"/>
        <end position="383"/>
    </location>
</feature>
<feature type="helix" evidence="110">
    <location>
        <begin position="387"/>
        <end position="395"/>
    </location>
</feature>
<feature type="helix" evidence="110">
    <location>
        <begin position="401"/>
        <end position="411"/>
    </location>
</feature>
<feature type="helix" evidence="110">
    <location>
        <begin position="414"/>
        <end position="423"/>
    </location>
</feature>
<feature type="strand" evidence="109">
    <location>
        <begin position="424"/>
        <end position="426"/>
    </location>
</feature>
<feature type="strand" evidence="110">
    <location>
        <begin position="427"/>
        <end position="429"/>
    </location>
</feature>
<feature type="helix" evidence="110">
    <location>
        <begin position="432"/>
        <end position="435"/>
    </location>
</feature>
<feature type="helix" evidence="110">
    <location>
        <begin position="437"/>
        <end position="455"/>
    </location>
</feature>
<feature type="helix" evidence="110">
    <location>
        <begin position="462"/>
        <end position="464"/>
    </location>
</feature>
<feature type="turn" evidence="107">
    <location>
        <begin position="472"/>
        <end position="474"/>
    </location>
</feature>
<feature type="helix" evidence="110">
    <location>
        <begin position="476"/>
        <end position="502"/>
    </location>
</feature>
<feature type="turn" evidence="110">
    <location>
        <begin position="507"/>
        <end position="509"/>
    </location>
</feature>
<feature type="strand" evidence="110">
    <location>
        <begin position="512"/>
        <end position="515"/>
    </location>
</feature>
<feature type="turn" evidence="107">
    <location>
        <begin position="517"/>
        <end position="519"/>
    </location>
</feature>
<feature type="strand" evidence="110">
    <location>
        <begin position="521"/>
        <end position="525"/>
    </location>
</feature>
<feature type="helix" evidence="110">
    <location>
        <begin position="527"/>
        <end position="530"/>
    </location>
</feature>
<feature type="turn" evidence="110">
    <location>
        <begin position="531"/>
        <end position="535"/>
    </location>
</feature>
<feature type="strand" evidence="114">
    <location>
        <begin position="536"/>
        <end position="538"/>
    </location>
</feature>
<feature type="strand" evidence="110">
    <location>
        <begin position="540"/>
        <end position="544"/>
    </location>
</feature>
<feature type="strand" evidence="115">
    <location>
        <begin position="546"/>
        <end position="548"/>
    </location>
</feature>
<feature type="strand" evidence="110">
    <location>
        <begin position="549"/>
        <end position="552"/>
    </location>
</feature>
<feature type="helix" evidence="110">
    <location>
        <begin position="556"/>
        <end position="563"/>
    </location>
</feature>
<feature type="turn" evidence="110">
    <location>
        <begin position="564"/>
        <end position="567"/>
    </location>
</feature>
<feature type="helix" evidence="110">
    <location>
        <begin position="568"/>
        <end position="585"/>
    </location>
</feature>
<feature type="helix" evidence="110">
    <location>
        <begin position="586"/>
        <end position="588"/>
    </location>
</feature>
<feature type="helix" evidence="110">
    <location>
        <begin position="589"/>
        <end position="613"/>
    </location>
</feature>
<feature type="strand" evidence="110">
    <location>
        <begin position="615"/>
        <end position="617"/>
    </location>
</feature>
<feature type="strand" evidence="110">
    <location>
        <begin position="623"/>
        <end position="625"/>
    </location>
</feature>
<feature type="strand" evidence="110">
    <location>
        <begin position="631"/>
        <end position="637"/>
    </location>
</feature>
<feature type="turn" evidence="110">
    <location>
        <begin position="640"/>
        <end position="644"/>
    </location>
</feature>
<feature type="strand" evidence="116">
    <location>
        <begin position="645"/>
        <end position="647"/>
    </location>
</feature>
<feature type="strand" evidence="110">
    <location>
        <begin position="653"/>
        <end position="658"/>
    </location>
</feature>
<feature type="turn" evidence="110">
    <location>
        <begin position="659"/>
        <end position="661"/>
    </location>
</feature>
<feature type="strand" evidence="110">
    <location>
        <begin position="664"/>
        <end position="668"/>
    </location>
</feature>
<feature type="strand" evidence="114">
    <location>
        <begin position="671"/>
        <end position="674"/>
    </location>
</feature>
<feature type="helix" evidence="110">
    <location>
        <begin position="675"/>
        <end position="691"/>
    </location>
</feature>
<feature type="strand" evidence="110">
    <location>
        <begin position="695"/>
        <end position="703"/>
    </location>
</feature>
<feature type="strand" evidence="110">
    <location>
        <begin position="706"/>
        <end position="711"/>
    </location>
</feature>
<feature type="turn" evidence="115">
    <location>
        <begin position="718"/>
        <end position="721"/>
    </location>
</feature>
<feature type="helix" evidence="110">
    <location>
        <begin position="724"/>
        <end position="738"/>
    </location>
</feature>
<feature type="strand" evidence="110">
    <location>
        <begin position="744"/>
        <end position="749"/>
    </location>
</feature>
<feature type="turn" evidence="117">
    <location>
        <begin position="750"/>
        <end position="753"/>
    </location>
</feature>
<feature type="helix" evidence="110">
    <location>
        <begin position="756"/>
        <end position="772"/>
    </location>
</feature>
<feature type="strand" evidence="110">
    <location>
        <begin position="777"/>
        <end position="783"/>
    </location>
</feature>
<feature type="helix" evidence="110">
    <location>
        <begin position="785"/>
        <end position="792"/>
    </location>
</feature>
<feature type="strand" evidence="110">
    <location>
        <begin position="797"/>
        <end position="807"/>
    </location>
</feature>
<feature type="strand" evidence="110">
    <location>
        <begin position="810"/>
        <end position="820"/>
    </location>
</feature>
<feature type="helix" evidence="110">
    <location>
        <begin position="827"/>
        <end position="833"/>
    </location>
</feature>
<feature type="helix" evidence="110">
    <location>
        <begin position="838"/>
        <end position="850"/>
    </location>
</feature>
<feature type="turn" evidence="110">
    <location>
        <begin position="851"/>
        <end position="855"/>
    </location>
</feature>
<feature type="helix" evidence="110">
    <location>
        <begin position="875"/>
        <end position="892"/>
    </location>
</feature>
<feature type="helix" evidence="110">
    <location>
        <begin position="896"/>
        <end position="898"/>
    </location>
</feature>
<feature type="helix" evidence="110">
    <location>
        <begin position="901"/>
        <end position="917"/>
    </location>
</feature>
<feature type="helix" evidence="110">
    <location>
        <begin position="921"/>
        <end position="928"/>
    </location>
</feature>
<feature type="turn" evidence="111">
    <location>
        <begin position="931"/>
        <end position="933"/>
    </location>
</feature>
<evidence type="ECO:0000250" key="1">
    <source>
        <dbReference type="UniProtKB" id="P43247"/>
    </source>
</evidence>
<evidence type="ECO:0000255" key="2"/>
<evidence type="ECO:0000269" key="3">
    <source>
    </source>
</evidence>
<evidence type="ECO:0000269" key="4">
    <source>
    </source>
</evidence>
<evidence type="ECO:0000269" key="5">
    <source>
    </source>
</evidence>
<evidence type="ECO:0000269" key="6">
    <source>
    </source>
</evidence>
<evidence type="ECO:0000269" key="7">
    <source>
    </source>
</evidence>
<evidence type="ECO:0000269" key="8">
    <source>
    </source>
</evidence>
<evidence type="ECO:0000269" key="9">
    <source>
    </source>
</evidence>
<evidence type="ECO:0000269" key="10">
    <source>
    </source>
</evidence>
<evidence type="ECO:0000269" key="11">
    <source>
    </source>
</evidence>
<evidence type="ECO:0000269" key="12">
    <source>
    </source>
</evidence>
<evidence type="ECO:0000269" key="13">
    <source>
    </source>
</evidence>
<evidence type="ECO:0000269" key="14">
    <source>
    </source>
</evidence>
<evidence type="ECO:0000269" key="15">
    <source>
    </source>
</evidence>
<evidence type="ECO:0000269" key="16">
    <source>
    </source>
</evidence>
<evidence type="ECO:0000269" key="17">
    <source>
    </source>
</evidence>
<evidence type="ECO:0000269" key="18">
    <source>
    </source>
</evidence>
<evidence type="ECO:0000269" key="19">
    <source>
    </source>
</evidence>
<evidence type="ECO:0000269" key="20">
    <source>
    </source>
</evidence>
<evidence type="ECO:0000269" key="21">
    <source>
    </source>
</evidence>
<evidence type="ECO:0000269" key="22">
    <source>
    </source>
</evidence>
<evidence type="ECO:0000269" key="23">
    <source>
    </source>
</evidence>
<evidence type="ECO:0000269" key="24">
    <source>
    </source>
</evidence>
<evidence type="ECO:0000269" key="25">
    <source>
    </source>
</evidence>
<evidence type="ECO:0000269" key="26">
    <source>
    </source>
</evidence>
<evidence type="ECO:0000269" key="27">
    <source>
    </source>
</evidence>
<evidence type="ECO:0000269" key="28">
    <source>
    </source>
</evidence>
<evidence type="ECO:0000269" key="29">
    <source>
    </source>
</evidence>
<evidence type="ECO:0000269" key="30">
    <source>
    </source>
</evidence>
<evidence type="ECO:0000269" key="31">
    <source>
    </source>
</evidence>
<evidence type="ECO:0000269" key="32">
    <source>
    </source>
</evidence>
<evidence type="ECO:0000269" key="33">
    <source>
    </source>
</evidence>
<evidence type="ECO:0000269" key="34">
    <source>
    </source>
</evidence>
<evidence type="ECO:0000269" key="35">
    <source>
    </source>
</evidence>
<evidence type="ECO:0000269" key="36">
    <source>
    </source>
</evidence>
<evidence type="ECO:0000269" key="37">
    <source>
    </source>
</evidence>
<evidence type="ECO:0000269" key="38">
    <source>
    </source>
</evidence>
<evidence type="ECO:0000269" key="39">
    <source>
    </source>
</evidence>
<evidence type="ECO:0000269" key="40">
    <source>
    </source>
</evidence>
<evidence type="ECO:0000269" key="41">
    <source>
    </source>
</evidence>
<evidence type="ECO:0000269" key="42">
    <source>
    </source>
</evidence>
<evidence type="ECO:0000269" key="43">
    <source>
    </source>
</evidence>
<evidence type="ECO:0000269" key="44">
    <source>
    </source>
</evidence>
<evidence type="ECO:0000269" key="45">
    <source>
    </source>
</evidence>
<evidence type="ECO:0000269" key="46">
    <source>
    </source>
</evidence>
<evidence type="ECO:0000269" key="47">
    <source>
    </source>
</evidence>
<evidence type="ECO:0000269" key="48">
    <source>
    </source>
</evidence>
<evidence type="ECO:0000269" key="49">
    <source>
    </source>
</evidence>
<evidence type="ECO:0000269" key="50">
    <source>
    </source>
</evidence>
<evidence type="ECO:0000269" key="51">
    <source>
    </source>
</evidence>
<evidence type="ECO:0000269" key="52">
    <source>
    </source>
</evidence>
<evidence type="ECO:0000269" key="53">
    <source>
    </source>
</evidence>
<evidence type="ECO:0000269" key="54">
    <source>
    </source>
</evidence>
<evidence type="ECO:0000269" key="55">
    <source>
    </source>
</evidence>
<evidence type="ECO:0000269" key="56">
    <source>
    </source>
</evidence>
<evidence type="ECO:0000269" key="57">
    <source>
    </source>
</evidence>
<evidence type="ECO:0000269" key="58">
    <source>
    </source>
</evidence>
<evidence type="ECO:0000269" key="59">
    <source>
    </source>
</evidence>
<evidence type="ECO:0000269" key="60">
    <source>
    </source>
</evidence>
<evidence type="ECO:0000269" key="61">
    <source>
    </source>
</evidence>
<evidence type="ECO:0000269" key="62">
    <source>
    </source>
</evidence>
<evidence type="ECO:0000269" key="63">
    <source>
    </source>
</evidence>
<evidence type="ECO:0000269" key="64">
    <source>
    </source>
</evidence>
<evidence type="ECO:0000269" key="65">
    <source>
    </source>
</evidence>
<evidence type="ECO:0000269" key="66">
    <source>
    </source>
</evidence>
<evidence type="ECO:0000269" key="67">
    <source>
    </source>
</evidence>
<evidence type="ECO:0000269" key="68">
    <source>
    </source>
</evidence>
<evidence type="ECO:0000269" key="69">
    <source>
    </source>
</evidence>
<evidence type="ECO:0000269" key="70">
    <source>
    </source>
</evidence>
<evidence type="ECO:0000269" key="71">
    <source>
    </source>
</evidence>
<evidence type="ECO:0000269" key="72">
    <source>
    </source>
</evidence>
<evidence type="ECO:0000269" key="73">
    <source>
    </source>
</evidence>
<evidence type="ECO:0000269" key="74">
    <source>
    </source>
</evidence>
<evidence type="ECO:0000269" key="75">
    <source>
    </source>
</evidence>
<evidence type="ECO:0000269" key="76">
    <source>
    </source>
</evidence>
<evidence type="ECO:0000269" key="77">
    <source>
    </source>
</evidence>
<evidence type="ECO:0000269" key="78">
    <source>
    </source>
</evidence>
<evidence type="ECO:0000269" key="79">
    <source>
    </source>
</evidence>
<evidence type="ECO:0000269" key="80">
    <source>
    </source>
</evidence>
<evidence type="ECO:0000269" key="81">
    <source>
    </source>
</evidence>
<evidence type="ECO:0000269" key="82">
    <source>
    </source>
</evidence>
<evidence type="ECO:0000269" key="83">
    <source>
    </source>
</evidence>
<evidence type="ECO:0000269" key="84">
    <source>
    </source>
</evidence>
<evidence type="ECO:0000269" key="85">
    <source>
    </source>
</evidence>
<evidence type="ECO:0000269" key="86">
    <source>
    </source>
</evidence>
<evidence type="ECO:0000269" key="87">
    <source>
    </source>
</evidence>
<evidence type="ECO:0000269" key="88">
    <source>
    </source>
</evidence>
<evidence type="ECO:0000269" key="89">
    <source>
    </source>
</evidence>
<evidence type="ECO:0000269" key="90">
    <source>
    </source>
</evidence>
<evidence type="ECO:0000269" key="91">
    <source>
    </source>
</evidence>
<evidence type="ECO:0000269" key="92">
    <source>
    </source>
</evidence>
<evidence type="ECO:0000269" key="93">
    <source>
    </source>
</evidence>
<evidence type="ECO:0000269" key="94">
    <source>
    </source>
</evidence>
<evidence type="ECO:0000269" key="95">
    <source>
    </source>
</evidence>
<evidence type="ECO:0000269" key="96">
    <source>
    </source>
</evidence>
<evidence type="ECO:0000269" key="97">
    <source ref="9"/>
</evidence>
<evidence type="ECO:0000303" key="98">
    <source>
    </source>
</evidence>
<evidence type="ECO:0000303" key="99">
    <source>
    </source>
</evidence>
<evidence type="ECO:0000305" key="100"/>
<evidence type="ECO:0000305" key="101">
    <source>
    </source>
</evidence>
<evidence type="ECO:0000305" key="102">
    <source>
    </source>
</evidence>
<evidence type="ECO:0007744" key="103">
    <source>
    </source>
</evidence>
<evidence type="ECO:0007744" key="104">
    <source>
    </source>
</evidence>
<evidence type="ECO:0007744" key="105">
    <source>
    </source>
</evidence>
<evidence type="ECO:0007744" key="106">
    <source>
    </source>
</evidence>
<evidence type="ECO:0007829" key="107">
    <source>
        <dbReference type="PDB" id="2O8B"/>
    </source>
</evidence>
<evidence type="ECO:0007829" key="108">
    <source>
        <dbReference type="PDB" id="2O8E"/>
    </source>
</evidence>
<evidence type="ECO:0007829" key="109">
    <source>
        <dbReference type="PDB" id="2O8F"/>
    </source>
</evidence>
<evidence type="ECO:0007829" key="110">
    <source>
        <dbReference type="PDB" id="3THX"/>
    </source>
</evidence>
<evidence type="ECO:0007829" key="111">
    <source>
        <dbReference type="PDB" id="8AG6"/>
    </source>
</evidence>
<evidence type="ECO:0007829" key="112">
    <source>
        <dbReference type="PDB" id="8OLX"/>
    </source>
</evidence>
<evidence type="ECO:0007829" key="113">
    <source>
        <dbReference type="PDB" id="8OMA"/>
    </source>
</evidence>
<evidence type="ECO:0007829" key="114">
    <source>
        <dbReference type="PDB" id="8OMO"/>
    </source>
</evidence>
<evidence type="ECO:0007829" key="115">
    <source>
        <dbReference type="PDB" id="8OMQ"/>
    </source>
</evidence>
<evidence type="ECO:0007829" key="116">
    <source>
        <dbReference type="PDB" id="8R7C"/>
    </source>
</evidence>
<evidence type="ECO:0007829" key="117">
    <source>
        <dbReference type="PDB" id="8R7E"/>
    </source>
</evidence>
<protein>
    <recommendedName>
        <fullName>DNA mismatch repair protein Msh2</fullName>
        <shortName>hMSH2</shortName>
    </recommendedName>
    <alternativeName>
        <fullName>MutS protein homolog 2</fullName>
    </alternativeName>
</protein>
<proteinExistence type="evidence at protein level"/>
<sequence length="934" mass="104743">MAVQPKETLQLESAAEVGFVRFFQGMPEKPTTTVRLFDRGDFYTAHGEDALLAAREVFKTQGVIKYMGPAGAKNLQSVVLSKMNFESFVKDLLLVRQYRVEVYKNRAGNKASKENDWYLAYKASPGNLSQFEDILFGNNDMSASIGVVGVKMSAVDGQRQVGVGYVDSIQRKLGLCEFPDNDQFSNLEALLIQIGPKECVLPGGETAGDMGKLRQIIQRGGILITERKKADFSTKDIYQDLNRLLKGKKGEQMNSAVLPEMENQVAVSSLSAVIKFLELLSDDSNFGQFELTTFDFSQYMKLDIAAVRALNLFQGSVEDTTGSQSLAALLNKCKTPQGQRLVNQWIKQPLMDKNRIEERLNLVEAFVEDAELRQTLQEDLLRRFPDLNRLAKKFQRQAANLQDCYRLYQGINQLPNVIQALEKHEGKHQKLLLAVFVTPLTDLRSDFSKFQEMIETTLDMDQVENHEFLVKPSFDPNLSELREIMNDLEKKMQSTLISAARDLGLDPGKQIKLDSSAQFGYYFRVTCKEEKVLRNNKNFSTVDIQKNGVKFTNSKLTSLNEEYTKNKTEYEEAQDAIVKEIVNISSGYVEPMQTLNDVLAQLDAVVSFAHVSNGAPVPYVRPAILEKGQGRIILKASRHACVEVQDEIAFIPNDVYFEKDKQMFHIITGPNMGGKSTYIRQTGVIVLMAQIGCFVPCESAEVSIVDCILARVGAGDSQLKGVSTFMAEMLETASILRSATKDSLIIIDELGRGTSTYDGFGLAWAISEYIATKIGAFCMFATHFHELTALANQIPTVNNLHVTALTTEETLTMLYQVKKGVCDQSFGIHVAELANFPKHVIECAKQKALELEEFQYIGESQGYDIMEPAAKKCYLEREQGEKIIQEFLSKVKQMPFTEMSEENITIKLKQLKAEVIAKNNSFVNEIISRIKVTT</sequence>
<name>MSH2_HUMAN</name>